<reference key="1">
    <citation type="journal article" date="1990" name="J. Biol. Chem.">
        <title>Molecular cloning of cDNA encoding human and rabbit forms of the Ca2+ release channel (ryanodine receptor) of skeletal muscle sarcoplasmic reticulum.</title>
        <authorList>
            <person name="Zorzato F."/>
            <person name="Fujii J."/>
            <person name="Otsu K."/>
            <person name="Phillips M.S."/>
            <person name="Green N.M."/>
            <person name="Lai F.A."/>
            <person name="Meissner G."/>
            <person name="Maclennan D.H."/>
        </authorList>
    </citation>
    <scope>NUCLEOTIDE SEQUENCE [MRNA] (ISOFORM 2)</scope>
    <scope>PARTIAL PROTEIN SEQUENCE</scope>
    <source>
        <tissue>Skeletal muscle</tissue>
    </source>
</reference>
<reference key="2">
    <citation type="journal article" date="1992" name="Genomics">
        <title>Polymorphisms and deduced amino acid substitutions in the coding sequence of the ryanodine receptor (RYR1) gene in individuals with malignant hyperthermia.</title>
        <authorList>
            <person name="Gillard E.F."/>
            <person name="Otsu K."/>
            <person name="Fujii J."/>
            <person name="Duff C.L."/>
            <person name="de Leon S."/>
            <person name="Khanna V.K."/>
            <person name="Britt B.A."/>
            <person name="Worton R.G."/>
            <person name="McLennan D.H."/>
        </authorList>
    </citation>
    <scope>SEQUENCE REVISION TO 2324; 2840 AND 3380</scope>
    <scope>INVOLVEMENT IN MHS1</scope>
    <scope>VARIANTS MHS1 ARG-248 AND CYS-471</scope>
    <scope>VARIANTS LEU-1787; CYS-2060 AND VAL-2550</scope>
    <source>
        <tissue>Muscle</tissue>
    </source>
</reference>
<reference key="3">
    <citation type="journal article" date="1993" name="Nat. Genet.">
        <title>A mutation in the human ryanodine receptor gene associated with central core disease.</title>
        <authorList>
            <person name="Zhang Y."/>
            <person name="Chen H.S."/>
            <person name="Khanna V.K."/>
            <person name="de Leon S."/>
            <person name="Phillips M.S."/>
            <person name="Schappert K.T."/>
            <person name="Britt B.A."/>
            <person name="Brownell A.K.W."/>
            <person name="McLennan D.H."/>
        </authorList>
    </citation>
    <scope>SEQUENCE REVISION TO 1365-1368</scope>
    <scope>VARIANT CMYO1A HIS-2435</scope>
    <scope>ALTERNATIVE SPLICING</scope>
    <source>
        <tissue>Muscle</tissue>
    </source>
</reference>
<reference key="4">
    <citation type="journal article" date="1996" name="Genomics">
        <title>The structural organization of the human skeletal muscle ryanodine receptor (RYR1) gene.</title>
        <authorList>
            <person name="Phillips M.S."/>
            <person name="Fujii J."/>
            <person name="Khanna V.K."/>
            <person name="de Leon S."/>
            <person name="Yokobata K."/>
            <person name="de Jong P.J."/>
            <person name="McLennan D.H."/>
        </authorList>
    </citation>
    <scope>NUCLEOTIDE SEQUENCE [GENOMIC DNA]</scope>
    <scope>ALTERNATIVE SPLICING</scope>
    <scope>VARIANTS ALA-1832 AND VAL-2550</scope>
</reference>
<reference key="5">
    <citation type="journal article" date="2004" name="Nature">
        <title>The DNA sequence and biology of human chromosome 19.</title>
        <authorList>
            <person name="Grimwood J."/>
            <person name="Gordon L.A."/>
            <person name="Olsen A.S."/>
            <person name="Terry A."/>
            <person name="Schmutz J."/>
            <person name="Lamerdin J.E."/>
            <person name="Hellsten U."/>
            <person name="Goodstein D."/>
            <person name="Couronne O."/>
            <person name="Tran-Gyamfi M."/>
            <person name="Aerts A."/>
            <person name="Altherr M."/>
            <person name="Ashworth L."/>
            <person name="Bajorek E."/>
            <person name="Black S."/>
            <person name="Branscomb E."/>
            <person name="Caenepeel S."/>
            <person name="Carrano A.V."/>
            <person name="Caoile C."/>
            <person name="Chan Y.M."/>
            <person name="Christensen M."/>
            <person name="Cleland C.A."/>
            <person name="Copeland A."/>
            <person name="Dalin E."/>
            <person name="Dehal P."/>
            <person name="Denys M."/>
            <person name="Detter J.C."/>
            <person name="Escobar J."/>
            <person name="Flowers D."/>
            <person name="Fotopulos D."/>
            <person name="Garcia C."/>
            <person name="Georgescu A.M."/>
            <person name="Glavina T."/>
            <person name="Gomez M."/>
            <person name="Gonzales E."/>
            <person name="Groza M."/>
            <person name="Hammon N."/>
            <person name="Hawkins T."/>
            <person name="Haydu L."/>
            <person name="Ho I."/>
            <person name="Huang W."/>
            <person name="Israni S."/>
            <person name="Jett J."/>
            <person name="Kadner K."/>
            <person name="Kimball H."/>
            <person name="Kobayashi A."/>
            <person name="Larionov V."/>
            <person name="Leem S.-H."/>
            <person name="Lopez F."/>
            <person name="Lou Y."/>
            <person name="Lowry S."/>
            <person name="Malfatti S."/>
            <person name="Martinez D."/>
            <person name="McCready P.M."/>
            <person name="Medina C."/>
            <person name="Morgan J."/>
            <person name="Nelson K."/>
            <person name="Nolan M."/>
            <person name="Ovcharenko I."/>
            <person name="Pitluck S."/>
            <person name="Pollard M."/>
            <person name="Popkie A.P."/>
            <person name="Predki P."/>
            <person name="Quan G."/>
            <person name="Ramirez L."/>
            <person name="Rash S."/>
            <person name="Retterer J."/>
            <person name="Rodriguez A."/>
            <person name="Rogers S."/>
            <person name="Salamov A."/>
            <person name="Salazar A."/>
            <person name="She X."/>
            <person name="Smith D."/>
            <person name="Slezak T."/>
            <person name="Solovyev V."/>
            <person name="Thayer N."/>
            <person name="Tice H."/>
            <person name="Tsai M."/>
            <person name="Ustaszewska A."/>
            <person name="Vo N."/>
            <person name="Wagner M."/>
            <person name="Wheeler J."/>
            <person name="Wu K."/>
            <person name="Xie G."/>
            <person name="Yang J."/>
            <person name="Dubchak I."/>
            <person name="Furey T.S."/>
            <person name="DeJong P."/>
            <person name="Dickson M."/>
            <person name="Gordon D."/>
            <person name="Eichler E.E."/>
            <person name="Pennacchio L.A."/>
            <person name="Richardson P."/>
            <person name="Stubbs L."/>
            <person name="Rokhsar D.S."/>
            <person name="Myers R.M."/>
            <person name="Rubin E.M."/>
            <person name="Lucas S.M."/>
        </authorList>
    </citation>
    <scope>NUCLEOTIDE SEQUENCE [LARGE SCALE GENOMIC DNA]</scope>
</reference>
<reference key="6">
    <citation type="journal article" date="1992" name="Genomics">
        <title>Refinement of diagnostic assays for a probable causal mutation for porcine and human malignant hyperthermia.</title>
        <authorList>
            <person name="Otsu K."/>
            <person name="Phillips M.S."/>
            <person name="Khanna V.K."/>
            <person name="de Leon S."/>
            <person name="McLennan D.H."/>
        </authorList>
    </citation>
    <scope>NUCLEOTIDE SEQUENCE [GENOMIC DNA] OF 598-722</scope>
    <source>
        <tissue>Skeletal muscle</tissue>
    </source>
</reference>
<reference key="7">
    <citation type="journal article" date="1991" name="Genomics">
        <title>A substitution of cysteine for arginine 614 in the ryanodine receptor is potentially causative of human malignant hyperthermia.</title>
        <authorList>
            <person name="Gillard E.F."/>
            <person name="Otsu K."/>
            <person name="Fujii J."/>
            <person name="Khanna V.K."/>
            <person name="de Leon S."/>
            <person name="Derdemezi J."/>
            <person name="Britt B.A."/>
            <person name="Duff C.L."/>
            <person name="Worton R.G."/>
            <person name="MacLennan D.H."/>
        </authorList>
    </citation>
    <scope>NUCLEOTIDE SEQUENCE [GENOMIC DNA] OF 603-641</scope>
    <scope>VARIANT MHS1 CYS-614</scope>
</reference>
<reference key="8">
    <citation type="journal article" date="1995" name="J. Neurol.">
        <title>Ryanodine receptor gene point mutation and malignant hyperthermia susceptibility.</title>
        <authorList>
            <person name="Moroni I."/>
            <person name="Gonano E.F."/>
            <person name="Comi G.P."/>
            <person name="Tegazzin V."/>
            <person name="Prelle A."/>
            <person name="Bordoni A."/>
            <person name="Bresolin N."/>
            <person name="Scarlato G."/>
        </authorList>
    </citation>
    <scope>NUCLEOTIDE SEQUENCE [GENOMIC DNA] OF 603-627</scope>
    <scope>VARIANT MHS1 CYS-614</scope>
</reference>
<reference key="9">
    <citation type="journal article" date="1995" name="FEBS Lett.">
        <title>Isolation and partial cloning of ryanodine-sensitive Ca2+ release channel protein isoforms from human myometrial smooth muscle.</title>
        <authorList>
            <person name="Lynn S."/>
            <person name="Morgan J.M."/>
            <person name="Lamb H.K."/>
            <person name="Meissner G."/>
            <person name="Gillespie J.I."/>
        </authorList>
    </citation>
    <scope>NUCLEOTIDE SEQUENCE [MRNA] OF 4696-4974</scope>
    <scope>SUBCELLULAR LOCATION</scope>
    <source>
        <tissue>Myometrium</tissue>
    </source>
</reference>
<reference key="10">
    <citation type="journal article" date="1998" name="Neuroscience">
        <title>Partial cloning and differential expression of ryanodine receptor/calcium-release channel genes in human tissues including the hippocampus and cerebellum.</title>
        <authorList>
            <person name="Martin C."/>
            <person name="Chapman K.E."/>
            <person name="Seckl J.R."/>
            <person name="Ashley R.H."/>
        </authorList>
    </citation>
    <scope>TISSUE SPECIFICITY</scope>
</reference>
<reference key="11">
    <citation type="journal article" date="2008" name="J. Biol. Chem.">
        <title>S100A1 and calmodulin compete for the same binding site on ryanodine receptor.</title>
        <authorList>
            <person name="Wright N.T."/>
            <person name="Prosser B.L."/>
            <person name="Varney K.M."/>
            <person name="Zimmer D.B."/>
            <person name="Schneider M.F."/>
            <person name="Weber D.J."/>
        </authorList>
    </citation>
    <scope>INTERACTION WITH CALM AND S100A1</scope>
    <scope>FUNCTION</scope>
    <scope>TRANSPORTER ACTIVITY</scope>
    <scope>ACTIVITY REGULATION</scope>
</reference>
<reference key="12">
    <citation type="journal article" date="2008" name="Neurology">
        <title>King-denborough syndrome caused by a novel mutation in the ryanodine receptor gene.</title>
        <authorList>
            <person name="D'Arcy C.E."/>
            <person name="Bjorksten A."/>
            <person name="Yiu E.M."/>
            <person name="Bankier A."/>
            <person name="Gillies R."/>
            <person name="McLean C.A."/>
            <person name="Shield L.K."/>
            <person name="Ryan M.M."/>
        </authorList>
    </citation>
    <scope>INVOLVEMENT IN KDS</scope>
    <scope>VARIANT KDS GLU-33</scope>
</reference>
<reference key="13">
    <citation type="journal article" date="2008" name="Proc. Natl. Acad. Sci. U.S.A.">
        <title>Remodeling of ryanodine receptor complex causes 'leaky' channels: a molecular mechanism for decreased exercise capacity.</title>
        <authorList>
            <person name="Bellinger A.M."/>
            <person name="Reiken S."/>
            <person name="Dura M."/>
            <person name="Murphy P.W."/>
            <person name="Deng S.X."/>
            <person name="Landry D.W."/>
            <person name="Nieman D."/>
            <person name="Lehnart S.E."/>
            <person name="Samaru M."/>
            <person name="LaCampagne A."/>
            <person name="Marks A.R."/>
        </authorList>
    </citation>
    <scope>FUNCTION</scope>
    <scope>TRANSPORTER ACTIVITY</scope>
    <scope>ACTIVITY REGULATION</scope>
    <scope>PHOSPHORYLATION AT SER-2843</scope>
    <scope>S-NITROSYLATION</scope>
    <scope>IDENTIFICATION IN A COMPLEX WITH PDE4D; PKA; FKBP1A AND PROTEIN PHOSPHATASE 1</scope>
</reference>
<reference key="14">
    <citation type="journal article" date="2008" name="Proteomics">
        <title>Large-scale phosphoproteome analysis of human liver tissue by enrichment and fractionation of phosphopeptides with strong anion exchange chromatography.</title>
        <authorList>
            <person name="Han G."/>
            <person name="Ye M."/>
            <person name="Zhou H."/>
            <person name="Jiang X."/>
            <person name="Feng S."/>
            <person name="Jiang X."/>
            <person name="Tian R."/>
            <person name="Wan D."/>
            <person name="Zou H."/>
            <person name="Gu J."/>
        </authorList>
    </citation>
    <scope>PHOSPHORYLATION [LARGE SCALE ANALYSIS] AT TYR-4864 AND SER-4867</scope>
    <scope>IDENTIFICATION BY MASS SPECTROMETRY [LARGE SCALE ANALYSIS]</scope>
    <source>
        <tissue>Liver</tissue>
    </source>
</reference>
<reference key="15">
    <citation type="journal article" date="2010" name="Cold Spring Harb. Perspect. Biol.">
        <title>Ryanodine receptors: structure, expression, molecular details, and function in calcium release.</title>
        <authorList>
            <person name="Lanner J.T."/>
            <person name="Georgiou D.K."/>
            <person name="Joshi A.D."/>
            <person name="Hamilton S.L."/>
        </authorList>
    </citation>
    <scope>REVIEW</scope>
</reference>
<reference key="16">
    <citation type="journal article" date="2011" name="Neuromuscul. Disord.">
        <title>King-Denborough syndrome with and without mutations in the skeletal muscle ryanodine receptor (RYR1) gene.</title>
        <authorList>
            <person name="Dowling J.J."/>
            <person name="Lillis S."/>
            <person name="Amburgey K."/>
            <person name="Zhou H."/>
            <person name="Al-Sarraj S."/>
            <person name="Buk S.J."/>
            <person name="Wraige E."/>
            <person name="Chow G."/>
            <person name="Abbs S."/>
            <person name="Leber S."/>
            <person name="Lachlan K."/>
            <person name="Baralle D."/>
            <person name="Taylor A."/>
            <person name="Sewry C."/>
            <person name="Muntoni F."/>
            <person name="Jungbluth H."/>
        </authorList>
    </citation>
    <scope>INVOLVEMENT IN KDS</scope>
    <scope>VARIANTS KDS ARG-2206; TRP-2452 AND PHE-2776</scope>
</reference>
<reference key="17">
    <citation type="journal article" date="2012" name="Acta Neuropathol.">
        <title>Samaritan myopathy, an ultimately benign congenital myopathy, is caused by a RYR1 mutation.</title>
        <authorList>
            <person name="Bohm J."/>
            <person name="Leshinsky-Silver E."/>
            <person name="Vassilopoulos S."/>
            <person name="Le Gras S."/>
            <person name="Lerman-Sagie T."/>
            <person name="Ginzberg M."/>
            <person name="Jost B."/>
            <person name="Lev D."/>
            <person name="Laporte J."/>
        </authorList>
    </citation>
    <scope>INVOLVEMENT IN SAMARITAN MYOPATHY</scope>
    <scope>VARIANT CYS-1088</scope>
</reference>
<reference key="18">
    <citation type="journal article" date="2017" name="A. A. Case Rep.">
        <title>Intraoperative Presentation of Malignant Hyperthermia (Confirmed by RYR1 Gene Mutation, c.7522C&gt;T; p.R2508C) Leads to Diagnosis of King-Denborough Syndrome in a Child With Hypotonia and Dysmorphic Features: A Case Report.</title>
        <authorList>
            <person name="Joseph M.R."/>
            <person name="Theroux M.C."/>
            <person name="Mooney J.J."/>
            <person name="Falitz S."/>
            <person name="Brandom B.W."/>
            <person name="Byler D.L."/>
        </authorList>
    </citation>
    <scope>INVOLVEMENT IN KDS</scope>
    <scope>VARIANT KDS CYS-2508</scope>
</reference>
<reference key="19">
    <citation type="journal article" date="1993" name="Nat. Genet.">
        <title>Mutations in the ryanodine receptor gene in central core disease and malignant hyperthermia.</title>
        <authorList>
            <person name="Quane K.A."/>
            <person name="Healy J.M.S."/>
            <person name="Keating K.E."/>
            <person name="Manning B.M."/>
            <person name="Couch F.J."/>
            <person name="Palmucci L.M."/>
            <person name="Doriguzzi C."/>
            <person name="Fagerlund T.H."/>
            <person name="Berg K."/>
            <person name="Ording H."/>
            <person name="Bendixen D."/>
            <person name="Mortier W."/>
            <person name="Linz U."/>
            <person name="Muller C.R."/>
            <person name="McCarthy T.V."/>
        </authorList>
    </citation>
    <scope>VARIANTS CMYO1A CYS-163 AND MET-403</scope>
    <scope>VARIANTS MHS1 CYS-163 AND MET-403</scope>
</reference>
<reference key="20">
    <citation type="journal article" date="1994" name="Genomics">
        <title>Mutation screening of the RYR1 gene in malignant hyperthermia: detection of a novel Tyr to Ser mutation in a pedigree with associated central cores.</title>
        <authorList>
            <person name="Quane K.A."/>
            <person name="Keating K.E."/>
            <person name="Healy J.M.S."/>
            <person name="Manning B.M."/>
            <person name="Krivosic-Horber R."/>
            <person name="Krivosic I."/>
            <person name="Monnier N."/>
            <person name="Lunardi J."/>
            <person name="McCarthy T.V."/>
        </authorList>
    </citation>
    <scope>VARIANT CMYO1A SER-522</scope>
</reference>
<reference key="21">
    <citation type="journal article" date="1994" name="Hum. Mol. Genet.">
        <title>Detection of a novel common mutation in the ryanodine receptor gene in malignant hyperthermia: implications for diagnosis and heterogeneity studies.</title>
        <authorList>
            <person name="Quane K.A."/>
            <person name="Keating K.E."/>
            <person name="Manning B.M."/>
            <person name="Healy J.M.S."/>
            <person name="Monsieurs K."/>
            <person name="Heffron J.J.A."/>
            <person name="Lehane M."/>
            <person name="Heytens L."/>
            <person name="Krivosic-Horber R."/>
            <person name="Adnet P."/>
            <person name="Ellis F.R."/>
            <person name="Monnier N."/>
            <person name="Lunardi J."/>
            <person name="McCarthy T.V."/>
        </authorList>
    </citation>
    <scope>VARIANT MHS1 ARG-341</scope>
</reference>
<reference key="22">
    <citation type="journal article" date="1994" name="Hum. Mol. Genet.">
        <title>Detection of a novel RYR1 mutation in four malignant hyperthermia pedigrees.</title>
        <authorList>
            <person name="Keating K.E."/>
            <person name="Quane K.A."/>
            <person name="Manning B.M."/>
            <person name="Lehane M."/>
            <person name="Hartung E."/>
            <person name="Censier K."/>
            <person name="Urwyler A."/>
            <person name="Klausnitzer M."/>
            <person name="Muller C.R."/>
            <person name="Heffron J.J.A."/>
            <person name="McCarthy T.V."/>
        </authorList>
    </citation>
    <scope>VARIANT MHS1 ARG-2434</scope>
</reference>
<reference key="23">
    <citation type="journal article" date="1994" name="Hum. Mol. Genet.">
        <title>The substitution of Arg for Gly2433 in the human skeletal muscle ryanodine receptor is associated with malignant hyperthermia.</title>
        <authorList>
            <person name="Phillips M.S."/>
            <person name="Khanna V.K."/>
            <person name="de Leon S."/>
            <person name="Frodis W."/>
            <person name="Britt B.A."/>
            <person name="McLennan D.H."/>
        </authorList>
    </citation>
    <scope>VARIANT MHS1 ARG-2434</scope>
</reference>
<reference key="24">
    <citation type="journal article" date="1997" name="Anesthesiology">
        <title>Identification of heterozygous and homozygous individuals with the novel RYR1 mutation Cys35Arg in a large kindred.</title>
        <authorList>
            <person name="Lynch P.J."/>
            <person name="Krivosic-Horber R."/>
            <person name="Reyford H."/>
            <person name="Monnier N."/>
            <person name="Quane K.A."/>
            <person name="Adnet P."/>
            <person name="Haudecoeur G."/>
            <person name="Krivosic I."/>
            <person name="McCarthy T.V."/>
            <person name="Lunardi J."/>
        </authorList>
    </citation>
    <scope>VARIANT MHS1 ARG-35</scope>
</reference>
<reference key="25">
    <citation type="journal article" date="1997" name="Br. J. Anaesth.">
        <title>Detection of a novel mutation at amino acid position 614 in the ryanodine receptor in malignant hyperthermia.</title>
        <authorList>
            <person name="Quane K.A."/>
            <person name="Ording H."/>
            <person name="Keating K.E."/>
            <person name="Manning B.M."/>
            <person name="Heine R."/>
            <person name="Bendixen D."/>
            <person name="Berg K."/>
            <person name="Krivosic-Horber R."/>
            <person name="Lehmann-Horn F."/>
            <person name="Fagerlund T.H."/>
            <person name="McCarthy T.V."/>
        </authorList>
    </citation>
    <scope>VARIANT MHS1 LEU-614</scope>
</reference>
<reference key="26">
    <citation type="journal article" date="1997" name="J. Med. Genet.">
        <title>Detection of a novel mutation in the ryanodine receptor gene in an Irish malignant hyperthermia pedigree: correlation of the IVCT response with the affected and unaffected haplotypes.</title>
        <authorList>
            <person name="Keating K.E."/>
            <person name="Giblin L."/>
            <person name="Lynch P.J."/>
            <person name="Quane K.A."/>
            <person name="Lehane M."/>
            <person name="Heffron J.J.A."/>
            <person name="McCarthy T.V."/>
        </authorList>
    </citation>
    <scope>VARIANT MHS1 TRP-552</scope>
</reference>
<reference key="27">
    <citation type="journal article" date="1998" name="Am. J. Hum. Genet.">
        <title>Identification of novel mutations in the ryanodine-receptor gene (RYR1) in malignant hyperthermia: genotype-phenotype correlation.</title>
        <authorList>
            <person name="Manning B.M."/>
            <person name="Quane K.A."/>
            <person name="Ording H."/>
            <person name="Urwyler A."/>
            <person name="Tegazzin V."/>
            <person name="Lehane M."/>
            <person name="O'Halloran J."/>
            <person name="Hartung E."/>
            <person name="Giblin L.M."/>
            <person name="Lynch P.J."/>
            <person name="Vaughan P."/>
            <person name="Censier K."/>
            <person name="Bendixen D."/>
            <person name="Comi G.P."/>
            <person name="Heytens L."/>
            <person name="Monsieurs K."/>
            <person name="Fagerlund T.H."/>
            <person name="Wolz W."/>
            <person name="Heffron J.J.A."/>
            <person name="Mueller C.R."/>
            <person name="McCarthy T.V."/>
        </authorList>
    </citation>
    <scope>VARIANTS MHS1 CYS-2163; MET-2168 AND MET-2206</scope>
    <scope>VARIANT CMYO1A HIS-2163</scope>
</reference>
<reference key="28">
    <citation type="journal article" date="1998" name="Hum. Mutat.">
        <title>Novel mutations at a CpG dinucleotide in the ryanodine receptor in malignant hyperthermia.</title>
        <authorList>
            <person name="Manning B.M."/>
            <person name="Quane K.A."/>
            <person name="Lynch P.J."/>
            <person name="Urwyler A."/>
            <person name="Tegazzin V."/>
            <person name="Krivosic-Horber R."/>
            <person name="Censier K."/>
            <person name="Comi G.P."/>
            <person name="Adnet P."/>
            <person name="Wolz W."/>
            <person name="Lunardi J."/>
            <person name="Muller C.R."/>
            <person name="McCarthy T.V."/>
        </authorList>
    </citation>
    <scope>VARIANTS MHS1 CYS-2458 AND HIS-2458</scope>
</reference>
<reference key="29">
    <citation type="journal article" date="1999" name="Hum. Mol. Genet.">
        <title>Screening of the ryanodine receptor gene in 105 malignant hyperthermia families: novel mutations and concordance with the in vitro contracture test.</title>
        <authorList>
            <person name="Brandt A."/>
            <person name="Schleithoff L."/>
            <person name="Jurkat-Rott K."/>
            <person name="Klingler W."/>
            <person name="Baur C."/>
            <person name="Lehmann-Horn F."/>
        </authorList>
    </citation>
    <scope>VARIANTS MHS1 HIS-533 AND ARG-2206</scope>
</reference>
<reference key="30">
    <citation type="journal article" date="1999" name="J. Med. Genet.">
        <title>Mutation screening of the RYR1 gene and identification of two novel mutations in Italian malignant hyperthermia families.</title>
        <authorList>
            <person name="Barone V."/>
            <person name="Massa O."/>
            <person name="Intravaia E."/>
            <person name="Bracco A."/>
            <person name="Di Martino A."/>
            <person name="Tegazzin V."/>
            <person name="Cozzolino S."/>
            <person name="Sorrentino V."/>
        </authorList>
    </citation>
    <scope>VARIANTS MHS1 LEU-2435 AND HIS-2454</scope>
</reference>
<reference key="31">
    <citation type="journal article" date="1999" name="Proc. Natl. Acad. Sci. U.S.A.">
        <title>A mutation in the transmembrane/luminal domain of the ryanodine receptor is associated with abnormal Ca(2+) release channel function and severe central core disease.</title>
        <authorList>
            <person name="Lynch P.J."/>
            <person name="Tong J."/>
            <person name="Lehane M."/>
            <person name="Mallet A."/>
            <person name="Giblin L."/>
            <person name="Heffron J.J.A."/>
            <person name="Vaughan P."/>
            <person name="Zafra G."/>
            <person name="MacLennan D.H."/>
            <person name="McCarthy T.V."/>
        </authorList>
    </citation>
    <scope>VARIANT CMYO1A THR-4898</scope>
    <scope>CHARACTERIZATION OF VARIANT CMYO1A THR-4898</scope>
</reference>
<reference key="32">
    <citation type="journal article" date="2000" name="Br. J. Anaesth.">
        <title>Malignant hyperthermia in infancy and identification of novel RYR1 mutation.</title>
        <authorList>
            <person name="Chamley D."/>
            <person name="Pollock N.A."/>
            <person name="Stowell K.M."/>
            <person name="Brown R.L."/>
        </authorList>
    </citation>
    <scope>VARIANTS MHS1 TRP-2452 AND HIS-2454</scope>
</reference>
<reference key="33">
    <citation type="journal article" date="2000" name="Hum. Mol. Genet.">
        <title>A novel ryanodine receptor mutation and genotype-phenotype correlation in a large malignant hyperthermia New Zealand Maori pedigree.</title>
        <authorList>
            <person name="Brown R.L."/>
            <person name="Pollock A.N."/>
            <person name="Couchman K.G."/>
            <person name="Hodges M."/>
            <person name="Hutchinson D.O."/>
            <person name="Waaka R."/>
            <person name="Lynch P."/>
            <person name="McCarthy T.V."/>
            <person name="Stowell K.M."/>
        </authorList>
    </citation>
    <scope>VARIANT MHS1 ILE-4826</scope>
</reference>
<reference key="34">
    <citation type="journal article" date="2000" name="Hum. Mutat.">
        <title>Novel mutation in the RYR1 gene (R2454C) in a patient with malignant hyperthermia.</title>
        <authorList>
            <person name="Gencik M."/>
            <person name="Gencik A."/>
            <person name="Mortier W."/>
            <person name="Epplen J.T."/>
        </authorList>
    </citation>
    <scope>VARIANT MHS1 CYS-2454</scope>
</reference>
<reference key="35">
    <citation type="journal article" date="2000" name="Neurology">
        <title>A novel ryanodine receptor gene mutation causing both cores and rods in congenital myopathy.</title>
        <authorList>
            <person name="Scacheri P.C."/>
            <person name="Hoffman E.P."/>
            <person name="Fratkin J.D."/>
            <person name="Semino-Mora C."/>
            <person name="Senchak A."/>
            <person name="Davis M.R."/>
            <person name="Laing N.G."/>
            <person name="Vedanarayanan V."/>
            <person name="Subramony S.H."/>
        </authorList>
    </citation>
    <scope>VARIANT CMYO1A ALA-4637</scope>
</reference>
<reference key="36">
    <citation type="journal article" date="2001" name="Am. J. Hum. Genet.">
        <title>Single-amino-acid deletion in the RYR1 gene, associated with malignant hyperthermia susceptibility and unusual contraction phenotype.</title>
        <authorList>
            <person name="Sambuughin N."/>
            <person name="McWilliams S."/>
            <person name="de Bantel A."/>
            <person name="Sivakumar K."/>
            <person name="Nelson T.E."/>
        </authorList>
    </citation>
    <scope>VARIANT MHS1 GLU-2347 DEL</scope>
</reference>
<reference key="37">
    <citation type="journal article" date="2001" name="Anesthesiology">
        <title>North American malignant hyperthermia population: screening of the ryanodine receptor gene and identification of novel mutations.</title>
        <authorList>
            <person name="Sambuughin N."/>
            <person name="Sei Y."/>
            <person name="Gallagher K.L."/>
            <person name="Wyre H.W."/>
            <person name="Madsen D."/>
            <person name="Nelson T.E."/>
            <person name="Fletcher J.E."/>
            <person name="Rosenberg H."/>
            <person name="Muldoon S.M."/>
        </authorList>
    </citation>
    <scope>VARIANTS MHS1 CYS-163; ARG-248; CYS-614; MET-2168; MET-2206; ILE-2214; THR-2367; ASN-2431; ARG-2434 AND HIS-2454</scope>
</reference>
<reference key="38">
    <citation type="journal article" date="2001" name="Hum. Mol. Genet.">
        <title>Familial and sporadic forms of central core disease are associated with mutations in the C-terminal domain of the skeletal muscle ryanodine receptor.</title>
        <authorList>
            <person name="Monnier N."/>
            <person name="Romero N.B."/>
            <person name="Lerale J."/>
            <person name="Landrieu P."/>
            <person name="Nivoche Y."/>
            <person name="Fardeau M."/>
            <person name="Lunardi J."/>
        </authorList>
    </citation>
    <scope>VARIANTS CMYO1A MET-2168; 4214-ARG--PHE-4216 DEL; 4647-LEU-SER-4648 DEL; PRO-4793; CYS-4796; CYS-4825; PHE-4860 DEL; HIS-4861; TRP-4893; THR-4898; GLU-4899 AND GLY-4914</scope>
</reference>
<reference key="39">
    <citation type="journal article" date="2001" name="Hum. Mol. Genet.">
        <title>Identification of four novel mutations in the C-terminal membrane spanning domain of the ryanodine receptor 1: association with central core disease and alteration of calcium homeostasis.</title>
        <authorList>
            <person name="Tilgen N."/>
            <person name="Zorzato F."/>
            <person name="Halliger-Keller B."/>
            <person name="Muntoni F."/>
            <person name="Sewry C."/>
            <person name="Palmucci L.M."/>
            <person name="Schneider C."/>
            <person name="Hauser E."/>
            <person name="Lehmann-Horn F."/>
            <person name="Mueller C.R."/>
            <person name="Treves S."/>
        </authorList>
    </citation>
    <scope>VARIANTS CMYO1A HIS-4861; ARG-4891; THR-4898; ARG-4899 AND VAL-4906</scope>
    <scope>CHARACTERIZATION OF VARIANTS CMYO1A MET-2168; HIS-4861; TRP-4893; THR-4898 AND ARG-4899</scope>
    <scope>FUNCTION</scope>
    <scope>TRANSPORTER ACTIVITY</scope>
</reference>
<reference key="40">
    <citation type="journal article" date="2001" name="Hum. Mutat.">
        <title>Identification of a novel mutation in the ryanodine receptor gene (RYR1) in patients with malignant hyperthermia.</title>
        <authorList>
            <person name="Rueffert H."/>
            <person name="Kraus H."/>
            <person name="Olthoff D."/>
            <person name="Deutrich C."/>
            <person name="Froster U.G."/>
        </authorList>
    </citation>
    <scope>VARIANT MHS1 GLU-2129</scope>
</reference>
<reference key="41">
    <citation type="journal article" date="2001" name="Neuromuscul. Disord.">
        <title>Identification and functional characterization of a novel ryanodine receptor mutation causing malignant hyperthermia in North American and South American families.</title>
        <authorList>
            <person name="Sambuughin N."/>
            <person name="Nelson T.E."/>
            <person name="Jankovic J."/>
            <person name="Xin C."/>
            <person name="Meissner G."/>
            <person name="Mullakandov M."/>
            <person name="Ji J."/>
            <person name="Rosenberg H."/>
            <person name="Sivakumar K."/>
            <person name="Goldfarb L.G."/>
        </authorList>
    </citation>
    <scope>VARIANT MHS1 THR-2350</scope>
    <scope>CHARACTERIZATION OF VARIANT MHS1 THR-2350</scope>
</reference>
<reference key="42">
    <citation type="journal article" date="2002" name="Acta Anaesthesiol. Scand.">
        <title>Mutation screening in the ryanodine receptor 1 gene (RYR1) in patients susceptible to malignant hyperthermia who show definite IVCT results: identification of three novel mutations.</title>
        <authorList>
            <person name="Rueffert H."/>
            <person name="Olthoff D."/>
            <person name="Deutrich C."/>
            <person name="Meinecke C.D."/>
            <person name="Froster U.G."/>
        </authorList>
    </citation>
    <scope>VARIANTS MHS1 CYS-163; ASN-166; ARG-341; HIS-401; CYS-614; GLU-2129; MET-2168; MET-2206; THR-2428; ARG-2434; HIS-2435; TRP-2452 AND HIS-2454</scope>
</reference>
<reference key="43">
    <citation type="journal article" date="2002" name="Anesthesiology">
        <title>Presence of two different genetic traits in malignant hyperthermia families: implication for genetic analysis, diagnosis, and incidence of malignant hyperthermia susceptibility.</title>
        <authorList>
            <person name="Monnier N."/>
            <person name="Krivosic-Horber R."/>
            <person name="Payen J.-F."/>
            <person name="Kozak-Ribbens G."/>
            <person name="Nivoche Y."/>
            <person name="Adnet P."/>
            <person name="Reyford H."/>
            <person name="Lunardi J."/>
        </authorList>
    </citation>
    <scope>VARIANTS MHS1 CYS-163; ARG-341; CYS-614; CYS-2454; MET-3916 AND LEU-4973</scope>
</reference>
<reference key="44">
    <citation type="journal article" date="2002" name="Ann. Neurol.">
        <title>A recessive form of central core disease, transiently presenting as multi-minicore disease, is associated with a homozygous mutation in the ryanodine receptor type 1 gene.</title>
        <authorList>
            <person name="Ferreiro A."/>
            <person name="Monnier N."/>
            <person name="Romero N.B."/>
            <person name="Leroy J.-P."/>
            <person name="Boennemann C."/>
            <person name="Haenggeli C.-A."/>
            <person name="Straub V."/>
            <person name="Voss W.D."/>
            <person name="Nivoche Y."/>
            <person name="Jungbluth H."/>
            <person name="Lemainque A."/>
            <person name="Voit T."/>
            <person name="Lunardi J."/>
            <person name="Fardeau M."/>
            <person name="Guicheney P."/>
        </authorList>
    </citation>
    <scope>VARIANT CMYO1B SER-3527</scope>
</reference>
<reference key="45">
    <citation type="journal article" date="2002" name="Br. J. Anaesth.">
        <title>Malignant hyperthermia associated with exercise-induced rhabdomyolysis or congenital abnormalities and a novel RYR1 mutation in New Zealand and Australian pedigrees.</title>
        <authorList>
            <person name="Davis M."/>
            <person name="Brown R."/>
            <person name="Dickson A."/>
            <person name="Horton H."/>
            <person name="James D."/>
            <person name="Laing N."/>
            <person name="Marston R."/>
            <person name="Norgate M."/>
            <person name="Perlman D."/>
            <person name="Pollock N."/>
            <person name="Stowell K."/>
        </authorList>
    </citation>
    <scope>VARIANT MHS1 CYS-401</scope>
</reference>
<reference key="46">
    <citation type="journal article" date="2002" name="Cell Calcium">
        <title>Mutations in the RYR1 gene in Italian patients at risk for malignant hyperthermia: evidence for a cluster of novel mutations in the C-terminal region.</title>
        <authorList>
            <person name="Galli L."/>
            <person name="Orrico A."/>
            <person name="Cozzolino S."/>
            <person name="Pietrini V."/>
            <person name="Tegazzin V."/>
            <person name="Sorrentino V."/>
        </authorList>
    </citation>
    <scope>VARIANTS MHS1 CYS-163; CYS-401; HIS-2163; MET-2206; ILE-2280; ARG-2434; LEU-2435; CYS-2458; SER-4136; LEU-4234; TRP-4737; VAL-4942 AND LEU-4973</scope>
</reference>
<reference key="47">
    <citation type="journal article" date="2002" name="Clin. Genet.">
        <title>Novel skeletal muscle ryanodine receptor mutation in a large Brazilian family with malignant hyperthermia.</title>
        <authorList>
            <person name="McWilliams S."/>
            <person name="Nelson T."/>
            <person name="Sudo R.T."/>
            <person name="Zapata-Sudo G."/>
            <person name="Batti M."/>
            <person name="Sambuughin N."/>
        </authorList>
    </citation>
    <scope>VARIANT MHS1 CYS-2355</scope>
</reference>
<reference key="48">
    <citation type="journal article" date="2002" name="Jpn. J. Pharmacol.">
        <title>Novel mutations in C-terminal channel region of the ryanodine receptor in malignant hyperthermia patients.</title>
        <authorList>
            <person name="Oyamada H."/>
            <person name="Oguchi K."/>
            <person name="Saitoh N."/>
            <person name="Yamazawa T."/>
            <person name="Hirose K."/>
            <person name="Kawana Y."/>
            <person name="Wakatsuki K."/>
            <person name="Oguchi K."/>
            <person name="Tagami M."/>
            <person name="Hanaoka K."/>
            <person name="Endo M."/>
            <person name="Iino M."/>
        </authorList>
    </citation>
    <scope>VARIANTS MHS1 SER-4668 AND VAL-4838</scope>
    <scope>VARIANTS ALA-1832 AND GLU-3756</scope>
</reference>
<reference key="49">
    <citation type="journal article" date="2002" name="Neurology">
        <title>Autosomal recessive inheritance of RYR1 mutations in a congenital myopathy with cores.</title>
        <authorList>
            <person name="Jungbluth H."/>
            <person name="Muller C.R."/>
            <person name="Halliger-Keller B."/>
            <person name="Brockington M."/>
            <person name="Brown S.C."/>
            <person name="Feng L."/>
            <person name="Chattopadhyay A."/>
            <person name="Mercuri E."/>
            <person name="Manzur A.Y."/>
            <person name="Ferreiro A."/>
            <person name="Laing N.G."/>
            <person name="Davis M.R."/>
            <person name="Roper H.P."/>
            <person name="Dubowitz V."/>
            <person name="Bydder G."/>
            <person name="Sewry C.A."/>
            <person name="Muntoni F."/>
        </authorList>
    </citation>
    <scope>VARIANT CMYO1B ILE-4849</scope>
</reference>
<reference key="50">
    <citation type="journal article" date="2003" name="Anesthesiology">
        <title>Detection of a novel ryanodine receptor subtype 1 mutation (R328W) in a malignant hyperthermia family by sequencing of a leukocyte transcript.</title>
        <authorList>
            <person name="Loke J.C.P."/>
            <person name="Kraev N."/>
            <person name="Sharma P."/>
            <person name="Du G."/>
            <person name="Patel L."/>
            <person name="Kraev A."/>
            <person name="MacLennan D.H."/>
        </authorList>
    </citation>
    <scope>VARIANT MHS1 TRP-328</scope>
    <scope>CHARACTERIZATION OF VARIANT MHS1 TRP-328</scope>
</reference>
<reference key="51">
    <citation type="journal article" date="2003" name="Arch. Dis. Child.">
        <title>Central core disease: clinical, pathological, and genetic features.</title>
        <authorList>
            <person name="Quinlivan R.M."/>
            <person name="Muller C.R."/>
            <person name="Davis M."/>
            <person name="Laing N.G."/>
            <person name="Evans G.A."/>
            <person name="Dwyer J."/>
            <person name="Dove J."/>
            <person name="Roberts A.P."/>
            <person name="Sewry C.A."/>
        </authorList>
    </citation>
    <scope>VARIANTS CMYO1A HIS-4861; CYS-4864; TRP-4893 AND THR-4940</scope>
</reference>
<reference key="52">
    <citation type="journal article" date="2003" name="Brain">
        <title>Dominant and recessive central core disease associated with RYR1 mutations and fetal akinesia.</title>
        <authorList>
            <person name="Romero N.B."/>
            <person name="Monnier N."/>
            <person name="Viollet L."/>
            <person name="Cortey A."/>
            <person name="Chevallay M."/>
            <person name="Leroy J.P."/>
            <person name="Lunardi J."/>
            <person name="Fardeau M."/>
        </authorList>
    </citation>
    <scope>VARIANTS CMYO1A CYS-614 AND GLU-4899</scope>
    <scope>VARIANTS CMYO1B GLU-215; PRO-4650 AND GLN-4724</scope>
</reference>
<reference key="53">
    <citation type="journal article" date="2003" name="Clin. Chem.">
        <title>Scanning for mutations of the ryanodine receptor (RYR1) gene by denaturing HPLC: detection of three novel malignant hyperthermia alleles.</title>
        <authorList>
            <person name="Tammaro A."/>
            <person name="Bracco A."/>
            <person name="Cozzolino S."/>
            <person name="Esposito M."/>
            <person name="Di Martino A."/>
            <person name="Savoia G."/>
            <person name="Zeuli L."/>
            <person name="Piluso G."/>
            <person name="Aurino S."/>
            <person name="Nigro V."/>
        </authorList>
    </citation>
    <scope>VARIANTS MHS1 CYS-44; CYS-533; LYS-2101; LEU-2117; PRO-2163; MET-2168; LEU-2435 AND HIS-2454</scope>
</reference>
<reference key="54">
    <citation type="journal article" date="2003" name="Genet. Test.">
        <title>Calcium release from sarcoplasmic reticulum is facilitated in human myotubes derived from carriers of the ryanodine receptor type 1 mutations Ile2182Phe and Gly2375Ala.</title>
        <authorList>
            <person name="Wehner M."/>
            <person name="Rueffert H."/>
            <person name="Koenig F."/>
            <person name="Olthoff D."/>
        </authorList>
    </citation>
    <scope>VARIANTS MHS1 PHE-2182 AND ALA-2375</scope>
</reference>
<reference key="55">
    <citation type="journal article" date="2003" name="Hum. Mol. Genet.">
        <title>Clinical and functional effects of a deletion in a COOH-terminal lumenal loop of the skeletal muscle ryanodine receptor.</title>
        <authorList>
            <person name="Zorzato F."/>
            <person name="Yamaguchi N."/>
            <person name="Xu L."/>
            <person name="Meissner G."/>
            <person name="Mueller C.R."/>
            <person name="Pouliquin P."/>
            <person name="Muntoni F."/>
            <person name="Sewry C."/>
            <person name="Girard T."/>
            <person name="Treves S."/>
        </authorList>
    </citation>
    <scope>VARIANT CMYO1A 4863-ARG--ASP-4869 DELINS TYR</scope>
</reference>
<reference key="56">
    <citation type="journal article" date="2003" name="Hum. Mol. Genet.">
        <title>A homozygous splicing mutation causing a depletion of skeletal muscle RYR1 is associated with multi-minicore disease congenital myopathy with ophthalmoplegia.</title>
        <authorList>
            <person name="Monnier N."/>
            <person name="Ferreiro A."/>
            <person name="Marty I."/>
            <person name="Labarre-Vila A."/>
            <person name="Mezin P."/>
            <person name="Lunardi J."/>
        </authorList>
    </citation>
    <scope>INVOLVEMENT IN CMYO1B</scope>
</reference>
<reference key="57">
    <citation type="journal article" date="2003" name="Neuromuscul. Disord.">
        <title>Principal mutation hotspot for central core disease and related myopathies in the C-terminal transmembrane region of the RYR1 gene.</title>
        <authorList>
            <person name="Davis M.R."/>
            <person name="Haan E."/>
            <person name="Jungbluth H."/>
            <person name="Sewry C."/>
            <person name="North K."/>
            <person name="Muntoni F."/>
            <person name="Kuntzer T."/>
            <person name="Lamont P."/>
            <person name="Bankier A."/>
            <person name="Tomlinson P."/>
            <person name="Sanchez A."/>
            <person name="Walsh P."/>
            <person name="Nagarajan L."/>
            <person name="Oley C."/>
            <person name="Colley A."/>
            <person name="Gedeon A."/>
            <person name="Quinlivan R."/>
            <person name="Dixon J."/>
            <person name="James D."/>
            <person name="Mueller C.R."/>
            <person name="Laing N.G."/>
        </authorList>
    </citation>
    <scope>VARIANT CORE/ROD DISEASE ILE-4637</scope>
    <scope>VARIANTS CMYO1A ASP-4638; PRO-4651; CYS-4861; HIS-4861; GLN-4893; THR-4898; GLY-4914; THR-4914; 4927-VAL-ILE-4928 DEL AND THR-4940</scope>
</reference>
<reference key="58">
    <citation type="journal article" date="2004" name="Anesthesiology">
        <title>Malignant hyperthermia in North America: genetic screening of the three hot spots in the type I ryanodine receptor gene.</title>
        <authorList>
            <person name="Sei Y."/>
            <person name="Sambuughin N.N."/>
            <person name="Davis E.J."/>
            <person name="Sachs D."/>
            <person name="Cuenca P.B."/>
            <person name="Brandom B.W."/>
            <person name="Tautz T."/>
            <person name="Rosenberg H."/>
            <person name="Nelson T.E."/>
            <person name="Muldoon S.M."/>
        </authorList>
    </citation>
    <scope>VARIANTS MHS1 CYS-163; ARG-248; CYS-614; CYS-2163; MET-2168; MET-2206; ILE-2214; THR-2350; THR-2367; ASN-2431; ARG-2434; VAL-2437; HIS-2454 AND PRO-4824</scope>
</reference>
<reference key="59">
    <citation type="journal article" date="2004" name="Arch. Neurol.">
        <title>Multiminicore disease in a family susceptible to malignant hyperthermia: histology, in vitro contracture tests, and genetic characterization.</title>
        <authorList>
            <person name="Guis S."/>
            <person name="Figarella-Branger D."/>
            <person name="Monnier N."/>
            <person name="Bendahan D."/>
            <person name="Kozak-Ribbens G."/>
            <person name="Mattei J.-P."/>
            <person name="Lunardi J."/>
            <person name="Cozzone P.J."/>
            <person name="Pellissier J.-F."/>
        </authorList>
    </citation>
    <scope>VARIANTS MHS1 TRP-2676 AND SER-2787</scope>
</reference>
<reference key="60">
    <citation type="journal article" date="2004" name="J. Med. Genet.">
        <title>RYR1 mutations in UK central core disease patients: more than just the C-terminal transmembrane region of the RYR1 gene.</title>
        <authorList>
            <person name="Shepherd S."/>
            <person name="Ellis F."/>
            <person name="Halsall J."/>
            <person name="Hopkins P."/>
            <person name="Robinson R."/>
        </authorList>
    </citation>
    <scope>VARIANTS CMYO1A GLY-160; ASP-4638; PHE-4814; HIS-4861 AND MET-4938</scope>
    <scope>VARIANTS MHS1 CYS-614; MET-2346; GLY-2348; TRP-2452; HIS-2458; PRO-4824 AND GLU-4939</scope>
</reference>
<reference key="61">
    <citation type="journal article" date="2004" name="Muscle Nerve">
        <title>Mutation analysis of two patients with hypokalemic periodic paralysis and suspected malignant hyperthermia.</title>
        <authorList>
            <person name="Marchant C.L."/>
            <person name="Ellis F.R."/>
            <person name="Halsall P.J."/>
            <person name="Hopkins P.M."/>
            <person name="Robinson R.L."/>
        </authorList>
    </citation>
    <scope>VARIANT MHS1 SER-2342</scope>
</reference>
<reference key="62">
    <citation type="journal article" date="2005" name="Hum. Mutat.">
        <title>Correlations between genotype and pharmacological, histological, functional, and clinical phenotypes in malignant hyperthermia susceptibility.</title>
        <authorList>
            <person name="Monnier N."/>
            <person name="Kozak-Ribbens G."/>
            <person name="Krivosic-Horber R."/>
            <person name="Nivoche Y."/>
            <person name="Qi D."/>
            <person name="Kraev N."/>
            <person name="Loke J."/>
            <person name="Sharma P."/>
            <person name="Tegazzin V."/>
            <person name="Figarella-Branger D."/>
            <person name="Romero N."/>
            <person name="Mezin P."/>
            <person name="Bendahan D."/>
            <person name="Payen J.-F."/>
            <person name="Depret T."/>
            <person name="Maclennan D.H."/>
            <person name="Lunardi J."/>
        </authorList>
    </citation>
    <scope>VARIANTS MHS1 ARG-35; CYS-163; LEU-163; ARG-165; ASN-166; CYS-177; CYS-178; VAL-227; ARG-248; TRP-328; ARG-341; SER-401; HIS-401; MET-403; SER-522; TRP-552; CYS-614; LEU-614; CYS-2163; HIS-2163; MET-2168; MET-2206; ARG-2206; ASP-2344; MET-2346; THR-2350; THR-2428; ARG-2434; HIS-2435; CYS-2454; HIS-2454; CYS-2458; TRP-2676; SER-2787; MET-3916; SER-4684; GLN-4737; TRP-4737; ILE-4826; VAL-4838; ILE-4849; ARG-4876; GLU-4939 AND LEU-4973</scope>
    <scope>CHARACTERIZATION OF VARIANTS MHS1 LEU-163; MET-2206; THR-2428; CYS-2454 AND HIS-2454</scope>
    <scope>FUNCTION</scope>
    <scope>TRANSPORTER ACTIVITY</scope>
    <scope>ACTIVITY REGULATION</scope>
</reference>
<reference key="63">
    <citation type="journal article" date="2005" name="Neurology">
        <title>Minicore myopathy with ophthalmoplegia caused by mutations in the ryanodine receptor type 1 gene.</title>
        <authorList>
            <person name="Jungbluth H."/>
            <person name="Zhou H."/>
            <person name="Hartley L."/>
            <person name="Halliger-Keller B."/>
            <person name="Messina S."/>
            <person name="Longman C."/>
            <person name="Brockington M."/>
            <person name="Robb S.A."/>
            <person name="Straub V."/>
            <person name="Voit T."/>
            <person name="Swash M."/>
            <person name="Ferreiro A."/>
            <person name="Bydder G."/>
            <person name="Sewry C.A."/>
            <person name="Mueller C."/>
            <person name="Muntoni F."/>
        </authorList>
    </citation>
    <scope>VARIANTS CMYO1B TRP-109 AND LYS-2423</scope>
    <scope>VARIANTS VAL-485 AND CYS-2060</scope>
</reference>
<reference key="64">
    <citation type="journal article" date="2007" name="Clin. Genet.">
        <title>Inheritance of a novel RYR1 mutation in a family with myotonic dystrophy type 1.</title>
        <authorList>
            <person name="Gambelli S."/>
            <person name="Malandrini A."/>
            <person name="Berti G."/>
            <person name="Gaudiano C."/>
            <person name="Zicari E."/>
            <person name="Brunori P."/>
            <person name="Perticoni G."/>
            <person name="Orrico A."/>
            <person name="Galli L."/>
            <person name="Sorrentino V."/>
            <person name="Lunardi J."/>
            <person name="Federico A."/>
            <person name="Dotti M.T."/>
        </authorList>
    </citation>
    <scope>VARIANT CMYO1A VAL-4846</scope>
</reference>
<reference key="65">
    <citation type="journal article" date="2007" name="Muscle Nerve">
        <title>Central core disease due to recessive mutations in RYR1 gene: is it more common than described?</title>
        <authorList>
            <person name="Kossugue P.M."/>
            <person name="Paim J.F."/>
            <person name="Navarro M.M."/>
            <person name="Silva H.C."/>
            <person name="Pavanello R.C.M."/>
            <person name="Gurgel-Giannetti J."/>
            <person name="Zatz M."/>
            <person name="Vainzof M."/>
        </authorList>
    </citation>
    <scope>VARIANTS CMYO1A CYS-4861; HIS-4861; VAL-4897 AND THR-4914</scope>
    <scope>VARIANTS CMYO1B GLN-4558; VAL-4846 AND ILE-4849</scope>
</reference>
<reference key="66">
    <citation type="journal article" date="2008" name="Eur. J. Neurol.">
        <title>Novel RYR1 missense mutation causes core rod myopathy.</title>
        <authorList>
            <person name="von der Hagen M."/>
            <person name="Kress W."/>
            <person name="Hahn G."/>
            <person name="Brocke K.S."/>
            <person name="Mitzscherling P."/>
            <person name="Huebner A."/>
            <person name="Muller-Reible C."/>
            <person name="Stoltenburg-Didinger G."/>
            <person name="Kaindl A.M."/>
        </authorList>
    </citation>
    <scope>VARIANT CMYO1A MET-4882</scope>
</reference>
<reference key="67">
    <citation type="journal article" date="2008" name="Hum. Mutat.">
        <title>Null mutations causing depletion of the type 1 ryanodine receptor (RYR1) are commonly associated with recessive structural congenital myopathies with cores.</title>
        <authorList>
            <person name="Monnier N."/>
            <person name="Marty I."/>
            <person name="Faure J."/>
            <person name="Castiglioni C."/>
            <person name="Desnuelle C."/>
            <person name="Sacconi S."/>
            <person name="Estournet B."/>
            <person name="Ferreiro A."/>
            <person name="Romero N."/>
            <person name="Laquerriere A."/>
            <person name="Lazaro L."/>
            <person name="Martin J.-J."/>
            <person name="Morava E."/>
            <person name="Rossi A."/>
            <person name="Van der Kooi A."/>
            <person name="de Visser M."/>
            <person name="Verschuuren C."/>
            <person name="Lunardi J."/>
        </authorList>
    </citation>
    <scope>VARIANTS CMYO1B VAL-13; SER-1704; PRO-2421; LYS-2423; HIS-3539; GLN-3772; GLN-4558; MET-4842 AND ILE-4849</scope>
</reference>
<reference key="68">
    <citation type="journal article" date="2009" name="Hum. Mutat.">
        <title>Increasing the number of diagnostic mutations in malignant hyperthermia.</title>
        <authorList>
            <person name="Levano S."/>
            <person name="Vukcevic M."/>
            <person name="Singer M."/>
            <person name="Matter A."/>
            <person name="Treves S."/>
            <person name="Urwyler A."/>
            <person name="Girard T."/>
        </authorList>
    </citation>
    <scope>VARIANTS MHS1 ARG-13; LYS-226; LEU-367; HIS-530; TYR-544; CYS-1043; GLY-1352; LEU-1787; HIS-2336; LYS-2404; TRP-2676; GLY-2730; SER-2787; LYS-2880; PRO-3217; LYS-3290; TRP-3772; ARG-3806; LEU-4501; VAL-4838; ARG-4876 AND THR-4938</scope>
    <scope>VARIANTS GLY-1342; ALA-1832; CYS-2060; VAL-2321; VAL-2550; GLN-3583 AND GLU-3756</scope>
</reference>
<reference key="69">
    <citation type="journal article" date="2009" name="J. Anesth.">
        <title>Functional analysis of ryanodine receptor type 1 p.R2508C mutation in exon 47.</title>
        <authorList>
            <person name="Migita T."/>
            <person name="Mukaida K."/>
            <person name="Hamada H."/>
            <person name="Yasuda T."/>
            <person name="Haraki T."/>
            <person name="Nishino I."/>
            <person name="Murakami N."/>
            <person name="Kawamoto M."/>
        </authorList>
    </citation>
    <scope>VARIANT MHS1 CYS-2508</scope>
</reference>
<reference key="70">
    <citation type="journal article" date="2010" name="Anesth. Analg.">
        <title>Functional properties of RYR1 mutations identified in Swedish patients with malignant hyperthermia and central core disease.</title>
        <authorList>
            <person name="Vukcevic M."/>
            <person name="Broman M."/>
            <person name="Islander G."/>
            <person name="Bodelsson M."/>
            <person name="Ranklev-Twetman E."/>
            <person name="Muller C.R."/>
            <person name="Treves S."/>
        </authorList>
    </citation>
    <scope>VARIANTS MHS1 ASN-382; LYS-1058; ARG-1393 AND HIS-1679</scope>
    <scope>VARIANT CMYO1A GLY-2508</scope>
</reference>
<reference key="71">
    <citation type="journal article" date="2010" name="Hum. Mutat.">
        <title>Recessive mutations in RYR1 are a common cause of congenital fiber type disproportion.</title>
        <authorList>
            <person name="Clarke N.F."/>
            <person name="Waddell L.B."/>
            <person name="Cooper S.T."/>
            <person name="Perry M."/>
            <person name="Smith R.L.L."/>
            <person name="Kornberg A.J."/>
            <person name="Muntoni F."/>
            <person name="Lillis S."/>
            <person name="Straub V."/>
            <person name="Bushby K."/>
            <person name="Guglieri M."/>
            <person name="King M.D."/>
            <person name="Farrell M.A."/>
            <person name="Marty I."/>
            <person name="Lunardi J."/>
            <person name="Monnier N."/>
            <person name="North K.N."/>
        </authorList>
    </citation>
    <scope>VARIANTS CMYO1B THR-402; LEU-2035; LYS-3326 AND GLY-3402</scope>
</reference>
<reference key="72">
    <citation type="journal article" date="2011" name="Clin. Genet.">
        <title>Novel missense mutations and unexpected multiple changes of RYR1 gene in 75 malignant hyperthermia families.</title>
        <authorList>
            <person name="Tammaro A."/>
            <person name="Di Martino A."/>
            <person name="Bracco A."/>
            <person name="Cozzolino S."/>
            <person name="Savoia G."/>
            <person name="Andria B."/>
            <person name="Cannavo A."/>
            <person name="Spagnuolo M."/>
            <person name="Piluso G."/>
            <person name="Aurino S."/>
            <person name="Nigro V."/>
        </authorList>
    </citation>
    <scope>VARIANTS MHS1 ASN-1056; HIS-1127; ARG-1467; VAL-1571; GLN-2013; CYS-2248; GLY-2400; GLY-2593; TYR-2976; GLN-3410; TYR-3501 AND CYS-3933</scope>
    <scope>VARIANTS LYS-899; CYS-2060 AND GLN-3360</scope>
</reference>
<reference key="73">
    <citation type="journal article" date="2011" name="Muscle Nerve">
        <title>Dominant and recessive RYR1 mutations in adults with core lesions and mild muscle symptoms.</title>
        <authorList>
            <person name="Duarte S.T."/>
            <person name="Oliveira J."/>
            <person name="Santos R."/>
            <person name="Pereira P."/>
            <person name="Barroso C."/>
            <person name="Conceicao I."/>
            <person name="Evangelista T."/>
        </authorList>
    </citation>
    <scope>VARIANTS CMYO1A GLY-160; GLN-2204; HIS-3366; CYS-3933 AND ASP-4743</scope>
    <scope>VARIANTS LEU-1787; CYS-2060 AND ALA-4493</scope>
</reference>
<reference key="74">
    <citation type="journal article" date="2013" name="Anesthesiology">
        <title>Exome sequencing reveals novel rare variants in the ryanodine receptor and calcium channel genes in malignant hyperthermia families.</title>
        <authorList>
            <person name="Kim J.H."/>
            <person name="Jarvik G.P."/>
            <person name="Browning B.L."/>
            <person name="Rajagopalan R."/>
            <person name="Gordon A.S."/>
            <person name="Rieder M.J."/>
            <person name="Robertson P.D."/>
            <person name="Nickerson D.A."/>
            <person name="Fisher N.A."/>
            <person name="Hopkins P.M."/>
        </authorList>
    </citation>
    <scope>VARIANTS MHS1 HIS-1056; MET-2627 AND LEU-4234</scope>
</reference>
<reference key="75">
    <citation type="journal article" date="2013" name="Anesth. Analg.">
        <title>Ryanodine receptor type 1 gene variants in the malignant hyperthermia-susceptible population of the United States.</title>
        <authorList>
            <person name="Brandom B.W."/>
            <person name="Bina S."/>
            <person name="Wong C.A."/>
            <person name="Wallace T."/>
            <person name="Visoiu M."/>
            <person name="Isackson P.J."/>
            <person name="Vladutiu G.D."/>
            <person name="Sambuughin N."/>
            <person name="Muldoon S.M."/>
        </authorList>
    </citation>
    <scope>VARIANTS MHS1 ALA-40; CYS-163; ARG-248; ARG-341; PRO-487; ALA-518; CYS-614; HIS-1043; LEU-1787; HIS-2163; MET-2206; HIS-2248; HIS-2351; MET-2354; LEU-2358; GLN-2383; ARG-2434; HIS-2454; ARG-3711; VAL-4178; ARG-4230; GLU-4837; HIS-4861 AND GLY-4906</scope>
    <scope>VARIANTS CMYO1A TRP-975; MET-2168 AND GLY-3238</scope>
    <scope>VARIANTS MET-974; LEU-1109; ARG-1393; CYS-2060 AND VAL-2321</scope>
</reference>
<reference key="76">
    <citation type="journal article" date="2014" name="Neurosci. Lett.">
        <title>Novel RYR1 missense mutations in six Chinese patients with central core disease.</title>
        <authorList>
            <person name="Gu M."/>
            <person name="Zhang S."/>
            <person name="Hu J."/>
            <person name="Yuan Y."/>
            <person name="Wang Z."/>
            <person name="Da Y."/>
            <person name="Wu S."/>
        </authorList>
    </citation>
    <scope>VARIANTS CMYO1A HIS-4861; ALA-4897 AND THR-4898</scope>
</reference>
<reference key="77">
    <citation type="journal article" date="2015" name="Anesth. Analg.">
        <title>Several ryanodine receptor type 1 gene mutations of p.Arg2508 are potential sources of malignant hyperthermia.</title>
        <authorList>
            <person name="Miyoshi H."/>
            <person name="Yasuda T."/>
            <person name="Otsuki S."/>
            <person name="Kondo T."/>
            <person name="Haraki T."/>
            <person name="Mukaida K."/>
            <person name="Nakamura R."/>
            <person name="Hamada H."/>
            <person name="Kawamoto M."/>
        </authorList>
    </citation>
    <scope>CHARACTERIZATION OF VARIANT CMYO1A GLY-2508</scope>
    <scope>CHARACTERIZATION OF VARIANT MHS1 HIS-2508</scope>
    <scope>MUTAGENESIS OF ARG-2508</scope>
</reference>
<reference key="78">
    <citation type="journal article" date="2015" name="PLoS ONE">
        <title>Divergent activity profiles of type 1 ryanodine receptor channels carrying malignant hyperthermia and central core disease mutations in the amino-terminal Region.</title>
        <authorList>
            <person name="Murayama T."/>
            <person name="Kurebayashi N."/>
            <person name="Yamazawa T."/>
            <person name="Oyamada H."/>
            <person name="Suzuki J."/>
            <person name="Kanemaru K."/>
            <person name="Oguchi K."/>
            <person name="Iino M."/>
            <person name="Sakurai T."/>
        </authorList>
    </citation>
    <scope>CHARACTERIZATION OF VARIANTS MHS1 ARG-35; CYS-163; LEU-163; ARG-248; ARG-341; CYS-401; HIS-401; SER-522; CYS-614 AND LEU-614</scope>
    <scope>MUTAGENESIS OF TYR-522</scope>
</reference>
<reference key="79">
    <citation type="journal article" date="2016" name="Hum. Mutat.">
        <title>Genotype-phenotype correlations of malignant hyperthermia and central core disease mutations in the central region of the RYR1 channel.</title>
        <authorList>
            <person name="Murayama T."/>
            <person name="Kurebayashi N."/>
            <person name="Ogawa H."/>
            <person name="Yamazawa T."/>
            <person name="Oyamada H."/>
            <person name="Suzuki J."/>
            <person name="Kanemaru K."/>
            <person name="Oguchi K."/>
            <person name="Iino M."/>
            <person name="Sakurai T."/>
        </authorList>
    </citation>
    <scope>CHARACTERIZATION OF VARIANTS MHS1 CYS-2163; HIS-2163; MET-2168; MET-2206; THR-2350; ALA-2375; ARG-2434; HIS-2435; CYS-2454; HIS-2454; CYS-2458; HIS-2458 AND HIS-2508</scope>
    <scope>CHARACTERIZATION OF VARIANT CMYO1A CYS-2508</scope>
    <scope>FUNCTION</scope>
    <scope>TRANSPORTER ACTIVITY</scope>
</reference>
<reference key="80">
    <citation type="journal article" date="2016" name="Neuromuscul. Disord.">
        <title>Functional characterization of the RYR1 mutation p.Arg4737Trp associated with susceptibility to malignant hyperthermia.</title>
        <authorList>
            <person name="Johannsen S."/>
            <person name="Treves S."/>
            <person name="Mueller C.R."/>
            <person name="Moegele S."/>
            <person name="Schneiderbanger D."/>
            <person name="Roewer N."/>
            <person name="Schuster F."/>
        </authorList>
    </citation>
    <scope>VARIANT MHS1 TRP-4737</scope>
    <scope>CHARACTERIZATION OF VARIANT MHS1 TRP-4737</scope>
</reference>
<reference key="81">
    <citation type="journal article" date="2016" name="Prenat. Diagn.">
        <title>Intra-familial variability associated with recessive RYR1 mutation diagnosed prenatally by exome sequencing.</title>
        <authorList>
            <person name="Casey J."/>
            <person name="Flood K."/>
            <person name="Ennis S."/>
            <person name="Doyle E."/>
            <person name="Farrell M."/>
            <person name="Lynch S.A."/>
        </authorList>
    </citation>
    <scope>VARIANT ARG-705</scope>
</reference>
<reference key="82">
    <citation type="journal article" date="2017" name="Clin. Genet.">
        <title>Improved diagnostic yield of neuromuscular disorders applying clinical exome sequencing in patients arising from a consanguineous population.</title>
        <authorList>
            <person name="Fattahi Z."/>
            <person name="Kalhor Z."/>
            <person name="Fadaee M."/>
            <person name="Vazehan R."/>
            <person name="Parsimehr E."/>
            <person name="Abolhassani A."/>
            <person name="Beheshtian M."/>
            <person name="Zamani G."/>
            <person name="Nafissi S."/>
            <person name="Nilipour Y."/>
            <person name="Akbari M.R."/>
            <person name="Kahrizi K."/>
            <person name="Kariminejad A."/>
            <person name="Najmabadi H."/>
        </authorList>
    </citation>
    <scope>VARIANTS CMYO1A PRO-2963 AND ASP-4806</scope>
</reference>
<keyword id="KW-0002">3D-structure</keyword>
<keyword id="KW-0025">Alternative splicing</keyword>
<keyword id="KW-0067">ATP-binding</keyword>
<keyword id="KW-0106">Calcium</keyword>
<keyword id="KW-0107">Calcium channel</keyword>
<keyword id="KW-0109">Calcium transport</keyword>
<keyword id="KW-0112">Calmodulin-binding</keyword>
<keyword id="KW-0217">Developmental protein</keyword>
<keyword id="KW-0903">Direct protein sequencing</keyword>
<keyword id="KW-0225">Disease variant</keyword>
<keyword id="KW-0407">Ion channel</keyword>
<keyword id="KW-0406">Ion transport</keyword>
<keyword id="KW-1071">Ligand-gated ion channel</keyword>
<keyword id="KW-0472">Membrane</keyword>
<keyword id="KW-0479">Metal-binding</keyword>
<keyword id="KW-0547">Nucleotide-binding</keyword>
<keyword id="KW-0597">Phosphoprotein</keyword>
<keyword id="KW-1267">Proteomics identification</keyword>
<keyword id="KW-0675">Receptor</keyword>
<keyword id="KW-1185">Reference proteome</keyword>
<keyword id="KW-0677">Repeat</keyword>
<keyword id="KW-0702">S-nitrosylation</keyword>
<keyword id="KW-0703">Sarcoplasmic reticulum</keyword>
<keyword id="KW-0812">Transmembrane</keyword>
<keyword id="KW-1133">Transmembrane helix</keyword>
<keyword id="KW-0813">Transport</keyword>
<name>RYR1_HUMAN</name>
<proteinExistence type="evidence at protein level"/>
<gene>
    <name evidence="92" type="primary">RYR1</name>
    <name type="synonym">RYDR</name>
</gene>
<dbReference type="EMBL" id="J05200">
    <property type="protein sequence ID" value="AAA60294.1"/>
    <property type="molecule type" value="mRNA"/>
</dbReference>
<dbReference type="EMBL" id="U48508">
    <property type="protein sequence ID" value="AAC51191.1"/>
    <property type="molecule type" value="Genomic_DNA"/>
</dbReference>
<dbReference type="EMBL" id="U48449">
    <property type="protein sequence ID" value="AAC51191.1"/>
    <property type="status" value="JOINED"/>
    <property type="molecule type" value="Genomic_DNA"/>
</dbReference>
<dbReference type="EMBL" id="U48450">
    <property type="protein sequence ID" value="AAC51191.1"/>
    <property type="status" value="JOINED"/>
    <property type="molecule type" value="Genomic_DNA"/>
</dbReference>
<dbReference type="EMBL" id="U48451">
    <property type="protein sequence ID" value="AAC51191.1"/>
    <property type="status" value="JOINED"/>
    <property type="molecule type" value="Genomic_DNA"/>
</dbReference>
<dbReference type="EMBL" id="U48452">
    <property type="protein sequence ID" value="AAC51191.1"/>
    <property type="status" value="JOINED"/>
    <property type="molecule type" value="Genomic_DNA"/>
</dbReference>
<dbReference type="EMBL" id="U48453">
    <property type="protein sequence ID" value="AAC51191.1"/>
    <property type="status" value="JOINED"/>
    <property type="molecule type" value="Genomic_DNA"/>
</dbReference>
<dbReference type="EMBL" id="U48454">
    <property type="protein sequence ID" value="AAC51191.1"/>
    <property type="status" value="JOINED"/>
    <property type="molecule type" value="Genomic_DNA"/>
</dbReference>
<dbReference type="EMBL" id="U48455">
    <property type="protein sequence ID" value="AAC51191.1"/>
    <property type="status" value="JOINED"/>
    <property type="molecule type" value="Genomic_DNA"/>
</dbReference>
<dbReference type="EMBL" id="U48456">
    <property type="protein sequence ID" value="AAC51191.1"/>
    <property type="status" value="JOINED"/>
    <property type="molecule type" value="Genomic_DNA"/>
</dbReference>
<dbReference type="EMBL" id="U48457">
    <property type="protein sequence ID" value="AAC51191.1"/>
    <property type="status" value="JOINED"/>
    <property type="molecule type" value="Genomic_DNA"/>
</dbReference>
<dbReference type="EMBL" id="U48458">
    <property type="protein sequence ID" value="AAC51191.1"/>
    <property type="status" value="JOINED"/>
    <property type="molecule type" value="Genomic_DNA"/>
</dbReference>
<dbReference type="EMBL" id="U48459">
    <property type="protein sequence ID" value="AAC51191.1"/>
    <property type="status" value="JOINED"/>
    <property type="molecule type" value="Genomic_DNA"/>
</dbReference>
<dbReference type="EMBL" id="U48460">
    <property type="protein sequence ID" value="AAC51191.1"/>
    <property type="status" value="JOINED"/>
    <property type="molecule type" value="Genomic_DNA"/>
</dbReference>
<dbReference type="EMBL" id="U48461">
    <property type="protein sequence ID" value="AAC51191.1"/>
    <property type="status" value="JOINED"/>
    <property type="molecule type" value="Genomic_DNA"/>
</dbReference>
<dbReference type="EMBL" id="U48462">
    <property type="protein sequence ID" value="AAC51191.1"/>
    <property type="status" value="JOINED"/>
    <property type="molecule type" value="Genomic_DNA"/>
</dbReference>
<dbReference type="EMBL" id="U48463">
    <property type="protein sequence ID" value="AAC51191.1"/>
    <property type="status" value="JOINED"/>
    <property type="molecule type" value="Genomic_DNA"/>
</dbReference>
<dbReference type="EMBL" id="U48464">
    <property type="protein sequence ID" value="AAC51191.1"/>
    <property type="status" value="JOINED"/>
    <property type="molecule type" value="Genomic_DNA"/>
</dbReference>
<dbReference type="EMBL" id="U48465">
    <property type="protein sequence ID" value="AAC51191.1"/>
    <property type="status" value="JOINED"/>
    <property type="molecule type" value="Genomic_DNA"/>
</dbReference>
<dbReference type="EMBL" id="U48466">
    <property type="protein sequence ID" value="AAC51191.1"/>
    <property type="status" value="JOINED"/>
    <property type="molecule type" value="Genomic_DNA"/>
</dbReference>
<dbReference type="EMBL" id="U48467">
    <property type="protein sequence ID" value="AAC51191.1"/>
    <property type="status" value="JOINED"/>
    <property type="molecule type" value="Genomic_DNA"/>
</dbReference>
<dbReference type="EMBL" id="U48468">
    <property type="protein sequence ID" value="AAC51191.1"/>
    <property type="status" value="JOINED"/>
    <property type="molecule type" value="Genomic_DNA"/>
</dbReference>
<dbReference type="EMBL" id="U48469">
    <property type="protein sequence ID" value="AAC51191.1"/>
    <property type="status" value="JOINED"/>
    <property type="molecule type" value="Genomic_DNA"/>
</dbReference>
<dbReference type="EMBL" id="U48470">
    <property type="protein sequence ID" value="AAC51191.1"/>
    <property type="status" value="JOINED"/>
    <property type="molecule type" value="Genomic_DNA"/>
</dbReference>
<dbReference type="EMBL" id="U48471">
    <property type="protein sequence ID" value="AAC51191.1"/>
    <property type="status" value="JOINED"/>
    <property type="molecule type" value="Genomic_DNA"/>
</dbReference>
<dbReference type="EMBL" id="U48472">
    <property type="protein sequence ID" value="AAC51191.1"/>
    <property type="status" value="JOINED"/>
    <property type="molecule type" value="Genomic_DNA"/>
</dbReference>
<dbReference type="EMBL" id="U48473">
    <property type="protein sequence ID" value="AAC51191.1"/>
    <property type="status" value="JOINED"/>
    <property type="molecule type" value="Genomic_DNA"/>
</dbReference>
<dbReference type="EMBL" id="U48474">
    <property type="protein sequence ID" value="AAC51191.1"/>
    <property type="status" value="JOINED"/>
    <property type="molecule type" value="Genomic_DNA"/>
</dbReference>
<dbReference type="EMBL" id="U48475">
    <property type="protein sequence ID" value="AAC51191.1"/>
    <property type="status" value="JOINED"/>
    <property type="molecule type" value="Genomic_DNA"/>
</dbReference>
<dbReference type="EMBL" id="U48476">
    <property type="protein sequence ID" value="AAC51191.1"/>
    <property type="status" value="JOINED"/>
    <property type="molecule type" value="Genomic_DNA"/>
</dbReference>
<dbReference type="EMBL" id="U48477">
    <property type="protein sequence ID" value="AAC51191.1"/>
    <property type="status" value="JOINED"/>
    <property type="molecule type" value="Genomic_DNA"/>
</dbReference>
<dbReference type="EMBL" id="U48478">
    <property type="protein sequence ID" value="AAC51191.1"/>
    <property type="status" value="JOINED"/>
    <property type="molecule type" value="Genomic_DNA"/>
</dbReference>
<dbReference type="EMBL" id="U48479">
    <property type="protein sequence ID" value="AAC51191.1"/>
    <property type="status" value="JOINED"/>
    <property type="molecule type" value="Genomic_DNA"/>
</dbReference>
<dbReference type="EMBL" id="U48480">
    <property type="protein sequence ID" value="AAC51191.1"/>
    <property type="status" value="JOINED"/>
    <property type="molecule type" value="Genomic_DNA"/>
</dbReference>
<dbReference type="EMBL" id="U48481">
    <property type="protein sequence ID" value="AAC51191.1"/>
    <property type="status" value="JOINED"/>
    <property type="molecule type" value="Genomic_DNA"/>
</dbReference>
<dbReference type="EMBL" id="U48482">
    <property type="protein sequence ID" value="AAC51191.1"/>
    <property type="status" value="JOINED"/>
    <property type="molecule type" value="Genomic_DNA"/>
</dbReference>
<dbReference type="EMBL" id="U48483">
    <property type="protein sequence ID" value="AAC51191.1"/>
    <property type="status" value="JOINED"/>
    <property type="molecule type" value="Genomic_DNA"/>
</dbReference>
<dbReference type="EMBL" id="U48484">
    <property type="protein sequence ID" value="AAC51191.1"/>
    <property type="status" value="JOINED"/>
    <property type="molecule type" value="Genomic_DNA"/>
</dbReference>
<dbReference type="EMBL" id="U48485">
    <property type="protein sequence ID" value="AAC51191.1"/>
    <property type="status" value="JOINED"/>
    <property type="molecule type" value="Genomic_DNA"/>
</dbReference>
<dbReference type="EMBL" id="U48486">
    <property type="protein sequence ID" value="AAC51191.1"/>
    <property type="status" value="JOINED"/>
    <property type="molecule type" value="Genomic_DNA"/>
</dbReference>
<dbReference type="EMBL" id="U48487">
    <property type="protein sequence ID" value="AAC51191.1"/>
    <property type="status" value="JOINED"/>
    <property type="molecule type" value="Genomic_DNA"/>
</dbReference>
<dbReference type="EMBL" id="U48488">
    <property type="protein sequence ID" value="AAC51191.1"/>
    <property type="status" value="JOINED"/>
    <property type="molecule type" value="Genomic_DNA"/>
</dbReference>
<dbReference type="EMBL" id="U48489">
    <property type="protein sequence ID" value="AAC51191.1"/>
    <property type="status" value="JOINED"/>
    <property type="molecule type" value="Genomic_DNA"/>
</dbReference>
<dbReference type="EMBL" id="U48490">
    <property type="protein sequence ID" value="AAC51191.1"/>
    <property type="status" value="JOINED"/>
    <property type="molecule type" value="Genomic_DNA"/>
</dbReference>
<dbReference type="EMBL" id="U48491">
    <property type="protein sequence ID" value="AAC51191.1"/>
    <property type="status" value="JOINED"/>
    <property type="molecule type" value="Genomic_DNA"/>
</dbReference>
<dbReference type="EMBL" id="U48492">
    <property type="protein sequence ID" value="AAC51191.1"/>
    <property type="status" value="JOINED"/>
    <property type="molecule type" value="Genomic_DNA"/>
</dbReference>
<dbReference type="EMBL" id="U48493">
    <property type="protein sequence ID" value="AAC51191.1"/>
    <property type="status" value="JOINED"/>
    <property type="molecule type" value="Genomic_DNA"/>
</dbReference>
<dbReference type="EMBL" id="U48494">
    <property type="protein sequence ID" value="AAC51191.1"/>
    <property type="status" value="JOINED"/>
    <property type="molecule type" value="Genomic_DNA"/>
</dbReference>
<dbReference type="EMBL" id="U48495">
    <property type="protein sequence ID" value="AAC51191.1"/>
    <property type="status" value="JOINED"/>
    <property type="molecule type" value="Genomic_DNA"/>
</dbReference>
<dbReference type="EMBL" id="U48496">
    <property type="protein sequence ID" value="AAC51191.1"/>
    <property type="status" value="JOINED"/>
    <property type="molecule type" value="Genomic_DNA"/>
</dbReference>
<dbReference type="EMBL" id="U48497">
    <property type="protein sequence ID" value="AAC51191.1"/>
    <property type="status" value="JOINED"/>
    <property type="molecule type" value="Genomic_DNA"/>
</dbReference>
<dbReference type="EMBL" id="U48498">
    <property type="protein sequence ID" value="AAC51191.1"/>
    <property type="status" value="JOINED"/>
    <property type="molecule type" value="Genomic_DNA"/>
</dbReference>
<dbReference type="EMBL" id="U48499">
    <property type="protein sequence ID" value="AAC51191.1"/>
    <property type="status" value="JOINED"/>
    <property type="molecule type" value="Genomic_DNA"/>
</dbReference>
<dbReference type="EMBL" id="U48500">
    <property type="protein sequence ID" value="AAC51191.1"/>
    <property type="status" value="JOINED"/>
    <property type="molecule type" value="Genomic_DNA"/>
</dbReference>
<dbReference type="EMBL" id="U48501">
    <property type="protein sequence ID" value="AAC51191.1"/>
    <property type="status" value="JOINED"/>
    <property type="molecule type" value="Genomic_DNA"/>
</dbReference>
<dbReference type="EMBL" id="U48502">
    <property type="protein sequence ID" value="AAC51191.1"/>
    <property type="status" value="JOINED"/>
    <property type="molecule type" value="Genomic_DNA"/>
</dbReference>
<dbReference type="EMBL" id="U48503">
    <property type="protein sequence ID" value="AAC51191.1"/>
    <property type="status" value="JOINED"/>
    <property type="molecule type" value="Genomic_DNA"/>
</dbReference>
<dbReference type="EMBL" id="U48504">
    <property type="protein sequence ID" value="AAC51191.1"/>
    <property type="status" value="JOINED"/>
    <property type="molecule type" value="Genomic_DNA"/>
</dbReference>
<dbReference type="EMBL" id="U48505">
    <property type="protein sequence ID" value="AAC51191.1"/>
    <property type="status" value="JOINED"/>
    <property type="molecule type" value="Genomic_DNA"/>
</dbReference>
<dbReference type="EMBL" id="U48506">
    <property type="protein sequence ID" value="AAC51191.1"/>
    <property type="status" value="JOINED"/>
    <property type="molecule type" value="Genomic_DNA"/>
</dbReference>
<dbReference type="EMBL" id="U48507">
    <property type="protein sequence ID" value="AAC51191.1"/>
    <property type="status" value="JOINED"/>
    <property type="molecule type" value="Genomic_DNA"/>
</dbReference>
<dbReference type="EMBL" id="AC067969">
    <property type="protein sequence ID" value="AAF66076.1"/>
    <property type="molecule type" value="Genomic_DNA"/>
</dbReference>
<dbReference type="EMBL" id="AC005933">
    <property type="protein sequence ID" value="AAC71651.1"/>
    <property type="molecule type" value="Genomic_DNA"/>
</dbReference>
<dbReference type="EMBL" id="AC011469">
    <property type="status" value="NOT_ANNOTATED_CDS"/>
    <property type="molecule type" value="Genomic_DNA"/>
</dbReference>
<dbReference type="EMBL" id="M91455">
    <property type="protein sequence ID" value="AAA60295.1"/>
    <property type="molecule type" value="Genomic_DNA"/>
</dbReference>
<dbReference type="EMBL" id="S78717">
    <property type="protein sequence ID" value="AAB21245.2"/>
    <property type="molecule type" value="Genomic_DNA"/>
</dbReference>
<dbReference type="EMBL" id="S77392">
    <property type="protein sequence ID" value="AAB34356.1"/>
    <property type="molecule type" value="Genomic_DNA"/>
</dbReference>
<dbReference type="CCDS" id="CCDS33011.1">
    <molecule id="P21817-1"/>
</dbReference>
<dbReference type="CCDS" id="CCDS42563.1">
    <molecule id="P21817-2"/>
</dbReference>
<dbReference type="PIR" id="A35041">
    <property type="entry name" value="A35041"/>
</dbReference>
<dbReference type="RefSeq" id="NP_000531.2">
    <molecule id="P21817-1"/>
    <property type="nucleotide sequence ID" value="NM_000540.3"/>
</dbReference>
<dbReference type="RefSeq" id="NP_001036188.1">
    <molecule id="P21817-2"/>
    <property type="nucleotide sequence ID" value="NM_001042723.2"/>
</dbReference>
<dbReference type="PDB" id="6UHI">
    <property type="method" value="X-ray"/>
    <property type="resolution" value="2.88 A"/>
    <property type="chains" value="A=849-962"/>
</dbReference>
<dbReference type="PDB" id="6UHS">
    <property type="method" value="X-ray"/>
    <property type="resolution" value="2.46 A"/>
    <property type="chains" value="A=849-962"/>
</dbReference>
<dbReference type="PDBsum" id="6UHI"/>
<dbReference type="PDBsum" id="6UHS"/>
<dbReference type="SMR" id="P21817"/>
<dbReference type="BioGRID" id="112173">
    <property type="interactions" value="32"/>
</dbReference>
<dbReference type="ComplexPortal" id="CPX-3135">
    <property type="entry name" value="Ryanodine 1 complex"/>
</dbReference>
<dbReference type="DIP" id="DIP-29708N"/>
<dbReference type="ELM" id="P21817"/>
<dbReference type="FunCoup" id="P21817">
    <property type="interactions" value="973"/>
</dbReference>
<dbReference type="IntAct" id="P21817">
    <property type="interactions" value="17"/>
</dbReference>
<dbReference type="MINT" id="P21817"/>
<dbReference type="STRING" id="9606.ENSP00000352608"/>
<dbReference type="BindingDB" id="P21817"/>
<dbReference type="ChEMBL" id="CHEMBL1846"/>
<dbReference type="DrugBank" id="DB00201">
    <property type="generic name" value="Caffeine"/>
</dbReference>
<dbReference type="DrugBank" id="DB11093">
    <property type="generic name" value="Calcium citrate"/>
</dbReference>
<dbReference type="DrugBank" id="DB11348">
    <property type="generic name" value="Calcium Phosphate"/>
</dbReference>
<dbReference type="DrugBank" id="DB14481">
    <property type="generic name" value="Calcium phosphate dihydrate"/>
</dbReference>
<dbReference type="DrugBank" id="DB01219">
    <property type="generic name" value="Dantrolene"/>
</dbReference>
<dbReference type="DrugBank" id="DB04786">
    <property type="generic name" value="Suramin"/>
</dbReference>
<dbReference type="DrugBank" id="DB09085">
    <property type="generic name" value="Tetracaine"/>
</dbReference>
<dbReference type="DrugCentral" id="P21817"/>
<dbReference type="TCDB" id="1.A.3.1.2">
    <property type="family name" value="the ryanodine-inositol 1,4,5-triphosphate receptor ca(2+) channel (rir-cac) family"/>
</dbReference>
<dbReference type="CarbonylDB" id="P21817"/>
<dbReference type="GlyGen" id="P21817">
    <property type="glycosylation" value="7 sites, 1 N-linked glycan (1 site), 1 O-linked glycan (1 site)"/>
</dbReference>
<dbReference type="iPTMnet" id="P21817"/>
<dbReference type="PhosphoSitePlus" id="P21817"/>
<dbReference type="SwissPalm" id="P21817"/>
<dbReference type="BioMuta" id="RYR1"/>
<dbReference type="DMDM" id="108935904"/>
<dbReference type="jPOST" id="P21817"/>
<dbReference type="MassIVE" id="P21817"/>
<dbReference type="PaxDb" id="9606-ENSP00000352608"/>
<dbReference type="PeptideAtlas" id="P21817"/>
<dbReference type="ProteomicsDB" id="53930">
    <molecule id="P21817-1"/>
</dbReference>
<dbReference type="ProteomicsDB" id="53931">
    <molecule id="P21817-2"/>
</dbReference>
<dbReference type="ProteomicsDB" id="53932">
    <molecule id="P21817-3"/>
</dbReference>
<dbReference type="Antibodypedia" id="44914">
    <property type="antibodies" value="179 antibodies from 25 providers"/>
</dbReference>
<dbReference type="DNASU" id="6261"/>
<dbReference type="Ensembl" id="ENST00000355481.8">
    <molecule id="P21817-2"/>
    <property type="protein sequence ID" value="ENSP00000347667.3"/>
    <property type="gene ID" value="ENSG00000196218.15"/>
</dbReference>
<dbReference type="Ensembl" id="ENST00000359596.8">
    <molecule id="P21817-1"/>
    <property type="protein sequence ID" value="ENSP00000352608.2"/>
    <property type="gene ID" value="ENSG00000196218.15"/>
</dbReference>
<dbReference type="GeneID" id="6261"/>
<dbReference type="KEGG" id="hsa:6261"/>
<dbReference type="MANE-Select" id="ENST00000359596.8">
    <property type="protein sequence ID" value="ENSP00000352608.2"/>
    <property type="RefSeq nucleotide sequence ID" value="NM_000540.3"/>
    <property type="RefSeq protein sequence ID" value="NP_000531.2"/>
</dbReference>
<dbReference type="UCSC" id="uc002oit.4">
    <molecule id="P21817-1"/>
    <property type="organism name" value="human"/>
</dbReference>
<dbReference type="AGR" id="HGNC:10483"/>
<dbReference type="CTD" id="6261"/>
<dbReference type="DisGeNET" id="6261"/>
<dbReference type="GeneCards" id="RYR1"/>
<dbReference type="GeneReviews" id="RYR1"/>
<dbReference type="HGNC" id="HGNC:10483">
    <property type="gene designation" value="RYR1"/>
</dbReference>
<dbReference type="HPA" id="ENSG00000196218">
    <property type="expression patterns" value="Group enriched (skeletal muscle, tongue)"/>
</dbReference>
<dbReference type="MalaCards" id="RYR1"/>
<dbReference type="MIM" id="117000">
    <property type="type" value="phenotype"/>
</dbReference>
<dbReference type="MIM" id="145600">
    <property type="type" value="phenotype"/>
</dbReference>
<dbReference type="MIM" id="180901">
    <property type="type" value="gene"/>
</dbReference>
<dbReference type="MIM" id="255320">
    <property type="type" value="phenotype"/>
</dbReference>
<dbReference type="MIM" id="619542">
    <property type="type" value="phenotype"/>
</dbReference>
<dbReference type="neXtProt" id="NX_P21817"/>
<dbReference type="OpenTargets" id="ENSG00000196218"/>
<dbReference type="Orphanet" id="169189">
    <property type="disease" value="Autosomal dominant centronuclear myopathy"/>
</dbReference>
<dbReference type="Orphanet" id="169186">
    <property type="disease" value="Autosomal recessive centronuclear myopathy"/>
</dbReference>
<dbReference type="Orphanet" id="324581">
    <property type="disease" value="Benign Samaritan congenital myopathy"/>
</dbReference>
<dbReference type="Orphanet" id="597">
    <property type="disease" value="Central core disease"/>
</dbReference>
<dbReference type="Orphanet" id="98905">
    <property type="disease" value="Congenital multicore myopathy with external ophthalmoplegia"/>
</dbReference>
<dbReference type="Orphanet" id="424107">
    <property type="disease" value="Congenital myopathy with myasthenic-like onset"/>
</dbReference>
<dbReference type="Orphanet" id="466650">
    <property type="disease" value="Exercise-induced malignant hyperthermia"/>
</dbReference>
<dbReference type="Orphanet" id="99741">
    <property type="disease" value="King-Denborough syndrome"/>
</dbReference>
<dbReference type="Orphanet" id="33108">
    <property type="disease" value="Lethal multiple pterygium syndrome"/>
</dbReference>
<dbReference type="Orphanet" id="423">
    <property type="disease" value="Malignant hyperthermia of anesthesia"/>
</dbReference>
<dbReference type="Orphanet" id="178145">
    <property type="disease" value="Moderate multiminicore disease with hand involvement"/>
</dbReference>
<dbReference type="PharmGKB" id="PA34896"/>
<dbReference type="VEuPathDB" id="HostDB:ENSG00000196218"/>
<dbReference type="eggNOG" id="KOG2243">
    <property type="taxonomic scope" value="Eukaryota"/>
</dbReference>
<dbReference type="GeneTree" id="ENSGT00940000155288"/>
<dbReference type="HOGENOM" id="CLU_000040_2_0_1"/>
<dbReference type="InParanoid" id="P21817"/>
<dbReference type="OMA" id="TWILTED"/>
<dbReference type="OrthoDB" id="258495at2759"/>
<dbReference type="PAN-GO" id="P21817">
    <property type="GO annotations" value="10 GO annotations based on evolutionary models"/>
</dbReference>
<dbReference type="PhylomeDB" id="P21817"/>
<dbReference type="TreeFam" id="TF315244"/>
<dbReference type="PathwayCommons" id="P21817"/>
<dbReference type="Reactome" id="R-HSA-2672351">
    <property type="pathway name" value="Stimuli-sensing channels"/>
</dbReference>
<dbReference type="Reactome" id="R-HSA-5578775">
    <property type="pathway name" value="Ion homeostasis"/>
</dbReference>
<dbReference type="SignaLink" id="P21817"/>
<dbReference type="SIGNOR" id="P21817"/>
<dbReference type="BioGRID-ORCS" id="6261">
    <property type="hits" value="18 hits in 1159 CRISPR screens"/>
</dbReference>
<dbReference type="ChiTaRS" id="RYR1">
    <property type="organism name" value="human"/>
</dbReference>
<dbReference type="GeneWiki" id="RYR1"/>
<dbReference type="GenomeRNAi" id="6261"/>
<dbReference type="Pharos" id="P21817">
    <property type="development level" value="Tclin"/>
</dbReference>
<dbReference type="PRO" id="PR:P21817"/>
<dbReference type="Proteomes" id="UP000005640">
    <property type="component" value="Chromosome 19"/>
</dbReference>
<dbReference type="RNAct" id="P21817">
    <property type="molecule type" value="protein"/>
</dbReference>
<dbReference type="Bgee" id="ENSG00000196218">
    <property type="expression patterns" value="Expressed in gluteal muscle and 141 other cell types or tissues"/>
</dbReference>
<dbReference type="ExpressionAtlas" id="P21817">
    <property type="expression patterns" value="baseline and differential"/>
</dbReference>
<dbReference type="GO" id="GO:0034704">
    <property type="term" value="C:calcium channel complex"/>
    <property type="evidence" value="ECO:0000318"/>
    <property type="project" value="GO_Central"/>
</dbReference>
<dbReference type="GO" id="GO:0005938">
    <property type="term" value="C:cell cortex"/>
    <property type="evidence" value="ECO:0000314"/>
    <property type="project" value="UniProtKB"/>
</dbReference>
<dbReference type="GO" id="GO:0005737">
    <property type="term" value="C:cytoplasm"/>
    <property type="evidence" value="ECO:0000314"/>
    <property type="project" value="UniProtKB"/>
</dbReference>
<dbReference type="GO" id="GO:0070062">
    <property type="term" value="C:extracellular exosome"/>
    <property type="evidence" value="ECO:0007005"/>
    <property type="project" value="UniProtKB"/>
</dbReference>
<dbReference type="GO" id="GO:0031674">
    <property type="term" value="C:I band"/>
    <property type="evidence" value="ECO:0000314"/>
    <property type="project" value="UniProtKB"/>
</dbReference>
<dbReference type="GO" id="GO:0014701">
    <property type="term" value="C:junctional sarcoplasmic reticulum membrane"/>
    <property type="evidence" value="ECO:0000304"/>
    <property type="project" value="BHF-UCL"/>
</dbReference>
<dbReference type="GO" id="GO:0031090">
    <property type="term" value="C:organelle membrane"/>
    <property type="evidence" value="ECO:0000250"/>
    <property type="project" value="UniProtKB"/>
</dbReference>
<dbReference type="GO" id="GO:0005886">
    <property type="term" value="C:plasma membrane"/>
    <property type="evidence" value="ECO:0000314"/>
    <property type="project" value="UniProtKB"/>
</dbReference>
<dbReference type="GO" id="GO:1990425">
    <property type="term" value="C:ryanodine receptor complex"/>
    <property type="evidence" value="ECO:0000250"/>
    <property type="project" value="UniProtKB"/>
</dbReference>
<dbReference type="GO" id="GO:0042383">
    <property type="term" value="C:sarcolemma"/>
    <property type="evidence" value="ECO:0000318"/>
    <property type="project" value="GO_Central"/>
</dbReference>
<dbReference type="GO" id="GO:0016529">
    <property type="term" value="C:sarcoplasmic reticulum"/>
    <property type="evidence" value="ECO:0000250"/>
    <property type="project" value="BHF-UCL"/>
</dbReference>
<dbReference type="GO" id="GO:0033017">
    <property type="term" value="C:sarcoplasmic reticulum membrane"/>
    <property type="evidence" value="ECO:0000314"/>
    <property type="project" value="UniProtKB"/>
</dbReference>
<dbReference type="GO" id="GO:0005790">
    <property type="term" value="C:smooth endoplasmic reticulum"/>
    <property type="evidence" value="ECO:0000318"/>
    <property type="project" value="GO_Central"/>
</dbReference>
<dbReference type="GO" id="GO:0014802">
    <property type="term" value="C:terminal cisterna"/>
    <property type="evidence" value="ECO:0000250"/>
    <property type="project" value="UniProtKB"/>
</dbReference>
<dbReference type="GO" id="GO:0030018">
    <property type="term" value="C:Z disc"/>
    <property type="evidence" value="ECO:0000318"/>
    <property type="project" value="GO_Central"/>
</dbReference>
<dbReference type="GO" id="GO:0005524">
    <property type="term" value="F:ATP binding"/>
    <property type="evidence" value="ECO:0000250"/>
    <property type="project" value="UniProtKB"/>
</dbReference>
<dbReference type="GO" id="GO:0005262">
    <property type="term" value="F:calcium channel activity"/>
    <property type="evidence" value="ECO:0000250"/>
    <property type="project" value="UniProtKB"/>
</dbReference>
<dbReference type="GO" id="GO:0005509">
    <property type="term" value="F:calcium ion binding"/>
    <property type="evidence" value="ECO:0000250"/>
    <property type="project" value="UniProtKB"/>
</dbReference>
<dbReference type="GO" id="GO:0048763">
    <property type="term" value="F:calcium-induced calcium release activity"/>
    <property type="evidence" value="ECO:0000315"/>
    <property type="project" value="UniProtKB"/>
</dbReference>
<dbReference type="GO" id="GO:0005516">
    <property type="term" value="F:calmodulin binding"/>
    <property type="evidence" value="ECO:0000250"/>
    <property type="project" value="BHF-UCL"/>
</dbReference>
<dbReference type="GO" id="GO:0015278">
    <property type="term" value="F:intracellularly gated calcium channel activity"/>
    <property type="evidence" value="ECO:0000304"/>
    <property type="project" value="ProtInc"/>
</dbReference>
<dbReference type="GO" id="GO:0005219">
    <property type="term" value="F:ryanodine-sensitive calcium-release channel activity"/>
    <property type="evidence" value="ECO:0000314"/>
    <property type="project" value="UniProtKB"/>
</dbReference>
<dbReference type="GO" id="GO:0005245">
    <property type="term" value="F:voltage-gated calcium channel activity"/>
    <property type="evidence" value="ECO:0000250"/>
    <property type="project" value="UniProtKB"/>
</dbReference>
<dbReference type="GO" id="GO:0006816">
    <property type="term" value="P:calcium ion transport"/>
    <property type="evidence" value="ECO:0000250"/>
    <property type="project" value="BHF-UCL"/>
</dbReference>
<dbReference type="GO" id="GO:0071313">
    <property type="term" value="P:cellular response to caffeine"/>
    <property type="evidence" value="ECO:0000315"/>
    <property type="project" value="UniProtKB"/>
</dbReference>
<dbReference type="GO" id="GO:0071277">
    <property type="term" value="P:cellular response to calcium ion"/>
    <property type="evidence" value="ECO:0000250"/>
    <property type="project" value="UniProtKB"/>
</dbReference>
<dbReference type="GO" id="GO:0006936">
    <property type="term" value="P:muscle contraction"/>
    <property type="evidence" value="ECO:0000250"/>
    <property type="project" value="UniProtKB"/>
</dbReference>
<dbReference type="GO" id="GO:0043931">
    <property type="term" value="P:ossification involved in bone maturation"/>
    <property type="evidence" value="ECO:0000250"/>
    <property type="project" value="UniProtKB"/>
</dbReference>
<dbReference type="GO" id="GO:0003151">
    <property type="term" value="P:outflow tract morphogenesis"/>
    <property type="evidence" value="ECO:0000250"/>
    <property type="project" value="UniProtKB"/>
</dbReference>
<dbReference type="GO" id="GO:0051289">
    <property type="term" value="P:protein homotetramerization"/>
    <property type="evidence" value="ECO:0000250"/>
    <property type="project" value="UniProtKB"/>
</dbReference>
<dbReference type="GO" id="GO:0051480">
    <property type="term" value="P:regulation of cytosolic calcium ion concentration"/>
    <property type="evidence" value="ECO:0000250"/>
    <property type="project" value="BHF-UCL"/>
</dbReference>
<dbReference type="GO" id="GO:0051209">
    <property type="term" value="P:release of sequestered calcium ion into cytosol"/>
    <property type="evidence" value="ECO:0000314"/>
    <property type="project" value="UniProtKB"/>
</dbReference>
<dbReference type="GO" id="GO:0014808">
    <property type="term" value="P:release of sequestered calcium ion into cytosol by sarcoplasmic reticulum"/>
    <property type="evidence" value="ECO:0000250"/>
    <property type="project" value="UniProtKB"/>
</dbReference>
<dbReference type="GO" id="GO:0031000">
    <property type="term" value="P:response to caffeine"/>
    <property type="evidence" value="ECO:0000250"/>
    <property type="project" value="BHF-UCL"/>
</dbReference>
<dbReference type="GO" id="GO:0001666">
    <property type="term" value="P:response to hypoxia"/>
    <property type="evidence" value="ECO:0000314"/>
    <property type="project" value="BHF-UCL"/>
</dbReference>
<dbReference type="GO" id="GO:0048741">
    <property type="term" value="P:skeletal muscle fiber development"/>
    <property type="evidence" value="ECO:0000250"/>
    <property type="project" value="UniProtKB"/>
</dbReference>
<dbReference type="GO" id="GO:0043588">
    <property type="term" value="P:skin development"/>
    <property type="evidence" value="ECO:0000250"/>
    <property type="project" value="UniProtKB"/>
</dbReference>
<dbReference type="CDD" id="cd23290">
    <property type="entry name" value="beta-trefoil_MIR_RyR1"/>
    <property type="match status" value="1"/>
</dbReference>
<dbReference type="CDD" id="cd12877">
    <property type="entry name" value="SPRY1_RyR"/>
    <property type="match status" value="1"/>
</dbReference>
<dbReference type="CDD" id="cd12878">
    <property type="entry name" value="SPRY2_RyR"/>
    <property type="match status" value="1"/>
</dbReference>
<dbReference type="CDD" id="cd12879">
    <property type="entry name" value="SPRY3_RyR"/>
    <property type="match status" value="1"/>
</dbReference>
<dbReference type="FunFam" id="1.10.490.160:FF:000008">
    <property type="match status" value="1"/>
</dbReference>
<dbReference type="FunFam" id="2.60.120.920:FF:000019">
    <property type="entry name" value="Ryanodine receptor 1 (skeletal)"/>
    <property type="match status" value="1"/>
</dbReference>
<dbReference type="FunFam" id="2.80.10.50:FF:000009">
    <property type="entry name" value="Ryanodine receptor 1 (skeletal)"/>
    <property type="match status" value="1"/>
</dbReference>
<dbReference type="FunFam" id="1.10.490.160:FF:000001">
    <property type="entry name" value="Ryanodine receptor 2 (Cardiac)"/>
    <property type="match status" value="1"/>
</dbReference>
<dbReference type="FunFam" id="2.80.10.50:FF:000006">
    <property type="entry name" value="Ryanodine receptor 2 (Cardiac)"/>
    <property type="match status" value="1"/>
</dbReference>
<dbReference type="FunFam" id="1.10.287.70:FF:000017">
    <property type="entry name" value="ryanodine receptor isoform X2"/>
    <property type="match status" value="1"/>
</dbReference>
<dbReference type="FunFam" id="1.25.10.30:FF:000002">
    <property type="entry name" value="ryanodine receptor isoform X2"/>
    <property type="match status" value="1"/>
</dbReference>
<dbReference type="FunFam" id="2.60.120.920:FF:000002">
    <property type="entry name" value="ryanodine receptor isoform X2"/>
    <property type="match status" value="1"/>
</dbReference>
<dbReference type="FunFam" id="2.60.120.920:FF:000003">
    <property type="entry name" value="ryanodine receptor isoform X2"/>
    <property type="match status" value="1"/>
</dbReference>
<dbReference type="Gene3D" id="1.10.287.70">
    <property type="match status" value="1"/>
</dbReference>
<dbReference type="Gene3D" id="1.10.490.160">
    <property type="match status" value="2"/>
</dbReference>
<dbReference type="Gene3D" id="2.60.120.920">
    <property type="match status" value="3"/>
</dbReference>
<dbReference type="Gene3D" id="2.80.10.50">
    <property type="match status" value="2"/>
</dbReference>
<dbReference type="Gene3D" id="6.20.350.10">
    <property type="match status" value="1"/>
</dbReference>
<dbReference type="Gene3D" id="1.25.10.30">
    <property type="entry name" value="IP3 receptor type 1 binding core, RIH domain"/>
    <property type="match status" value="1"/>
</dbReference>
<dbReference type="InterPro" id="IPR001870">
    <property type="entry name" value="B30.2/SPRY"/>
</dbReference>
<dbReference type="InterPro" id="IPR043136">
    <property type="entry name" value="B30.2/SPRY_sf"/>
</dbReference>
<dbReference type="InterPro" id="IPR013320">
    <property type="entry name" value="ConA-like_dom_sf"/>
</dbReference>
<dbReference type="InterPro" id="IPR011992">
    <property type="entry name" value="EF-hand-dom_pair"/>
</dbReference>
<dbReference type="InterPro" id="IPR014821">
    <property type="entry name" value="Ins145_P3_rcpt"/>
</dbReference>
<dbReference type="InterPro" id="IPR005821">
    <property type="entry name" value="Ion_trans_dom"/>
</dbReference>
<dbReference type="InterPro" id="IPR036300">
    <property type="entry name" value="MIR_dom_sf"/>
</dbReference>
<dbReference type="InterPro" id="IPR016093">
    <property type="entry name" value="MIR_motif"/>
</dbReference>
<dbReference type="InterPro" id="IPR013662">
    <property type="entry name" value="RIH_assoc-dom"/>
</dbReference>
<dbReference type="InterPro" id="IPR000699">
    <property type="entry name" value="RIH_dom"/>
</dbReference>
<dbReference type="InterPro" id="IPR013333">
    <property type="entry name" value="Ryan_recept"/>
</dbReference>
<dbReference type="InterPro" id="IPR015925">
    <property type="entry name" value="Ryanodine_IP3_receptor"/>
</dbReference>
<dbReference type="InterPro" id="IPR003032">
    <property type="entry name" value="Ryanodine_rcpt"/>
</dbReference>
<dbReference type="InterPro" id="IPR009460">
    <property type="entry name" value="Ryanrecept_TM4-6"/>
</dbReference>
<dbReference type="InterPro" id="IPR048581">
    <property type="entry name" value="RYDR_Jsol"/>
</dbReference>
<dbReference type="InterPro" id="IPR035910">
    <property type="entry name" value="RyR/IP3R_RIH_dom_sf"/>
</dbReference>
<dbReference type="InterPro" id="IPR035761">
    <property type="entry name" value="SPRY1_RyR"/>
</dbReference>
<dbReference type="InterPro" id="IPR035764">
    <property type="entry name" value="SPRY2_RyR"/>
</dbReference>
<dbReference type="InterPro" id="IPR035762">
    <property type="entry name" value="SPRY3_RyR"/>
</dbReference>
<dbReference type="InterPro" id="IPR003877">
    <property type="entry name" value="SPRY_dom"/>
</dbReference>
<dbReference type="PANTHER" id="PTHR46399">
    <property type="entry name" value="B30.2/SPRY DOMAIN-CONTAINING PROTEIN"/>
    <property type="match status" value="1"/>
</dbReference>
<dbReference type="PANTHER" id="PTHR46399:SF10">
    <property type="entry name" value="RYANODINE RECEPTOR 1"/>
    <property type="match status" value="1"/>
</dbReference>
<dbReference type="Pfam" id="PF08709">
    <property type="entry name" value="Ins145_P3_rec"/>
    <property type="match status" value="1"/>
</dbReference>
<dbReference type="Pfam" id="PF00520">
    <property type="entry name" value="Ion_trans"/>
    <property type="match status" value="1"/>
</dbReference>
<dbReference type="Pfam" id="PF02815">
    <property type="entry name" value="MIR"/>
    <property type="match status" value="1"/>
</dbReference>
<dbReference type="Pfam" id="PF08454">
    <property type="entry name" value="RIH_assoc"/>
    <property type="match status" value="1"/>
</dbReference>
<dbReference type="Pfam" id="PF06459">
    <property type="entry name" value="RR_TM4-6"/>
    <property type="match status" value="1"/>
</dbReference>
<dbReference type="Pfam" id="PF01365">
    <property type="entry name" value="RYDR_ITPR"/>
    <property type="match status" value="2"/>
</dbReference>
<dbReference type="Pfam" id="PF21119">
    <property type="entry name" value="RYDR_Jsol"/>
    <property type="match status" value="1"/>
</dbReference>
<dbReference type="Pfam" id="PF02026">
    <property type="entry name" value="RyR"/>
    <property type="match status" value="4"/>
</dbReference>
<dbReference type="Pfam" id="PF00622">
    <property type="entry name" value="SPRY"/>
    <property type="match status" value="3"/>
</dbReference>
<dbReference type="PRINTS" id="PR00795">
    <property type="entry name" value="RYANODINER"/>
</dbReference>
<dbReference type="SMART" id="SM00472">
    <property type="entry name" value="MIR"/>
    <property type="match status" value="4"/>
</dbReference>
<dbReference type="SMART" id="SM00449">
    <property type="entry name" value="SPRY"/>
    <property type="match status" value="3"/>
</dbReference>
<dbReference type="SUPFAM" id="SSF49899">
    <property type="entry name" value="Concanavalin A-like lectins/glucanases"/>
    <property type="match status" value="2"/>
</dbReference>
<dbReference type="SUPFAM" id="SSF47473">
    <property type="entry name" value="EF-hand"/>
    <property type="match status" value="1"/>
</dbReference>
<dbReference type="SUPFAM" id="SSF100909">
    <property type="entry name" value="IP3 receptor type 1 binding core, domain 2"/>
    <property type="match status" value="2"/>
</dbReference>
<dbReference type="SUPFAM" id="SSF82109">
    <property type="entry name" value="MIR domain"/>
    <property type="match status" value="2"/>
</dbReference>
<dbReference type="PROSITE" id="PS50188">
    <property type="entry name" value="B302_SPRY"/>
    <property type="match status" value="3"/>
</dbReference>
<dbReference type="PROSITE" id="PS50919">
    <property type="entry name" value="MIR"/>
    <property type="match status" value="5"/>
</dbReference>
<feature type="chain" id="PRO_0000219358" description="Ryanodine receptor 1">
    <location>
        <begin position="1"/>
        <end position="5038"/>
    </location>
</feature>
<feature type="topological domain" description="Cytoplasmic" evidence="3">
    <location>
        <begin position="1"/>
        <end position="4559"/>
    </location>
</feature>
<feature type="transmembrane region" description="Helical; Name=1" evidence="3">
    <location>
        <begin position="4560"/>
        <end position="4580"/>
    </location>
</feature>
<feature type="topological domain" description="Lumenal" evidence="3">
    <location>
        <begin position="4581"/>
        <end position="4641"/>
    </location>
</feature>
<feature type="transmembrane region" description="Helical; Name=2" evidence="3">
    <location>
        <begin position="4642"/>
        <end position="4662"/>
    </location>
</feature>
<feature type="topological domain" description="Cytoplasmic" evidence="3">
    <location>
        <begin position="4663"/>
        <end position="4780"/>
    </location>
</feature>
<feature type="transmembrane region" description="Helical; Name=3" evidence="3">
    <location>
        <begin position="4781"/>
        <end position="4803"/>
    </location>
</feature>
<feature type="topological domain" description="Lumenal" evidence="3">
    <location>
        <position position="4804"/>
    </location>
</feature>
<feature type="transmembrane region" description="Helical; Name=4" evidence="3">
    <location>
        <begin position="4805"/>
        <end position="4821"/>
    </location>
</feature>
<feature type="topological domain" description="Cytoplasmic" evidence="3">
    <location>
        <begin position="4822"/>
        <end position="4836"/>
    </location>
</feature>
<feature type="transmembrane region" description="Helical; Name=5" evidence="3">
    <location>
        <begin position="4837"/>
        <end position="4857"/>
    </location>
</feature>
<feature type="topological domain" description="Lumenal" evidence="3">
    <location>
        <begin position="4858"/>
        <end position="4880"/>
    </location>
</feature>
<feature type="intramembrane region" description="Pore-forming" evidence="3">
    <location>
        <begin position="4881"/>
        <end position="4900"/>
    </location>
</feature>
<feature type="topological domain" description="Lumenal" evidence="3">
    <location>
        <begin position="4901"/>
        <end position="4920"/>
    </location>
</feature>
<feature type="transmembrane region" description="Helical; Name=6" evidence="3">
    <location>
        <begin position="4921"/>
        <end position="4941"/>
    </location>
</feature>
<feature type="topological domain" description="Cytoplasmic" evidence="3">
    <location>
        <begin position="4942"/>
        <end position="5038"/>
    </location>
</feature>
<feature type="domain" description="MIR 1" evidence="5">
    <location>
        <begin position="97"/>
        <end position="152"/>
    </location>
</feature>
<feature type="domain" description="MIR 2" evidence="5">
    <location>
        <begin position="159"/>
        <end position="204"/>
    </location>
</feature>
<feature type="domain" description="MIR 3" evidence="5">
    <location>
        <begin position="210"/>
        <end position="264"/>
    </location>
</feature>
<feature type="domain" description="MIR 4" evidence="5">
    <location>
        <begin position="270"/>
        <end position="327"/>
    </location>
</feature>
<feature type="domain" description="MIR 5" evidence="5">
    <location>
        <begin position="335"/>
        <end position="392"/>
    </location>
</feature>
<feature type="domain" description="B30.2/SPRY 1" evidence="7">
    <location>
        <begin position="581"/>
        <end position="797"/>
    </location>
</feature>
<feature type="repeat" description="1">
    <location>
        <begin position="841"/>
        <end position="954"/>
    </location>
</feature>
<feature type="repeat" description="2">
    <location>
        <begin position="955"/>
        <end position="1068"/>
    </location>
</feature>
<feature type="domain" description="B30.2/SPRY 2" evidence="7">
    <location>
        <begin position="1013"/>
        <end position="1208"/>
    </location>
</feature>
<feature type="repeat" description="3; truncated">
    <location>
        <begin position="1344"/>
        <end position="1359"/>
    </location>
</feature>
<feature type="domain" description="B30.2/SPRY 3" evidence="7">
    <location>
        <begin position="1356"/>
        <end position="1570"/>
    </location>
</feature>
<feature type="repeat" description="4; truncated">
    <location>
        <begin position="1372"/>
        <end position="1387"/>
    </location>
</feature>
<feature type="repeat" description="5">
    <location>
        <begin position="2726"/>
        <end position="2845"/>
    </location>
</feature>
<feature type="repeat" description="6">
    <location>
        <begin position="2846"/>
        <end position="2959"/>
    </location>
</feature>
<feature type="domain" description="EF-hand" evidence="6">
    <location>
        <begin position="4074"/>
        <end position="4102"/>
    </location>
</feature>
<feature type="region of interest" description="Interaction with FKBP1A" evidence="3">
    <location>
        <begin position="669"/>
        <end position="680"/>
    </location>
</feature>
<feature type="region of interest" description="6 X approximate repeats">
    <location>
        <begin position="841"/>
        <end position="2959"/>
    </location>
</feature>
<feature type="region of interest" description="Disordered" evidence="8">
    <location>
        <begin position="1307"/>
        <end position="1385"/>
    </location>
</feature>
<feature type="region of interest" description="Disordered" evidence="8">
    <location>
        <begin position="1867"/>
        <end position="1923"/>
    </location>
</feature>
<feature type="region of interest" description="Disordered" evidence="8">
    <location>
        <begin position="2391"/>
        <end position="2412"/>
    </location>
</feature>
<feature type="region of interest" description="Disordered" evidence="8">
    <location>
        <begin position="2828"/>
        <end position="2858"/>
    </location>
</feature>
<feature type="region of interest" description="Disordered" evidence="8">
    <location>
        <begin position="3478"/>
        <end position="3501"/>
    </location>
</feature>
<feature type="region of interest" description="Interaction with CALM" evidence="51">
    <location>
        <begin position="3614"/>
        <end position="3643"/>
    </location>
</feature>
<feature type="region of interest" description="Disordered" evidence="8">
    <location>
        <begin position="4251"/>
        <end position="4280"/>
    </location>
</feature>
<feature type="region of interest" description="Disordered" evidence="8">
    <location>
        <begin position="4382"/>
        <end position="4538"/>
    </location>
</feature>
<feature type="region of interest" description="Disordered" evidence="8">
    <location>
        <begin position="4589"/>
        <end position="4621"/>
    </location>
</feature>
<feature type="short sequence motif" description="Selectivity filter" evidence="3">
    <location>
        <begin position="4895"/>
        <end position="4901"/>
    </location>
</feature>
<feature type="compositionally biased region" description="Basic and acidic residues" evidence="8">
    <location>
        <begin position="1372"/>
        <end position="1382"/>
    </location>
</feature>
<feature type="compositionally biased region" description="Acidic residues" evidence="8">
    <location>
        <begin position="1870"/>
        <end position="1923"/>
    </location>
</feature>
<feature type="compositionally biased region" description="Acidic residues" evidence="8">
    <location>
        <begin position="4253"/>
        <end position="4264"/>
    </location>
</feature>
<feature type="compositionally biased region" description="Low complexity" evidence="8">
    <location>
        <begin position="4265"/>
        <end position="4280"/>
    </location>
</feature>
<feature type="compositionally biased region" description="Low complexity" evidence="8">
    <location>
        <begin position="4409"/>
        <end position="4418"/>
    </location>
</feature>
<feature type="compositionally biased region" description="Low complexity" evidence="8">
    <location>
        <begin position="4436"/>
        <end position="4445"/>
    </location>
</feature>
<feature type="compositionally biased region" description="Acidic residues" evidence="8">
    <location>
        <begin position="4482"/>
        <end position="4499"/>
    </location>
</feature>
<feature type="compositionally biased region" description="Basic and acidic residues" evidence="8">
    <location>
        <begin position="4500"/>
        <end position="4514"/>
    </location>
</feature>
<feature type="compositionally biased region" description="Pro residues" evidence="8">
    <location>
        <begin position="4516"/>
        <end position="4531"/>
    </location>
</feature>
<feature type="compositionally biased region" description="Gly residues" evidence="8">
    <location>
        <begin position="4602"/>
        <end position="4616"/>
    </location>
</feature>
<feature type="binding site" evidence="3">
    <location>
        <position position="3892"/>
    </location>
    <ligand>
        <name>Ca(2+)</name>
        <dbReference type="ChEBI" id="CHEBI:29108"/>
    </ligand>
</feature>
<feature type="binding site" evidence="3">
    <location>
        <position position="3966"/>
    </location>
    <ligand>
        <name>Ca(2+)</name>
        <dbReference type="ChEBI" id="CHEBI:29108"/>
    </ligand>
</feature>
<feature type="binding site" evidence="3">
    <location>
        <begin position="4210"/>
        <end position="4214"/>
    </location>
    <ligand>
        <name>ATP</name>
        <dbReference type="ChEBI" id="CHEBI:30616"/>
    </ligand>
</feature>
<feature type="binding site" evidence="3">
    <location>
        <position position="4717"/>
    </location>
    <ligand>
        <name>caffeine</name>
        <dbReference type="ChEBI" id="CHEBI:27732"/>
    </ligand>
</feature>
<feature type="binding site" evidence="3">
    <location>
        <begin position="4955"/>
        <end position="4960"/>
    </location>
    <ligand>
        <name>ATP</name>
        <dbReference type="ChEBI" id="CHEBI:30616"/>
    </ligand>
</feature>
<feature type="binding site" evidence="3">
    <location>
        <begin position="4980"/>
        <end position="4986"/>
    </location>
    <ligand>
        <name>ATP</name>
        <dbReference type="ChEBI" id="CHEBI:30616"/>
    </ligand>
</feature>
<feature type="binding site" evidence="3">
    <location>
        <position position="5002"/>
    </location>
    <ligand>
        <name>Ca(2+)</name>
        <dbReference type="ChEBI" id="CHEBI:29108"/>
    </ligand>
</feature>
<feature type="modified residue" description="Phosphoserine" evidence="2">
    <location>
        <position position="1337"/>
    </location>
</feature>
<feature type="modified residue" description="Phosphoserine" evidence="2">
    <location>
        <position position="2345"/>
    </location>
</feature>
<feature type="modified residue" description="Phosphoserine; by PKA and PKG" evidence="1">
    <location>
        <position position="2843"/>
    </location>
</feature>
<feature type="modified residue" description="S-nitrosocysteine" evidence="3">
    <location>
        <position position="3635"/>
    </location>
</feature>
<feature type="modified residue" description="Phosphothreonine" evidence="2">
    <location>
        <position position="4467"/>
    </location>
</feature>
<feature type="modified residue" description="Phosphoserine" evidence="2">
    <location>
        <position position="4471"/>
    </location>
</feature>
<feature type="modified residue" description="Phosphotyrosine" evidence="93">
    <location>
        <position position="4864"/>
    </location>
</feature>
<feature type="modified residue" description="Phosphoserine" evidence="93">
    <location>
        <position position="4867"/>
    </location>
</feature>
<feature type="splice variant" id="VSP_005951" description="In isoform 2." evidence="86">
    <location>
        <begin position="3481"/>
        <end position="3485"/>
    </location>
</feature>
<feature type="splice variant" id="VSP_005952" description="In isoform 3." evidence="87">
    <location>
        <begin position="3865"/>
        <end position="3869"/>
    </location>
</feature>
<feature type="sequence variant" id="VAR_058560" description="In MHS1; dbSNP:rs193922744." evidence="53">
    <original>L</original>
    <variation>R</variation>
    <location>
        <position position="13"/>
    </location>
</feature>
<feature type="sequence variant" id="VAR_045694" description="In CMYO1B." evidence="48">
    <original>L</original>
    <variation>V</variation>
    <location>
        <position position="13"/>
    </location>
</feature>
<feature type="sequence variant" id="VAR_086256" description="In KDS; dbSNP:rs193922746." evidence="52">
    <original>K</original>
    <variation>E</variation>
    <location>
        <position position="33"/>
    </location>
</feature>
<feature type="sequence variant" id="VAR_005589" description="In MHS1; increases calcium-induced calcium release activity; dbSNP:rs193922747." evidence="43 64 80">
    <original>C</original>
    <variation>R</variation>
    <location>
        <position position="35"/>
    </location>
</feature>
<feature type="sequence variant" id="VAR_071721" description="In MHS1; uncertain significance; dbSNP:rs2145320724." evidence="61">
    <original>G</original>
    <variation>A</variation>
    <location>
        <position position="40"/>
    </location>
</feature>
<feature type="sequence variant" id="VAR_045695" description="In MHS1; dbSNP:rs193922748." evidence="32">
    <original>R</original>
    <variation>C</variation>
    <location>
        <position position="44"/>
    </location>
</feature>
<feature type="sequence variant" id="VAR_032910" description="In CMYO1B; dbSNP:rs118192173." evidence="44">
    <original>R</original>
    <variation>W</variation>
    <location>
        <position position="109"/>
    </location>
</feature>
<feature type="sequence variant" id="VAR_045696" description="In CMYO1A; uncertain significance; dbSNP:rs193922752." evidence="40 59">
    <original>E</original>
    <variation>G</variation>
    <location>
        <position position="160"/>
    </location>
</feature>
<feature type="sequence variant" id="VAR_005590" description="In CMYO1A and MHS1; 2-3% of the cases; increases calcium-induced calcium release activity; dbSNP:rs118192161." evidence="19 23 28 29 42 61 64 78 89">
    <original>R</original>
    <variation>C</variation>
    <location>
        <position position="163"/>
    </location>
</feature>
<feature type="sequence variant" id="VAR_045697" description="In MHS1; induces an increase sensitivity to caffeine; increases calcium-induced calcium release activity; dbSNP:rs193922753." evidence="43 64">
    <original>R</original>
    <variation>L</variation>
    <location>
        <position position="163"/>
    </location>
</feature>
<feature type="sequence variant" id="VAR_045698" description="In MHS1; uncertain significance; dbSNP:rs193922754." evidence="43">
    <original>G</original>
    <variation>R</variation>
    <location>
        <position position="165"/>
    </location>
</feature>
<feature type="sequence variant" id="VAR_045699" description="In MHS1; uncertain significance; dbSNP:rs193922755." evidence="23 43">
    <original>D</original>
    <variation>N</variation>
    <location>
        <position position="166"/>
    </location>
</feature>
<feature type="sequence variant" id="VAR_045700" description="In MHS1; dbSNP:rs193922757." evidence="43">
    <original>R</original>
    <variation>C</variation>
    <location>
        <position position="177"/>
    </location>
</feature>
<feature type="sequence variant" id="VAR_045701" description="In MHS1; dbSNP:rs193922758." evidence="43">
    <original>Y</original>
    <variation>C</variation>
    <location>
        <position position="178"/>
    </location>
</feature>
<feature type="sequence variant" id="VAR_045702" description="In CMYO1B; dbSNP:rs118192115." evidence="35">
    <original>G</original>
    <variation>E</variation>
    <location>
        <position position="215"/>
    </location>
</feature>
<feature type="sequence variant" id="VAR_058561" description="In MHS1; uncertain significance; dbSNP:rs112596687." evidence="53">
    <original>M</original>
    <variation>K</variation>
    <location>
        <position position="226"/>
    </location>
</feature>
<feature type="sequence variant" id="VAR_045703" description="In MHS1; uncertain significance; dbSNP:rs193922760." evidence="43">
    <original>D</original>
    <variation>V</variation>
    <location>
        <position position="227"/>
    </location>
</feature>
<feature type="sequence variant" id="VAR_005591" description="In MHS1; increases calcium-induced calcium release activity; dbSNP:rs1801086." evidence="19 36 42 43 61 64">
    <original>G</original>
    <variation>R</variation>
    <location>
        <position position="248"/>
    </location>
</feature>
<feature type="sequence variant" id="VAR_051890" description="In dbSNP:rs2229140.">
    <original>A</original>
    <variation>T</variation>
    <location>
        <position position="291"/>
    </location>
</feature>
<feature type="sequence variant" id="VAR_045704" description="In MHS1; has increased sensitivity to both caffeine and halothane; dbSNP:rs193922762." evidence="34 43">
    <original>R</original>
    <variation>W</variation>
    <location>
        <position position="328"/>
    </location>
</feature>
<feature type="sequence variant" id="VAR_005592" description="In MHS1; 10% of the cases; increases calcium-induced calcium release activity; dbSNP:rs121918592." evidence="23 29 43 61 64 76">
    <original>G</original>
    <variation>R</variation>
    <location>
        <position position="341"/>
    </location>
</feature>
<feature type="sequence variant" id="VAR_058562" description="In MHS1; uncertain significance; dbSNP:rs113332073." evidence="53">
    <original>R</original>
    <variation>L</variation>
    <location>
        <position position="367"/>
    </location>
</feature>
<feature type="sequence variant" id="VAR_068510" description="In MHS1; uncertain significance; dbSNP:rs2145374470." evidence="55">
    <original>H</original>
    <variation>N</variation>
    <location>
        <position position="382"/>
    </location>
</feature>
<feature type="sequence variant" id="VAR_045705" description="In MHS1; increases calcium-induced calcium release activity; dbSNP:rs193922764." evidence="24 28 64">
    <original>R</original>
    <variation>C</variation>
    <location>
        <position position="401"/>
    </location>
</feature>
<feature type="sequence variant" id="VAR_045706" description="In MHS1; increases calcium-induced calcium release activity; dbSNP:rs193922766." evidence="23 43 64">
    <original>R</original>
    <variation>H</variation>
    <location>
        <position position="401"/>
    </location>
</feature>
<feature type="sequence variant" id="VAR_045707" description="In MHS1; uncertain significance; dbSNP:rs193922764." evidence="43">
    <original>R</original>
    <variation>S</variation>
    <location>
        <position position="401"/>
    </location>
</feature>
<feature type="sequence variant" id="VAR_063846" description="In CMYO1B; dbSNP:rs118192117." evidence="56">
    <original>M</original>
    <variation>T</variation>
    <location>
        <position position="402"/>
    </location>
</feature>
<feature type="sequence variant" id="VAR_005593" description="In MHS1 and CMYO1A; uncertain significance; dbSNP:rs118192116." evidence="43 78">
    <original>I</original>
    <variation>M</variation>
    <location>
        <position position="403"/>
    </location>
</feature>
<feature type="sequence variant" id="VAR_005594" description="In MHS1; uncertain significance; dbSNP:rs1376393998." evidence="36">
    <original>R</original>
    <variation>C</variation>
    <location>
        <position position="471"/>
    </location>
</feature>
<feature type="sequence variant" id="VAR_032911" description="In dbSNP:rs147723844." evidence="44">
    <original>M</original>
    <variation>V</variation>
    <location>
        <position position="485"/>
    </location>
</feature>
<feature type="sequence variant" id="VAR_071722" description="In MHS1; uncertain significance; dbSNP:rs1008860336." evidence="61">
    <original>L</original>
    <variation>P</variation>
    <location>
        <position position="487"/>
    </location>
</feature>
<feature type="sequence variant" id="VAR_071723" description="In MHS1; uncertain significance; dbSNP:rs1195513704." evidence="61">
    <original>V</original>
    <variation>A</variation>
    <location>
        <position position="518"/>
    </location>
</feature>
<feature type="sequence variant" id="VAR_005595" description="In CMYO1A and MHS1; increases calcium-induced calcium release activity; dbSNP:rs118192162." evidence="43 64 73">
    <original>Y</original>
    <variation>S</variation>
    <location>
        <position position="522"/>
    </location>
</feature>
<feature type="sequence variant" id="VAR_058563" description="In MHS1; dbSNP:rs111888148." evidence="53">
    <original>R</original>
    <variation>H</variation>
    <location>
        <position position="530"/>
    </location>
</feature>
<feature type="sequence variant" id="VAR_045708" description="In MHS1; dbSNP:rs193922768." evidence="32">
    <original>R</original>
    <variation>C</variation>
    <location>
        <position position="533"/>
    </location>
</feature>
<feature type="sequence variant" id="VAR_008971" description="In MHS1; uncertain significance; dbSNP:rs144336148." evidence="11">
    <original>R</original>
    <variation>H</variation>
    <location>
        <position position="533"/>
    </location>
</feature>
<feature type="sequence variant" id="VAR_058564" description="In MHS1; dbSNP:rs113812662." evidence="53">
    <original>D</original>
    <variation>Y</variation>
    <location>
        <position position="544"/>
    </location>
</feature>
<feature type="sequence variant" id="VAR_005596" description="In MHS1; dbSNP:rs193922770." evidence="43 81">
    <original>R</original>
    <variation>W</variation>
    <location>
        <position position="552"/>
    </location>
</feature>
<feature type="sequence variant" id="VAR_005597" description="In CMYO1A and MHS1; 3-5% of the cases; increases calcium-induced calcium release activity; dbSNP:rs118192172." evidence="19 23 29 35 40 42 43 47 61 64 72">
    <original>R</original>
    <variation>C</variation>
    <location>
        <position position="614"/>
    </location>
</feature>
<feature type="sequence variant" id="VAR_005598" description="In MHS1; increases calcium-induced calcium release activity; dbSNP:rs193922772." evidence="43 64 82">
    <original>R</original>
    <variation>L</variation>
    <location>
        <position position="614"/>
    </location>
</feature>
<feature type="sequence variant" id="VAR_078775" description="Found in primary myopathy causing fetal akinesia and pregnancy loss; likely pathogenic; dbSNP:rs565825739." evidence="69">
    <original>G</original>
    <variation>R</variation>
    <location>
        <position position="705"/>
    </location>
</feature>
<feature type="sequence variant" id="VAR_071724" description="In dbSNP:rs201401814." evidence="57">
    <original>N</original>
    <variation>K</variation>
    <location>
        <position position="899"/>
    </location>
</feature>
<feature type="sequence variant" id="VAR_071725" description="In dbSNP:rs748676912." evidence="61">
    <original>V</original>
    <variation>M</variation>
    <location>
        <position position="974"/>
    </location>
</feature>
<feature type="sequence variant" id="VAR_071726" description="In CMYO1A; uncertain significance; dbSNP:rs371278145." evidence="61">
    <original>R</original>
    <variation>W</variation>
    <location>
        <position position="975"/>
    </location>
</feature>
<feature type="sequence variant" id="VAR_058565" description="In MHS1; uncertain significance; dbSNP:rs111272095." evidence="53">
    <original>R</original>
    <variation>C</variation>
    <location>
        <position position="1043"/>
    </location>
</feature>
<feature type="sequence variant" id="VAR_071727" description="In MHS1; uncertain significance; dbSNP:rs374776563." evidence="61">
    <original>R</original>
    <variation>H</variation>
    <location>
        <position position="1043"/>
    </location>
</feature>
<feature type="sequence variant" id="VAR_071728" description="In MHS1; dbSNP:rs2145447772." evidence="62">
    <original>D</original>
    <variation>H</variation>
    <location>
        <position position="1056"/>
    </location>
</feature>
<feature type="sequence variant" id="VAR_071729" description="In MHS1; uncertain significance; dbSNP:rs2145447772." evidence="57">
    <original>D</original>
    <variation>N</variation>
    <location>
        <position position="1056"/>
    </location>
</feature>
<feature type="sequence variant" id="VAR_068511" description="In MHS1; uncertain significance; dbSNP:rs1968107192." evidence="55">
    <original>E</original>
    <variation>K</variation>
    <location>
        <position position="1058"/>
    </location>
</feature>
<feature type="sequence variant" id="VAR_068512" description="Found in a family with Samaritan myopathy; likely pathogenic." evidence="60">
    <original>Y</original>
    <variation>C</variation>
    <location>
        <position position="1088"/>
    </location>
</feature>
<feature type="sequence variant" id="VAR_032912" description="In dbSNP:rs35719391.">
    <original>R</original>
    <variation>K</variation>
    <location>
        <position position="1109"/>
    </location>
</feature>
<feature type="sequence variant" id="VAR_071730" evidence="61">
    <original>R</original>
    <variation>L</variation>
    <location>
        <position position="1109"/>
    </location>
</feature>
<feature type="sequence variant" id="VAR_071731" description="In MHS1; dbSNP:rs545579559." evidence="57">
    <original>R</original>
    <variation>H</variation>
    <location>
        <position position="1127"/>
    </location>
</feature>
<feature type="sequence variant" id="VAR_032913" description="In dbSNP:rs34694816." evidence="53">
    <original>S</original>
    <variation>G</variation>
    <location>
        <position position="1342"/>
    </location>
</feature>
<feature type="sequence variant" id="VAR_058566" description="In MHS1; benign; dbSNP:rs112105381." evidence="53">
    <original>A</original>
    <variation>G</variation>
    <location>
        <position position="1352"/>
    </location>
</feature>
<feature type="sequence variant" id="VAR_068513" description="In MHS1; benign; dbSNP:rs137933390." evidence="55 61">
    <original>K</original>
    <variation>R</variation>
    <location>
        <position position="1393"/>
    </location>
</feature>
<feature type="sequence variant" id="VAR_071732" description="In MHS1; uncertain significance; dbSNP:rs145573319." evidence="57">
    <original>K</original>
    <variation>R</variation>
    <location>
        <position position="1467"/>
    </location>
</feature>
<feature type="sequence variant" id="VAR_032914" description="In dbSNP:rs34404839.">
    <original>S</original>
    <variation>N</variation>
    <location>
        <position position="1489"/>
    </location>
</feature>
<feature type="sequence variant" id="VAR_071733" description="In MHS1; likely benign; dbSNP:rs146429605." evidence="57">
    <original>I</original>
    <variation>V</variation>
    <location>
        <position position="1571"/>
    </location>
</feature>
<feature type="sequence variant" id="VAR_068514" description="In MHS1; likely benign; dbSNP:rs146504767." evidence="55">
    <original>R</original>
    <variation>H</variation>
    <location>
        <position position="1679"/>
    </location>
</feature>
<feature type="sequence variant" id="VAR_045709" description="In CMYO1B; dbSNP:rs193922779." evidence="48">
    <original>G</original>
    <variation>S</variation>
    <location>
        <position position="1704"/>
    </location>
</feature>
<feature type="sequence variant" id="VAR_005599" description="In MHS1; benign; dbSNP:rs34934920." evidence="36 53 59 61">
    <original>P</original>
    <variation>L</variation>
    <location>
        <position position="1787"/>
    </location>
</feature>
<feature type="sequence variant" id="VAR_045710" description="In dbSNP:rs193922784." evidence="22 53 79">
    <original>G</original>
    <variation>A</variation>
    <location>
        <position position="1832"/>
    </location>
</feature>
<feature type="sequence variant" id="VAR_071734" description="In MHS1; uncertain significance; dbSNP:rs2145564171." evidence="57">
    <original>K</original>
    <variation>Q</variation>
    <location>
        <position position="2013"/>
    </location>
</feature>
<feature type="sequence variant" id="VAR_063847" description="In CMYO1B; dbSNP:rs367543056." evidence="56">
    <original>H</original>
    <variation>L</variation>
    <location>
        <position position="2035"/>
    </location>
</feature>
<feature type="sequence variant" id="VAR_005600" description="In dbSNP:rs35364374." evidence="36 44 53 57 59 61">
    <original>G</original>
    <variation>C</variation>
    <location>
        <position position="2060"/>
    </location>
</feature>
<feature type="sequence variant" id="VAR_045711" description="In MHS1; uncertain significance; dbSNP:rs746818096." evidence="32">
    <original>M</original>
    <variation>K</variation>
    <location>
        <position position="2101"/>
    </location>
</feature>
<feature type="sequence variant" id="VAR_045712" description="In MHS1; dbSNP:rs193922788." evidence="32">
    <original>V</original>
    <variation>L</variation>
    <location>
        <position position="2117"/>
    </location>
</feature>
<feature type="sequence variant" id="VAR_045713" description="In MHS1; dbSNP:rs117886618." evidence="16 23">
    <original>D</original>
    <variation>E</variation>
    <location>
        <position position="2129"/>
    </location>
</feature>
<feature type="sequence variant" id="VAR_005601" description="In MHS1; increases calcium-induced calcium release activity; dbSNP:rs118192175." evidence="42 43 84 91">
    <original>R</original>
    <variation>C</variation>
    <location>
        <position position="2163"/>
    </location>
</feature>
<feature type="sequence variant" id="VAR_005602" description="In CMYO1A and MHS1; increases calcium-induced calcium release activity; dbSNP:rs118192163." evidence="28 43 61 84 91">
    <original>R</original>
    <variation>H</variation>
    <location>
        <position position="2163"/>
    </location>
</feature>
<feature type="sequence variant" id="VAR_008972" description="In MHS1; dbSNP:rs118192163." evidence="32">
    <original>R</original>
    <variation>P</variation>
    <location>
        <position position="2163"/>
    </location>
</feature>
<feature type="sequence variant" id="VAR_005603" description="In CMYO1A and MHS1; no difference in the thapsigargin-sensitive calcium stores of cells carrying this mutation and the wild-type; increases calcium-induced calcium release activity; dbSNP:rs118192176." evidence="19 20 21 23 32 42 43 61 84 91">
    <original>V</original>
    <variation>M</variation>
    <location>
        <position position="2168"/>
    </location>
</feature>
<feature type="sequence variant" id="VAR_090156" description="In MHS1; uncertain significance; dbSNP:rs193922790." evidence="37">
    <original>I</original>
    <variation>F</variation>
    <location>
        <position position="2182"/>
    </location>
</feature>
<feature type="sequence variant" id="VAR_068515" description="In CMYO1A; dbSNP:rs141646642." evidence="59">
    <original>H</original>
    <variation>Q</variation>
    <location>
        <position position="2204"/>
    </location>
</feature>
<feature type="sequence variant" id="VAR_005604" description="In MHS1; induces an increase sensitivity to caffeine; dbSNP:rs118192177." evidence="19 23 28 42 61 84 89 91">
    <original>T</original>
    <variation>M</variation>
    <location>
        <position position="2206"/>
    </location>
</feature>
<feature type="sequence variant" id="VAR_008973" description="In MHS1 and KDS; dbSNP:rs118192177." evidence="11 43 58">
    <original>T</original>
    <variation>R</variation>
    <location>
        <position position="2206"/>
    </location>
</feature>
<feature type="sequence variant" id="VAR_045714" description="In MHS1; uncertain significance; dbSNP:rs193922795." evidence="19 42">
    <original>V</original>
    <variation>I</variation>
    <location>
        <position position="2214"/>
    </location>
</feature>
<feature type="sequence variant" id="VAR_071735" description="In MHS1; uncertain significance; dbSNP:rs763352221." evidence="57">
    <original>R</original>
    <variation>C</variation>
    <location>
        <position position="2248"/>
    </location>
</feature>
<feature type="sequence variant" id="VAR_071736" description="In MHS1; uncertain significance; dbSNP:rs140152019." evidence="61">
    <original>R</original>
    <variation>H</variation>
    <location>
        <position position="2248"/>
    </location>
</feature>
<feature type="sequence variant" id="VAR_045715" description="In MHS1; dbSNP:rs193922797." evidence="28">
    <original>V</original>
    <variation>I</variation>
    <location>
        <position position="2280"/>
    </location>
</feature>
<feature type="sequence variant" id="VAR_058567" description="In dbSNP:rs34390345." evidence="53 61">
    <original>I</original>
    <variation>V</variation>
    <location>
        <position position="2321"/>
    </location>
</feature>
<feature type="sequence variant" id="VAR_058568" description="In MHS1; dbSNP:rs112563513." evidence="53">
    <original>R</original>
    <variation>H</variation>
    <location>
        <position position="2336"/>
    </location>
</feature>
<feature type="sequence variant" id="VAR_045716" description="In MHS1; likely benign; dbSNP:rs147213895." evidence="41">
    <original>N</original>
    <variation>S</variation>
    <location>
        <position position="2342"/>
    </location>
</feature>
<feature type="sequence variant" id="VAR_045717" description="In MHS1; uncertain significance; dbSNP:rs193922798." evidence="43">
    <original>E</original>
    <variation>D</variation>
    <location>
        <position position="2344"/>
    </location>
</feature>
<feature type="sequence variant" id="VAR_045718" description="In MHS1; uncertain significance; dbSNP:rs193922799." evidence="40 43">
    <original>V</original>
    <variation>M</variation>
    <location>
        <position position="2346"/>
    </location>
</feature>
<feature type="sequence variant" id="VAR_045719" description="In MHS1." evidence="17">
    <location>
        <position position="2347"/>
    </location>
</feature>
<feature type="sequence variant" id="VAR_045720" description="In MHS1; dbSNP:rs193922801." evidence="40">
    <original>E</original>
    <variation>G</variation>
    <location>
        <position position="2348"/>
    </location>
</feature>
<feature type="sequence variant" id="VAR_045721" description="In MHS1; reveals an altered calcium dependence and increased caffeine sensitivity; increases calcium-induced calcium release activity; dbSNP:rs193922802." evidence="18 42 43 91">
    <original>A</original>
    <variation>T</variation>
    <location>
        <position position="2350"/>
    </location>
</feature>
<feature type="sequence variant" id="VAR_071738" description="In MHS1; uncertain significance; dbSNP:rs376176332." evidence="61">
    <original>N</original>
    <variation>H</variation>
    <location>
        <position position="2351"/>
    </location>
</feature>
<feature type="sequence variant" id="VAR_071739" description="In MHS1; dbSNP:rs746971794." evidence="61">
    <original>V</original>
    <variation>M</variation>
    <location>
        <position position="2354"/>
    </location>
</feature>
<feature type="sequence variant" id="VAR_045722" description="In MHS1." evidence="26">
    <original>R</original>
    <variation>C</variation>
    <location>
        <position position="2355"/>
    </location>
</feature>
<feature type="sequence variant" id="VAR_071740" description="In MHS1; uncertain significance; dbSNP:rs759306349." evidence="61">
    <original>I</original>
    <variation>L</variation>
    <location>
        <position position="2358"/>
    </location>
</feature>
<feature type="sequence variant" id="VAR_045723" description="In MHS1; uncertain significance; dbSNP:rs146306934." evidence="19 42">
    <original>A</original>
    <variation>T</variation>
    <location>
        <position position="2367"/>
    </location>
</feature>
<feature type="sequence variant" id="VAR_077682" description="In MHS1; increases calcium-induced calcium release activity; dbSNP:rs193922807." evidence="37 68">
    <original>G</original>
    <variation>A</variation>
    <location>
        <position position="2375"/>
    </location>
</feature>
<feature type="sequence variant" id="VAR_071741" description="In MHS1; uncertain significance; requires 2 nucleotide substitutions." evidence="61">
    <original>A</original>
    <variation>Q</variation>
    <location>
        <position position="2383"/>
    </location>
</feature>
<feature type="sequence variant" id="VAR_071742" description="In MHS1; uncertain significance; dbSNP:rs976108591." evidence="57">
    <original>D</original>
    <variation>G</variation>
    <location>
        <position position="2400"/>
    </location>
</feature>
<feature type="sequence variant" id="VAR_058569" description="In MHS1; uncertain significance; dbSNP:rs111364296." evidence="53">
    <original>E</original>
    <variation>K</variation>
    <location>
        <position position="2404"/>
    </location>
</feature>
<feature type="sequence variant" id="VAR_045724" description="In CMYO1B; dbSNP:rs193922808." evidence="48">
    <original>A</original>
    <variation>P</variation>
    <location>
        <position position="2421"/>
    </location>
</feature>
<feature type="sequence variant" id="VAR_032915" description="In CMYO1B; dbSNP:rs118192174." evidence="44 48">
    <original>M</original>
    <variation>K</variation>
    <location>
        <position position="2423"/>
    </location>
</feature>
<feature type="sequence variant" id="VAR_045725" description="In MHS1; induces an increase sensitivity to caffeine; dbSNP:rs193922809." evidence="23 89">
    <original>A</original>
    <variation>T</variation>
    <location>
        <position position="2428"/>
    </location>
</feature>
<feature type="sequence variant" id="VAR_045726" description="In MHS1; dbSNP:rs193922810." evidence="19 42">
    <original>D</original>
    <variation>N</variation>
    <location>
        <position position="2431"/>
    </location>
</feature>
<feature type="sequence variant" id="VAR_005605" description="In MHS1; increases calcium-induced calcium release activity; dbSNP:rs121918593." evidence="19 23 28 42 43 61 74 75 91">
    <original>G</original>
    <variation>R</variation>
    <location>
        <position position="2434"/>
    </location>
</feature>
<feature type="sequence variant" id="VAR_005606" description="In CMYO1A and MHS1; increases calcium-induced calcium release activity; dbSNP:rs28933396." evidence="23 43 77 91">
    <original>R</original>
    <variation>H</variation>
    <location>
        <position position="2435"/>
    </location>
</feature>
<feature type="sequence variant" id="VAR_008974" description="In MHS1; dbSNP:rs28933396." evidence="9 28 32">
    <original>R</original>
    <variation>L</variation>
    <location>
        <position position="2435"/>
    </location>
</feature>
<feature type="sequence variant" id="VAR_045727" description="In MHS1; dbSNP:rs193922812." evidence="42">
    <original>A</original>
    <variation>V</variation>
    <location>
        <position position="2437"/>
    </location>
</feature>
<feature type="sequence variant" id="VAR_045728" description="In MHS1 and KDS; dbSNP:rs118192124." evidence="13 23 40 58">
    <original>R</original>
    <variation>W</variation>
    <location>
        <position position="2452"/>
    </location>
</feature>
<feature type="sequence variant" id="VAR_008975" description="In MHS1; induces an increase sensitivity to caffeine; increases calcium-induced calcium release activity; dbSNP:rs193922816." evidence="12 29 89 91">
    <original>R</original>
    <variation>C</variation>
    <location>
        <position position="2454"/>
    </location>
</feature>
<feature type="sequence variant" id="VAR_008976" description="In MHS1; severe form; increases calcium-induced calcium release activity; dbSNP:rs118192122." evidence="9 13 19 23 32 42 61 89 91">
    <original>R</original>
    <variation>H</variation>
    <location>
        <position position="2454"/>
    </location>
</feature>
<feature type="sequence variant" id="VAR_008977" description="In MHS1; dbSNP:rs28933397." evidence="28 43 83 91">
    <original>R</original>
    <variation>C</variation>
    <location>
        <position position="2458"/>
    </location>
</feature>
<feature type="sequence variant" id="VAR_008978" description="In MHS1; dbSNP:rs121918594." evidence="40 83 91">
    <original>R</original>
    <variation>H</variation>
    <location>
        <position position="2458"/>
    </location>
</feature>
<feature type="sequence variant" id="VAR_075399" description="In MHS1, CMYO1A and KDS; increases sensitivity to caffeine and 4-chloro-m-cresol; increases calcium-induced calcium release activity; dbSNP:rs118192178." evidence="54 70 91">
    <original>R</original>
    <variation>C</variation>
    <location>
        <position position="2508"/>
    </location>
</feature>
<feature type="sequence variant" id="VAR_068516" description="In CMYO1A; uncertain significance; increases sensitivity to caffeine and 4-chloro-m-cresol; dbSNP:rs118192178." evidence="55 65">
    <original>R</original>
    <variation>G</variation>
    <location>
        <position position="2508"/>
    </location>
</feature>
<feature type="sequence variant" id="VAR_077683" description="In MHS1; increases sensitivity to caffeine and 4-chloro-m-cresol; increases calcium-induced calcium release activity; dbSNP:rs193922818." evidence="65 91">
    <original>R</original>
    <variation>H</variation>
    <location>
        <position position="2508"/>
    </location>
</feature>
<feature type="sequence variant" id="VAR_051891" description="In dbSNP:rs2071088.">
    <original>V</original>
    <variation>I</variation>
    <location>
        <position position="2509"/>
    </location>
</feature>
<feature type="sequence variant" id="VAR_058570" description="In dbSNP:rs193922821." evidence="36 53 79">
    <original>L</original>
    <variation>V</variation>
    <location>
        <position position="2550"/>
    </location>
</feature>
<feature type="sequence variant" id="VAR_071743" description="In MHS1; uncertain significance; dbSNP:rs756685891." evidence="57">
    <original>R</original>
    <variation>G</variation>
    <location>
        <position position="2593"/>
    </location>
</feature>
<feature type="sequence variant" id="VAR_071744" description="In MHS1; uncertain significance; dbSNP:rs914804033." evidence="62">
    <original>V</original>
    <variation>M</variation>
    <location>
        <position position="2627"/>
    </location>
</feature>
<feature type="sequence variant" id="VAR_045729" description="In MHS1; associated in cis with S-2787; dbSNP:rs193922826." evidence="39 43 53">
    <original>R</original>
    <variation>W</variation>
    <location>
        <position position="2676"/>
    </location>
</feature>
<feature type="sequence variant" id="VAR_058571" description="In MHS1; uncertain significance; dbSNP:rs112196644." evidence="53">
    <original>D</original>
    <variation>G</variation>
    <location>
        <position position="2730"/>
    </location>
</feature>
<feature type="sequence variant" id="VAR_086257" description="In KDS; likely benign; dbSNP:rs147707463." evidence="58">
    <original>S</original>
    <variation>F</variation>
    <location>
        <position position="2776"/>
    </location>
</feature>
<feature type="sequence variant" id="VAR_051892" description="In dbSNP:rs2915952.">
    <original>E</original>
    <variation>K</variation>
    <location>
        <position position="2779"/>
    </location>
</feature>
<feature type="sequence variant" id="VAR_045730" description="In MHS1; associated in cis with W-2676; dbSNP:rs35180584." evidence="39 43 53">
    <original>T</original>
    <variation>S</variation>
    <location>
        <position position="2787"/>
    </location>
</feature>
<feature type="sequence variant" id="VAR_058572" description="In MHS1; uncertain significance; dbSNP:rs112772310." evidence="53">
    <original>E</original>
    <variation>K</variation>
    <location>
        <position position="2880"/>
    </location>
</feature>
<feature type="sequence variant" id="VAR_076568" description="In CMYO1A; dbSNP:rs756870293." evidence="67">
    <original>L</original>
    <variation>P</variation>
    <location>
        <position position="2963"/>
    </location>
</feature>
<feature type="sequence variant" id="VAR_071745" description="In MHS1; uncertain significance; dbSNP:rs2145643832." evidence="57">
    <original>H</original>
    <variation>Y</variation>
    <location>
        <position position="2976"/>
    </location>
</feature>
<feature type="sequence variant" id="VAR_045731" description="In dbSNP:rs2915960.">
    <original>A</original>
    <variation>V</variation>
    <location>
        <position position="3118"/>
    </location>
</feature>
<feature type="sequence variant" id="VAR_058573" description="In MHS1; uncertain significance; dbSNP:rs113422327." evidence="53">
    <original>S</original>
    <variation>P</variation>
    <location>
        <position position="3217"/>
    </location>
</feature>
<feature type="sequence variant" id="VAR_071746" description="In CMYO1A; uncertain significance; dbSNP:rs200950673." evidence="61">
    <original>E</original>
    <variation>G</variation>
    <location>
        <position position="3238"/>
    </location>
</feature>
<feature type="sequence variant" id="VAR_058574" description="In MHS1; uncertain significance; dbSNP:rs112151058." evidence="53">
    <original>E</original>
    <variation>K</variation>
    <location>
        <position position="3290"/>
    </location>
</feature>
<feature type="sequence variant" id="VAR_063848" description="In CMYO1B; dbSNP:rs367543057." evidence="56">
    <original>N</original>
    <variation>K</variation>
    <location>
        <position position="3326"/>
    </location>
</feature>
<feature type="sequence variant" id="VAR_071747" evidence="57">
    <original>P</original>
    <variation>Q</variation>
    <location>
        <position position="3360"/>
    </location>
</feature>
<feature type="sequence variant" id="VAR_068517" description="In CMYO1A; uncertain significance; dbSNP:rs137932199." evidence="59">
    <original>R</original>
    <variation>H</variation>
    <location>
        <position position="3366"/>
    </location>
</feature>
<feature type="sequence variant" id="VAR_063849" description="In CMYO1B; dbSNP:rs367543058." evidence="56">
    <original>C</original>
    <variation>G</variation>
    <location>
        <position position="3402"/>
    </location>
</feature>
<feature type="sequence variant" id="VAR_071748" description="In MHS1; uncertain significance; dbSNP:rs769196275." evidence="57">
    <original>P</original>
    <variation>Q</variation>
    <location>
        <position position="3410"/>
    </location>
</feature>
<feature type="sequence variant" id="VAR_071749" description="In MHS1; dbSNP:rs763259167." evidence="57">
    <original>D</original>
    <variation>Y</variation>
    <location>
        <position position="3501"/>
    </location>
</feature>
<feature type="sequence variant" id="VAR_045732" description="In CMYO1B; dbSNP:rs118192164." evidence="25">
    <original>P</original>
    <variation>S</variation>
    <location>
        <position position="3527"/>
    </location>
</feature>
<feature type="sequence variant" id="VAR_045733" description="In CMYO1B; likely benign; dbSNP:rs143987857." evidence="48">
    <original>R</original>
    <variation>H</variation>
    <location>
        <position position="3539"/>
    </location>
</feature>
<feature type="sequence variant" id="VAR_058575" description="In dbSNP:rs55876273." evidence="53">
    <original>E</original>
    <variation>Q</variation>
    <location>
        <position position="3583"/>
    </location>
</feature>
<feature type="sequence variant" id="VAR_071750" description="In MHS1; uncertain significance; dbSNP:rs375915752." evidence="61">
    <original>T</original>
    <variation>R</variation>
    <location>
        <position position="3711"/>
    </location>
</feature>
<feature type="sequence variant" id="VAR_032916" description="In dbSNP:rs4802584." evidence="22 53">
    <original>Q</original>
    <variation>E</variation>
    <location>
        <position position="3756"/>
    </location>
</feature>
<feature type="sequence variant" id="VAR_045734" description="In CMYO1B; dbSNP:rs193922839." evidence="48">
    <original>R</original>
    <variation>Q</variation>
    <location>
        <position position="3772"/>
    </location>
</feature>
<feature type="sequence variant" id="VAR_058576" description="In MHS1; uncertain significance; dbSNP:rs763112609." evidence="53">
    <original>R</original>
    <variation>W</variation>
    <location>
        <position position="3772"/>
    </location>
</feature>
<feature type="sequence variant" id="VAR_058577" description="In MHS1; uncertain significance; dbSNP:rs111565359." evidence="53">
    <original>G</original>
    <variation>R</variation>
    <location>
        <position position="3806"/>
    </location>
</feature>
<feature type="sequence variant" id="VAR_045735" description="In MHS1; uncertain significance; dbSNP:rs193922840." evidence="29 43">
    <original>I</original>
    <variation>M</variation>
    <location>
        <position position="3916"/>
    </location>
</feature>
<feature type="sequence variant" id="VAR_068518" description="In CMYO1A and MHS1; dbSNP:rs147136339." evidence="57 59">
    <original>Y</original>
    <variation>C</variation>
    <location>
        <position position="3933"/>
    </location>
</feature>
<feature type="sequence variant" id="VAR_045736" description="In MHS1; likely benign; dbSNP:rs193922849." evidence="28">
    <original>R</original>
    <variation>S</variation>
    <location>
        <position position="4136"/>
    </location>
</feature>
<feature type="sequence variant" id="VAR_071751" description="In MHS1; uncertain significance; dbSNP:rs1568576165." evidence="61">
    <original>G</original>
    <variation>V</variation>
    <location>
        <position position="4178"/>
    </location>
</feature>
<feature type="sequence variant" id="VAR_045737" description="In CMYO1A." evidence="20">
    <location>
        <begin position="4214"/>
        <end position="4216"/>
    </location>
</feature>
<feature type="sequence variant" id="VAR_071752" description="In MHS1; uncertain significance; dbSNP:rs1568581848." evidence="61">
    <original>M</original>
    <variation>R</variation>
    <location>
        <position position="4230"/>
    </location>
</feature>
<feature type="sequence variant" id="VAR_045738" description="In MHS1; dbSNP:rs193922852." evidence="28 62">
    <original>V</original>
    <variation>L</variation>
    <location>
        <position position="4234"/>
    </location>
</feature>
<feature type="sequence variant" id="VAR_068519" description="In dbSNP:rs149455643." evidence="59">
    <original>P</original>
    <variation>A</variation>
    <location>
        <position position="4493"/>
    </location>
</feature>
<feature type="sequence variant" id="VAR_058578" description="In MHS1; benign; dbSNP:rs73933023." evidence="53">
    <original>P</original>
    <variation>L</variation>
    <location>
        <position position="4501"/>
    </location>
</feature>
<feature type="sequence variant" id="VAR_045739" description="In CMYO1B; uncertain significance; dbSNP:rs118192130." evidence="46 48">
    <original>R</original>
    <variation>Q</variation>
    <location>
        <position position="4558"/>
    </location>
</feature>
<feature type="sequence variant" id="VAR_045740" description="In CMYO1A; dbSNP:rs118192166." evidence="15">
    <original>T</original>
    <variation>A</variation>
    <location>
        <position position="4637"/>
    </location>
</feature>
<feature type="sequence variant" id="VAR_045741" description="In core/rod disease; dbSNP:rs118192134." evidence="30">
    <original>T</original>
    <variation>I</variation>
    <location>
        <position position="4637"/>
    </location>
</feature>
<feature type="sequence variant" id="VAR_045742" description="In CMYO1A; uncertain significance; dbSNP:rs118192135." evidence="30 40">
    <original>G</original>
    <variation>D</variation>
    <location>
        <position position="4638"/>
    </location>
</feature>
<feature type="sequence variant" id="VAR_045743" description="In CMYO1A." evidence="20">
    <location>
        <begin position="4647"/>
        <end position="4648"/>
    </location>
</feature>
<feature type="sequence variant" id="VAR_045744" description="In CMYO1B; dbSNP:rs118192138." evidence="35">
    <original>L</original>
    <variation>P</variation>
    <location>
        <position position="4650"/>
    </location>
</feature>
<feature type="sequence variant" id="VAR_045745" description="In CMYO1A; dbSNP:rs118192139." evidence="30">
    <original>H</original>
    <variation>P</variation>
    <location>
        <position position="4651"/>
    </location>
</feature>
<feature type="sequence variant" id="VAR_045746" description="In MHS1; uncertain significance; dbSNP:rs193922863." evidence="22">
    <original>P</original>
    <variation>S</variation>
    <location>
        <position position="4668"/>
    </location>
</feature>
<feature type="sequence variant" id="VAR_045747" description="In MHS1; uncertain significance; dbSNP:rs193922864." evidence="43">
    <original>F</original>
    <variation>S</variation>
    <location>
        <position position="4684"/>
    </location>
</feature>
<feature type="sequence variant" id="VAR_045748" description="In CMYO1B; dbSNP:rs118192141." evidence="35">
    <original>K</original>
    <variation>Q</variation>
    <location>
        <position position="4724"/>
    </location>
</feature>
<feature type="sequence variant" id="VAR_045749" description="In MHS1; dbSNP:rs193922868." evidence="43">
    <original>R</original>
    <variation>Q</variation>
    <location>
        <position position="4737"/>
    </location>
</feature>
<feature type="sequence variant" id="VAR_045750" description="In MHS1; slightly increases Ca(2+) release in response to 4-chloro-m-cresol; dbSNP:rs193922867." evidence="28 43 66">
    <original>R</original>
    <variation>W</variation>
    <location>
        <position position="4737"/>
    </location>
</feature>
<feature type="sequence variant" id="VAR_068520" description="In CMYO1A; dbSNP:rs193922869." evidence="59">
    <original>G</original>
    <variation>D</variation>
    <location>
        <position position="4743"/>
    </location>
</feature>
<feature type="sequence variant" id="VAR_045751" description="In CMYO1A; dbSNP:rs118192179." evidence="20">
    <original>L</original>
    <variation>P</variation>
    <location>
        <position position="4793"/>
    </location>
</feature>
<feature type="sequence variant" id="VAR_045752" description="In CMYO1A; uncertain significance; dbSNP:rs118192167." evidence="20">
    <original>Y</original>
    <variation>C</variation>
    <location>
        <position position="4796"/>
    </location>
</feature>
<feature type="sequence variant" id="VAR_076569" description="In CMYO1A; dbSNP:rs886039586." evidence="67">
    <original>N</original>
    <variation>D</variation>
    <location>
        <position position="4806"/>
    </location>
</feature>
<feature type="sequence variant" id="VAR_045753" description="In CMYO1A; dbSNP:rs118192142." evidence="40">
    <original>L</original>
    <variation>F</variation>
    <location>
        <position position="4814"/>
    </location>
</feature>
<feature type="sequence variant" id="VAR_045754" description="In MHS1; uncertain significance; dbSNP:rs193922874." evidence="40 42">
    <original>L</original>
    <variation>P</variation>
    <location>
        <position position="4824"/>
    </location>
</feature>
<feature type="sequence variant" id="VAR_045755" description="In CMYO1A; dbSNP:rs118192180." evidence="20">
    <original>R</original>
    <variation>C</variation>
    <location>
        <position position="4825"/>
    </location>
</feature>
<feature type="sequence variant" id="VAR_045756" description="In MHS1; dbSNP:rs121918595." evidence="14 43">
    <original>T</original>
    <variation>I</variation>
    <location>
        <position position="4826"/>
    </location>
</feature>
<feature type="sequence variant" id="VAR_071753" description="In MHS1; uncertain significance; dbSNP:rs1568604577." evidence="61">
    <original>Q</original>
    <variation>E</variation>
    <location>
        <position position="4837"/>
    </location>
</feature>
<feature type="sequence variant" id="VAR_045757" description="In MHS1; dbSNP:rs193922878." evidence="22 43 53">
    <original>L</original>
    <variation>V</variation>
    <location>
        <position position="4838"/>
    </location>
</feature>
<feature type="sequence variant" id="VAR_045758" description="In CMYO1B; uncertain significance; dbSNP:rs193922879." evidence="48">
    <original>V</original>
    <variation>M</variation>
    <location>
        <position position="4842"/>
    </location>
</feature>
<feature type="sequence variant" id="VAR_045759" description="In CMYO1B; dbSNP:rs118192143." evidence="45 46">
    <original>A</original>
    <variation>V</variation>
    <location>
        <position position="4846"/>
    </location>
</feature>
<feature type="sequence variant" id="VAR_045760" description="In MHS1 and CMYO1B; dbSNP:rs118192168." evidence="27 43 46 48">
    <original>V</original>
    <variation>I</variation>
    <location>
        <position position="4849"/>
    </location>
</feature>
<feature type="sequence variant" id="VAR_045761" description="In CMYO1A; dbSNP:rs118192145." evidence="20">
    <location>
        <position position="4860"/>
    </location>
</feature>
<feature type="sequence variant" id="VAR_045762" description="In CMYO1A; uncertain significance; dbSNP:rs118192181." evidence="30 46">
    <original>R</original>
    <variation>C</variation>
    <location>
        <position position="4861"/>
    </location>
</feature>
<feature type="sequence variant" id="VAR_045763" description="In CMYO1A and MHS1; uncertain significance; release of calcium from intracellular stores in the absence of any pharmacological activator of RYR; dbSNP:rs63749869." evidence="20 21 30 38 40 46 61 63">
    <original>R</original>
    <variation>H</variation>
    <location>
        <position position="4861"/>
    </location>
</feature>
<feature type="sequence variant" id="VAR_045764" description="In CMYO1A.">
    <original>FYNKSED</original>
    <variation>Y</variation>
    <location>
        <begin position="4863"/>
        <end position="4869"/>
    </location>
</feature>
<feature type="sequence variant" id="VAR_045765" description="In CMYO1A; dbSNP:rs118192146." evidence="38">
    <original>Y</original>
    <variation>C</variation>
    <location>
        <position position="4864"/>
    </location>
</feature>
<feature type="sequence variant" id="VAR_045766" description="In MHS1; dbSNP:rs113210953." evidence="43 53">
    <original>K</original>
    <variation>R</variation>
    <location>
        <position position="4876"/>
    </location>
</feature>
<feature type="sequence variant" id="VAR_068521" description="In CMYO1A; dbSNP:rs193922884." evidence="50">
    <original>T</original>
    <variation>M</variation>
    <location>
        <position position="4882"/>
    </location>
</feature>
<feature type="sequence variant" id="VAR_045767" description="In CMYO1A; dbSNP:rs118192149." evidence="21">
    <original>G</original>
    <variation>R</variation>
    <location>
        <position position="4891"/>
    </location>
</feature>
<feature type="sequence variant" id="VAR_045768" description="In CMYO1A; uncertain significance; dbSNP:rs118192151." evidence="30">
    <original>R</original>
    <variation>Q</variation>
    <location>
        <position position="4893"/>
    </location>
</feature>
<feature type="sequence variant" id="VAR_045769" description="In CMYO1A; release of calcium from intracellular stores in the absence of any pharmacological activator of RYR; smaller thapsigargin-sensitive intracellular calcium stores; normal sensitivity of the calcium release to the RYR inhibitor dantrolene; dbSNP:rs118192150." evidence="20 21 38">
    <original>R</original>
    <variation>W</variation>
    <location>
        <position position="4893"/>
    </location>
</feature>
<feature type="sequence variant" id="VAR_071754" description="In CMYO1A." evidence="63">
    <original>G</original>
    <variation>A</variation>
    <location>
        <position position="4897"/>
    </location>
</feature>
<feature type="sequence variant" id="VAR_045770" description="In CMYO1A; dbSNP:rs118192148." evidence="46">
    <original>G</original>
    <variation>V</variation>
    <location>
        <position position="4897"/>
    </location>
</feature>
<feature type="sequence variant" id="VAR_045771" description="In CMYO1A; uncertain significance; severe phenotype; dbSNP:rs118192170." evidence="10 20 21 30 63">
    <original>I</original>
    <variation>T</variation>
    <location>
        <position position="4898"/>
    </location>
</feature>
<feature type="sequence variant" id="VAR_045772" description="In CMYO1A; dbSNP:rs118192183." evidence="20 35">
    <original>G</original>
    <variation>E</variation>
    <location>
        <position position="4899"/>
    </location>
</feature>
<feature type="sequence variant" id="VAR_045773" description="In CMYO1A; release of calcium from intracellular stores in the absence of any pharmacological activator of RYR; smaller thapsigargin-sensitive intracellular calcium stores; normal sensitivity of the calcium release to the RYR inhibitor dantrolene; dbSNP:rs193922891." evidence="21">
    <original>G</original>
    <variation>R</variation>
    <location>
        <position position="4899"/>
    </location>
</feature>
<feature type="sequence variant" id="VAR_071755" description="In MHS1; uncertain significance; dbSNP:rs118192153." evidence="61">
    <original>A</original>
    <variation>G</variation>
    <location>
        <position position="4906"/>
    </location>
</feature>
<feature type="sequence variant" id="VAR_045774" description="In CMYO1A; dbSNP:rs118192153." evidence="21">
    <original>A</original>
    <variation>V</variation>
    <location>
        <position position="4906"/>
    </location>
</feature>
<feature type="sequence variant" id="VAR_045775" description="In CMYO1A; dbSNP:rs118192184." evidence="20 30">
    <original>R</original>
    <variation>G</variation>
    <location>
        <position position="4914"/>
    </location>
</feature>
<feature type="sequence variant" id="VAR_045776" description="In CMYO1A; dbSNP:rs118192154." evidence="30 46">
    <original>R</original>
    <variation>T</variation>
    <location>
        <position position="4914"/>
    </location>
</feature>
<feature type="sequence variant" id="VAR_045777" description="In CMYO1A." evidence="30">
    <location>
        <begin position="4927"/>
        <end position="4928"/>
    </location>
</feature>
<feature type="sequence variant" id="VAR_045778" description="In CMYO1A; uncertain significance; dbSNP:rs118192159." evidence="40">
    <original>I</original>
    <variation>M</variation>
    <location>
        <position position="4938"/>
    </location>
</feature>
<feature type="sequence variant" id="VAR_058579" description="In MHS1; uncertain significance; dbSNP:rs111657878." evidence="53">
    <original>I</original>
    <variation>T</variation>
    <location>
        <position position="4938"/>
    </location>
</feature>
<feature type="sequence variant" id="VAR_045779" description="In MHS1; uncertain significance; dbSNP:rs193922895." evidence="40 43">
    <original>D</original>
    <variation>E</variation>
    <location>
        <position position="4939"/>
    </location>
</feature>
<feature type="sequence variant" id="VAR_045780" description="In CMYO1A; uncertain significance; dbSNP:rs118192158." evidence="30 38">
    <original>A</original>
    <variation>T</variation>
    <location>
        <position position="4940"/>
    </location>
</feature>
<feature type="sequence variant" id="VAR_045781" description="In MHS1; uncertain significance; dbSNP:rs193922896." evidence="28">
    <original>G</original>
    <variation>V</variation>
    <location>
        <position position="4942"/>
    </location>
</feature>
<feature type="sequence variant" id="VAR_045782" description="In MHS1; dbSNP:rs146876145." evidence="28 29 43">
    <original>P</original>
    <variation>L</variation>
    <location>
        <position position="4973"/>
    </location>
</feature>
<feature type="mutagenesis site" description="Increases calcium-induced calcium release activity." evidence="64">
    <original>Y</original>
    <variation>C</variation>
    <location>
        <position position="522"/>
    </location>
</feature>
<feature type="mutagenesis site" description="Increases sensitivity to caffeine and 4-chloro-m-cresol." evidence="65">
    <original>R</original>
    <variation>K</variation>
    <location>
        <position position="2508"/>
    </location>
</feature>
<feature type="mutagenesis site" description="Increases sensitivity to caffeine and 4-chloro-m-cresol." evidence="65">
    <original>R</original>
    <variation>S</variation>
    <location>
        <position position="2508"/>
    </location>
</feature>
<feature type="sequence conflict" description="In Ref. 1; AA sequence." evidence="87" ref="1">
    <original>GEAQ</original>
    <variation>RGA</variation>
    <location>
        <begin position="1365"/>
        <end position="1368"/>
    </location>
</feature>
<feature type="sequence conflict" description="In Ref. 1; AA sequence." evidence="87" ref="1">
    <original>N</original>
    <variation>K</variation>
    <location>
        <position position="2324"/>
    </location>
</feature>
<feature type="sequence conflict" description="In Ref. 1; AA sequence." evidence="87" ref="1">
    <original>R</original>
    <variation>A</variation>
    <location>
        <position position="2840"/>
    </location>
</feature>
<feature type="sequence conflict" description="In Ref. 1; AA sequence." evidence="87" ref="1">
    <original>R</original>
    <variation>A</variation>
    <location>
        <position position="3380"/>
    </location>
</feature>
<feature type="helix" evidence="94">
    <location>
        <begin position="864"/>
        <end position="887"/>
    </location>
</feature>
<feature type="turn" evidence="94">
    <location>
        <begin position="898"/>
        <end position="901"/>
    </location>
</feature>
<feature type="helix" evidence="94">
    <location>
        <begin position="909"/>
        <end position="911"/>
    </location>
</feature>
<feature type="helix" evidence="94">
    <location>
        <begin position="914"/>
        <end position="933"/>
    </location>
</feature>
<feature type="strand" evidence="94">
    <location>
        <begin position="936"/>
        <end position="940"/>
    </location>
</feature>
<sequence>MGDAEGEDEVQFLRTDDEVVLQCSATVLKEQLKLCLAAEGFGNRLCFLEPTSNAQNVPPDLAICCFVLEQSLSVRALQEMLANTVEAGVESSQGGGHRTLLYGHAILLRHAHSRMYLSCLTTSRSMTDKLAFDVGLQEDATGEACWWTMHPASKQRSEGEKVRVGDDIILVSVSSERYLHLSTASGELQVDASFMQTLWNMNPICSRCEEGFVTGGHVLRLFHGHMDECLTISPADSDDQRRLVYYEGGAVCTHARSLWRLEPLRISWSGSHLRWGQPLRVRHVTTGQYLALTEDQGLVVVDASKAHTKATSFCFRISKEKLDVAPKRDVEGMGPPEIKYGESLCFVQHVASGLWLTYAAPDPKALRLGVLKKKAMLHQEGHMDDALSLTRCQQEESQAARMIHSTNGLYNQFIKSLDSFSGKPRGSGPPAGTALPIEGVILSLQDLIIYFEPPSEDLQHEEKQSKLRSLRNRQSLFQEEGMLSMVLNCIDRLNVYTTAAHFAEFAGEEAAESWKEIVNLLYELLASLIRGNRSNCALFSTNLDWLVSKLDRLEASSGILEVLYCVLIESPEVLNIIQENHIKSIISLLDKHGRNHKVLDVLCSLCVCNGVAVRSNQDLITENLLPGRELLLQTNLINYVTSIRPNIFVGRAEGTTQYSKWYFEVMVDEVTPFLTAQATHLRVGWALTEGYTPYPGAGEGWGGNGVGDDLYSYGFDGLHLWTGHVARPVTSPGQHLLAPEDVISCCLDLSVPSISFRINGCPVQGVFESFNLDGLFFPVVSFSAGVKVRFLLGGRHGEFKFLPPPGYAPCHEAVLPRERLHLEPIKEYRREGPRGPHLVGPSRCLSHTDFVPCPVDTVQIVLPPHLERIREKLAENIHELWALTRIEQGWTYGPVRDDNKRLHPCLVDFHSLPEPERNYNLQMSGETLKTLLALGCHVGMADEKAEDNLKKTKLPKTYMMSNGYKPAPLDLSHVRLTPAQTTLVDRLAENGHNVWARDRVGQGWSYSAVQDIPARRNPRLVPYRLLDEATKRSNRDSLCQAVRTLLGYGYNIEPPDQEPSQVENQSRCDRVRIFRAEKSYTVQSGRWYFEFEAVTTGEMRVGWARPELRPDVELGADELAYVFNGHRGQRWHLGSEPFGRPWQPGDVVGCMIDLTENTIIFTLNGEVLMSDSGSETAFREIEIGDGFLPVCSLGPGQVGHLNLGQDVSSLRFFAICGLQEGFEPFAINMQRPVTTWFSKGLPQFEPVPLEHPHYEVSRVDGTVDTPPCLRLTHRTWGSQNSLVEMLFLRLSLPVQFHQHFRCTAGATPLAPPGLQPPAEDEARAAEPDPDYENLRRSAGGWSEAENGKEGTAKEGAPGGTPQAGGEAQPARAENEKDATTEKNKKRGFLFKAKKVAMMTQPPATPTLPRLPHDVVPADNRDDPEIILNTTTYYYSVRVFAGQEPSCVWAGWVTPDYHQHDMSFDLSKVRVVTVTMGDEQGNVHSSLKCSNCYMVWGGDFVSPGQQGRISHTDLVIGCLVDLATGLMTFTANGKESNTFFQVEPNTKLFPAVFVLPTHQNVIQFELGKQKNIMPLSAAMFQSERKNPAPQCPPRLEMQMLMPVSWSRMPNHFLQVETRRAGERLGWAVQCQEPLTMMALHIPEENRCMDILELSERLDLQRFHSHTLRLYRAVCALGNNRVAHALCSHVDQAQLLHALEDAHLPGPLRAGYYDLLISIHLESACRSRRSMLSEYIVPLTPETRAITLFPPGRSTENGHPRHGLPGVGVTTSLRPPHHFSPPCFVAALPAAGAAEAPARLSPAIPLEALRDKALRMLGEAVRDGGQHARDPVGGSVEFQFVPVLKLVSTLLVMGIFGDEDVKQILKMIEPEVFTEEEEEEDEEEEGEEEDEEEKEEDEEETAQEKEDEEKEEEEAAEGEKEEGLEEGLLQMKLPESVKLQMCHLLEYFCDQELQHRVESLAAFAERYVDKLQANQRSRYGLLIKAFSMTAAETARRTREFRSPPQEQINMLLQFKDGTDEEDCPLPEEIRQDLLDFHQDLLAHCGIQLDGEEEEPEEETTLGSRLMSLLEKVRLVKKKEEKPEEERSAEESKPRSLQELVSHMVVRWAQEDFVQSPELVRAMFSLLHRQYDGLGELLRALPRAYTISPSSVEDTMSLLECLGQIRSLLIVQMGPQEENLMIQSIGNIMNNKVFYQHPNLMRALGMHETVMEVMVNVLGGGESKEIRFPKMVTSCCRFLCYFCRISRQNQRSMFDHLSYLLENSGIGLGMQGSTPLDVAAASVIDNNELALALQEQDLEKVVSYLAGCGLQSCPMLVAKGYPDIGWNPCGGERYLDFLRFAVFVNGESVEENANVVVRLLIRKPECFGPALRGEGGSGLLAAIEEAIRISEDPARDGPGIRRDRRREHFGEEPPEENRVHLGHAIMSFYAALIDLLGRCAPEMHLIQAGKGEALRIRAILRSLVPLEDLVGIISLPLQIPTLGKDGALVQPKMSASFVPDHKASMVLFLDRVYGIENQDFLLHVLDVGFLPDMRAAASLDTATFSTTEMALALNRYLCLAVLPLITKCAPLFAGTEHRAIMVDSMLHTVYRLSRGRSLTKAQRDVIEDCLMSLCRYIRPSMLQHLLRRLVFDVPILNEFAKMPLKLLTNHYERCWKYYCLPTGWANFGVTSEEELHLTRKLFWGIFDSLAHKKYDPELYRMAMPCLCAIAGALPPDYVDASYSSKAEKKATVDAEGNFDPRPVETLNVIIPEKLDSFINKFAEYTHEKWAFDKIQNNWSYGENIDEELKTHPMLRPYKTFSEKDKEIYRWPIKESLKAMIAWEWTIEKAREGEEEKTEKKKTRKISQSAQTYDPREGYNPQPPDLSAVTLSRELQAMAEQLAENYHNTWGRKKKQELEAKGGGTHPLLVPYDTLTAKEKARDREKAQELLKFLQMNGYAVTRGLKDMELDSSSIEKRFAFGFLQQLLRWMDISQEFIAHLEAVVSSGRVEKSPHEQEIKFFAKILLPLINQYFTNHCLYFLSTPAKVLGSGGHASNKEKEMITSLFCKLAALVRHRVSLFGTDAPAVVNCLHILARSLDARTVMKSGPEIVKAGLRSFFESASEDIEKMVENLRLGKVSQARTQVKGVGQNLTYTTVALLPVLTTLFQHIAQHQFGDDVILDDVQVSCYRTLCSIYSLGTTKNTYVEKLRPALGECLARLAAAMPVAFLEPQLNEYNACSVYTTKSPRERAILGLPNSVEEMCPDIPVLERLMADIGGLAESGARYTEMPHVIEITLPMLCSYLPRWWERGPEAPPSALPAGAPPPCTAVTSDHLNSLLGNILRIIVNNLGIDEASWMKRLAVFAQPIVSRARPELLQSHFIPTIGRLRKRAGKVVSEEEQLRLEAKAEAQEGELLVRDEFSVLCRDLYALYPLLIRYVDNNRAQWLTEPNPSAEELFRMVGEIFIYWSKSHNFKREEQNFVVQNEINNMSFLTADNKSKMAKAGDIQSGGSDQERTKKKRRGDRYSVQTSLIVATLKKMLPIGLNMCAPTDQDLITLAKTRYALKDTDEEVREFLHNNLHLQGKVEGSPSLRWQMALYRGVPGREEDADDPEKIVRRVQEVSAVLYYLDQTEHPYKSKKAVWHKLLSKQRRRAVVACFRMTPLYNLPTHRACNMFLESYKAAWILTEDHSFEDRMIDDLSKAGEQEEEEEEVEEKKPDPLHQLVLHFSRTALTEKSKLDEDYLYMAYADIMAKSCHLEEGGENGEAEEEVEVSFEEKQMEKQRLLYQQARLHTRGAAEMVLQMISACKGETGAMVSSTLKLGISILNGGNAEVQQKMLDYLKDKKEVGFFQSIQALMQTCSVLDLNAFERQNKAEGLGMVNEDGTVINRQNGEKVMADDEFTQDLFRFLQLLCEGHNNDFQNYLRTQTGNTTTINIIICTVDYLLRLQESISDFYWYYSGKDVIEEQGKRNFSKAMSVAKQVFNSLTEYIQGPCTGNQQSLAHSRLWDAVVGFLHVFAHMMMKLAQDSSQIELLKELLDLQKDMVVMLLSLLEGNVVNGMIARQMVDMLVESSSNVEMILKFFDMFLKLKDIVGSEAFQDYVTDPRGLISKKDFQKAMDSQKQFSGPEIQFLLSCSEADENEMINCEEFANRFQEPARDIGFNVAVLLTNLSEHVPHDPRLHNFLELAESILEYFRPYLGRIEIMGASRRIERIYFEISETNRAQWEMPQVKESKRQFIFDVVNEGGEAEKMELFVSFCEDTIFEMQIAAQISEPEGEPETDEDEGAGAAEAGAEGAEEGAAGLEGTAATAAAGATARVVAAAGRALRGLSYRSLRRRVRRLRRLTAREAATAVAALLWAAVTRAGAAGAGAAAGALGLLWGSLFGGGLVEGAKKVTVTELLAGMPDPTSDEVHGEQPAGPGGDADGEGASEGAGDAAEGAGDEEEAVHEAGPGGADGAVAVTDGGPFRPEGAGGLGDMGDTTPAEPPTPEGSPILKRKLGVDGVEEELPPEPEPEPEPELEPEKADAENGEKEEVPEPTPEPPKKQAPPSPPPKKEEAGGEFWGELEVQRVKFLNYLSRNFYTLRFLALFLAFAINFILLFYKVSDSPPGEDDMEGSAAGDVSGAGSGGSSGWGLGAGEEAEGDEDENMVYYFLEESTGYMEPALRCLSLLHTLVAFLCIIGYNCLKVPLVIFKREKELARKLEFDGLYITEQPEDDDVKGQWDRLVLNTPSFPSNYWDKFVKRKVLDKHGDIYGRERIAELLGMDLATLEITAHNERKPNPPPGLLTWLMSIDVKYQIWKFGVIFTDNSFLYLGWYMVMSLLGHYNNFFFAAHLLDIAMGVKTLRTILSSVTHNGKQLVMTVGLLAVVVYLYTVVAFNFFRKFYNKSEDEDEPDMKCDDMMTCYLFHMYVGVRAGGGIGDEIEDPAGDEYELYRVVFDITFFFFVIVILLAIIQGLIIDAFGELRDQQEQVKEDMETKCFICGIGSDYFDTTPHGFETHTLEEHNLANYMFFLMYLINKDETEHTGQESYVWKMYQERCWDFFPAGDCFRKQYEDQLS</sequence>
<protein>
    <recommendedName>
        <fullName evidence="90">Ryanodine receptor 1</fullName>
        <shortName>RYR-1</shortName>
        <shortName>RyR1</shortName>
    </recommendedName>
    <alternativeName>
        <fullName>Skeletal muscle calcium release channel</fullName>
    </alternativeName>
    <alternativeName>
        <fullName>Skeletal muscle ryanodine receptor</fullName>
    </alternativeName>
    <alternativeName>
        <fullName>Skeletal muscle-type ryanodine receptor</fullName>
    </alternativeName>
    <alternativeName>
        <fullName>Type 1 ryanodine receptor</fullName>
    </alternativeName>
</protein>
<accession>P21817</accession>
<accession>Q16314</accession>
<accession>Q16368</accession>
<accession>Q9NPK1</accession>
<accession>Q9P1U4</accession>
<comment type="function">
    <text evidence="1 49 51 64 88 89">Cytosolic calcium-activated calcium channel that mediates the release of Ca(2+) from the sarcoplasmic reticulum into the cytosol and thereby plays a key role in triggering muscle contraction following depolarization of T-tubules (PubMed:11741831, PubMed:16163667, PubMed:18268335, PubMed:18650434, PubMed:26115329). Repeated very high-level exercise increases the open probability of the channel and leads to Ca(2+) leaking into the cytoplasm (PubMed:18268335). Can also mediate the release of Ca(2+) from intracellular stores in neurons, and may thereby promote prolonged Ca(2+) signaling in the brain. Required for normal embryonic development of muscle fibers and skeletal muscle. Required for normal heart morphogenesis, skin development and ossification during embryogenesis (By similarity).</text>
</comment>
<comment type="catalytic activity">
    <reaction evidence="21 43 49 51 64">
        <text>Ca(2+)(in) = Ca(2+)(out)</text>
        <dbReference type="Rhea" id="RHEA:29671"/>
        <dbReference type="ChEBI" id="CHEBI:29108"/>
    </reaction>
</comment>
<comment type="activity regulation">
    <text evidence="3 43 49 51">The calcium release is activated by increased cytosolic calcium levels, by nitric oxyde (NO), caffeine and ATP (PubMed:16163667, PubMed:18268335). Channel activity is modulated by the alkaloid ryanodine that binds to the open Ca-release channel with high affinity. At low concentrations, ryanodine maintains the channel in an open conformation. High ryanodine concentrations inhibit channel activity (By similarity). Channel activity is regulated by calmodulin (CALM) (PubMed:18650434). Channel activity is inhibited by magnesium ions, possibly by competition for calcium binding sites (By similarity).</text>
</comment>
<comment type="subunit">
    <text evidence="1 3 49 51">Homotetramer. Can also form heterotetramers with RYR2 (By similarity). Identified in a complex composed of RYR1, PDE4D, PKA, FKBP1A and protein phosphatase 1 (PP1) (PubMed:18268335). Repeated very high-level exercise decreases interaction with PDE4D and protein phosphatase 1 (PP1) (PubMed:18268335). Interacts with CALM; CALM with bound calcium inhibits the RYR1 channel activity (PubMed:18650434). Interacts with S100A1 (PubMed:18650434). Interacts with FKBP1A; this stabilizes the closed conformation of the channel. Interacts with CACNA1S; interaction with CACNA1S is important for activation of the RYR1 channel. Interacts with CACNB1. Interacts with TRDN and ASPH; these interactions stimulate RYR1 channel activity. Interacts with SELENON (By similarity). Interacts with scorpion calcins (AC P0DPT1; AC P0DM30; AC A0A1L4BJ42; AC P59868; AC P60254; AC B8QG00; AC L0GBR1; AC P60252; AC P60253) (By similarity).</text>
</comment>
<comment type="subcellular location">
    <subcellularLocation>
        <location evidence="71">Sarcoplasmic reticulum membrane</location>
        <topology evidence="4">Multi-pass membrane protein</topology>
    </subcellularLocation>
    <text evidence="3">The number of predicted transmembrane domains varies between orthologs. Both N-terminus and C-terminus are cytoplasmic.</text>
</comment>
<comment type="alternative products">
    <event type="alternative splicing"/>
    <isoform>
        <id>P21817-1</id>
        <name>1</name>
        <sequence type="displayed"/>
    </isoform>
    <isoform>
        <id>P21817-2</id>
        <name>2</name>
        <sequence type="described" ref="VSP_005951"/>
    </isoform>
    <isoform>
        <id>P21817-3</id>
        <name>3</name>
        <sequence type="described" ref="VSP_005952"/>
    </isoform>
    <text>Experimental confirmation may be lacking for some isoforms.</text>
</comment>
<comment type="tissue specificity">
    <text evidence="85">Skeletal muscle and brain (cerebellum and hippocampus).</text>
</comment>
<comment type="domain">
    <text evidence="3">The calcium release channel activity resides in the C-terminal region while the remaining part of the protein constitutes the 'foot' structure spanning the junctional gap between the sarcoplasmic reticulum (SR) and the T-tubule. Pore opening is mediated via the cytoplasmic calcium-binding domains that mediate a small rotation of the channel-forming transmembrane regions that then leads to channel opening.</text>
</comment>
<comment type="PTM">
    <text evidence="49">Channel activity is modulated by phosphorylation. Phosphorylation at Ser-2843 may increase channel activity. Repeated very high-level exercise increases phosphorylation at Ser-2843.</text>
</comment>
<comment type="PTM">
    <text evidence="3 49">Activated by reversible S-nitrosylation (By similarity). Repeated very high-level exercise increases S-nitrosylation (PubMed:18268335).</text>
</comment>
<comment type="disease" evidence="9 11 12 13 14 16 17 18 19 22 23 24 26 28 29 32 34 36 37 39 40 41 42 43 47 53 54 55 57 61 62 64 65 66 68 72 74 75 76 78 80 81 82 83 84">
    <disease id="DI-01929">
        <name>Malignant hyperthermia 1</name>
        <acronym>MHS1</acronym>
        <description>Autosomal dominant pharmacogenetic disorder of skeletal muscle and is one of the main causes of death due to anesthesia. In susceptible people, an MH episode can be triggered by all commonly used inhalational anesthetics such as halothane and by depolarizing muscle relaxants such as succinylcholine. The clinical features of the myopathy are hyperthermia, accelerated muscle metabolism, contractures, metabolic acidosis, tachycardia and death, if not treated with the postsynaptic muscle relaxant, dantrolene. Susceptibility to MH can be determined with the 'in vitro' contracture test (IVCT): observing the magnitude of contractures induced in strips of muscle tissue by caffeine alone and halothane alone. Patients with normal response are MH normal (MHN), those with abnormal response to caffeine alone or halothane alone are MH equivocal (MHE(C) and MHE(H) respectively).</description>
        <dbReference type="MIM" id="145600"/>
    </disease>
    <text>Disease susceptibility is associated with variants affecting the gene represented in this entry.</text>
</comment>
<comment type="disease" evidence="10 15 20 21 30 31 35 38 40 45 46 50 55 59 61 63 65 67 68 73 77 78 84">
    <disease id="DI-01331">
        <name>Congenital myopathy 1A, autosomal dominant, with susceptibility to malignant hyperthermia</name>
        <acronym>CMYO1A</acronym>
        <description>An autosomal dominant myopathy characterized by hypotonia and proximal muscle weakness primarily affecting the lower limbs, beginning in infancy or early childhood. Some patients manifest later onset of symptoms. The clinical course of the disorder is usually slow or non-progressive in adulthood, and the severity of the symptoms is variable. Affected individuals typically show delayed motor development and usually achieve independent walking, although many have difficulty running or climbing stairs. Additional features often include mild facial weakness, joint laxity, shoulder girdle weakness, and skeletal manifestations, such as dislocation of the hips, foot deformities, scoliosis, and Achilles tendon contractures. Microscopic examination of affected skeletal muscle reveals a predominance of type I fibers containing amorphous-looking areas (cores) that do not stain with oxidative and phosphorylase histochemical techniques. Additional pathologic findings may also be observed on muscle biopsy. CMYO1A affected individuals are at risk for malignant hyperthermia, and both disorders may be present in the same family.</description>
        <dbReference type="MIM" id="117000"/>
    </disease>
    <text>The disease is caused by variants affecting the gene represented in this entry.</text>
</comment>
<comment type="disease" evidence="25 27 33 35 44 46 48 56">
    <disease id="DI-02002">
        <name>Congenital myopathy 1B, autosomal recessive</name>
        <acronym>CMYO1B</acronym>
        <description>An autosomal recessive myopathy characterized by severe hypotonia and generalized muscle weakness and atrophy apparent soon after birth or in early childhood. Affected individuals show delayed motor development, proximal muscle weakness with axial and shoulder girdle involvement, difficulty walking or running, external ophthalmoplegia, and bulbar weakness often resulting in feeding difficulties and respiratory insufficiency. Disease severity is variable. Some affected individuals show symptoms in utero, including reduced fetal movements, polyhydramnios, and intrauterine growth restriction. Some patients have lethal fetal akinesia with death in utero. Muscle biopsy can show variable findings, including multiple and poorly circumscribed areas of sarcomere disorganization and mitochondria depletion (areas termed minicores). Typically, no dystrophic signs, such as muscle fiber necrosis or regeneration or significant endomysial fibrosis, are present.</description>
        <dbReference type="MIM" id="255320"/>
    </disease>
    <text>The disease is caused by variants affecting the gene represented in this entry.</text>
</comment>
<comment type="disease">
    <text>Defects in RYR1 may be a cause of Samaritan myopathy, a congenital myopathy with benign course. Patients display severe hypotonia and respiratory distress at birth. Unlike other congenital myopathies, the health status constantly improves and patients are minimally affected at adulthood.</text>
</comment>
<comment type="disease" evidence="52 58 70">
    <disease id="DI-06230">
        <name>King-Denborough syndrome</name>
        <acronym>KDS</acronym>
        <description>An autosomal dominant disorder characterized by the triad of dysmorphic features, congenital myopathy, and susceptibility to malignant hyperthermia. Variable expressivity has been reported in several cases.</description>
        <dbReference type="MIM" id="619542"/>
    </disease>
    <text>The disease is caused by variants affecting the gene represented in this entry.</text>
</comment>
<comment type="miscellaneous">
    <text evidence="10">Coexpression of normal and mutant Thr-4898 RYR1 in a 1:1 ratio produces RYR1 channels with normal halothane and caffeine sensitivities, but maximal levels of Ca(2+) release are reduced by 67%. Binding of [3H]ryanodine indicates that the heterozygous channel is activated by Ca(2+) concentrations 4-fold lower than normal. Single-cell analysis of cotransfected cells shows a significantly increased resting cytoplasmic Ca(2+) level and a significantly reduced luminal Ca(2+) level. These data indicated a leaky channel, possibly caused by a reduction in the Ca(2+) concentration required for channel activation. Comparison with 2 other coexpressed mutant/normal channels suggests that the Thr-4898 mutation produces one of the most abnormal RYR1 channels that has been investigated, and this level of abnormality is reflected in the severe and penetrant phenotype of affected CCD individuals.</text>
</comment>
<comment type="similarity">
    <text evidence="87">Belongs to the ryanodine receptor (TC 1.A.3.1) family. RYR1 subfamily.</text>
</comment>
<comment type="online information" name="Wikipedia">
    <link uri="https://en.wikipedia.org/wiki/Ryanodine_receptor"/>
    <text>Ryanodine receptor entry</text>
</comment>
<comment type="online information" name="Wikipedia">
    <link uri="https://databases.lovd.nl/shared/genes//RYR1"/>
    <text>RYR1 entry</text>
</comment>
<comment type="online information" name="Leiden Muscular Dystrophy pages Ryanodine receptor 1 (skeletal) (RYR1)">
    <link uri="https://databases.lovd.nl/shared/genes/RYR1"/>
    <text>Leiden Open Variation Database (LOVD)</text>
</comment>
<organism>
    <name type="scientific">Homo sapiens</name>
    <name type="common">Human</name>
    <dbReference type="NCBI Taxonomy" id="9606"/>
    <lineage>
        <taxon>Eukaryota</taxon>
        <taxon>Metazoa</taxon>
        <taxon>Chordata</taxon>
        <taxon>Craniata</taxon>
        <taxon>Vertebrata</taxon>
        <taxon>Euteleostomi</taxon>
        <taxon>Mammalia</taxon>
        <taxon>Eutheria</taxon>
        <taxon>Euarchontoglires</taxon>
        <taxon>Primates</taxon>
        <taxon>Haplorrhini</taxon>
        <taxon>Catarrhini</taxon>
        <taxon>Hominidae</taxon>
        <taxon>Homo</taxon>
    </lineage>
</organism>
<evidence type="ECO:0000250" key="1">
    <source>
        <dbReference type="UniProtKB" id="E9PZQ0"/>
    </source>
</evidence>
<evidence type="ECO:0000250" key="2">
    <source>
        <dbReference type="UniProtKB" id="F1LMY4"/>
    </source>
</evidence>
<evidence type="ECO:0000250" key="3">
    <source>
        <dbReference type="UniProtKB" id="P11716"/>
    </source>
</evidence>
<evidence type="ECO:0000255" key="4"/>
<evidence type="ECO:0000255" key="5">
    <source>
        <dbReference type="PROSITE-ProRule" id="PRU00131"/>
    </source>
</evidence>
<evidence type="ECO:0000255" key="6">
    <source>
        <dbReference type="PROSITE-ProRule" id="PRU00448"/>
    </source>
</evidence>
<evidence type="ECO:0000255" key="7">
    <source>
        <dbReference type="PROSITE-ProRule" id="PRU00548"/>
    </source>
</evidence>
<evidence type="ECO:0000256" key="8">
    <source>
        <dbReference type="SAM" id="MobiDB-lite"/>
    </source>
</evidence>
<evidence type="ECO:0000269" key="9">
    <source>
    </source>
</evidence>
<evidence type="ECO:0000269" key="10">
    <source>
    </source>
</evidence>
<evidence type="ECO:0000269" key="11">
    <source>
    </source>
</evidence>
<evidence type="ECO:0000269" key="12">
    <source>
    </source>
</evidence>
<evidence type="ECO:0000269" key="13">
    <source>
    </source>
</evidence>
<evidence type="ECO:0000269" key="14">
    <source>
    </source>
</evidence>
<evidence type="ECO:0000269" key="15">
    <source>
    </source>
</evidence>
<evidence type="ECO:0000269" key="16">
    <source>
    </source>
</evidence>
<evidence type="ECO:0000269" key="17">
    <source>
    </source>
</evidence>
<evidence type="ECO:0000269" key="18">
    <source>
    </source>
</evidence>
<evidence type="ECO:0000269" key="19">
    <source>
    </source>
</evidence>
<evidence type="ECO:0000269" key="20">
    <source>
    </source>
</evidence>
<evidence type="ECO:0000269" key="21">
    <source>
    </source>
</evidence>
<evidence type="ECO:0000269" key="22">
    <source>
    </source>
</evidence>
<evidence type="ECO:0000269" key="23">
    <source>
    </source>
</evidence>
<evidence type="ECO:0000269" key="24">
    <source>
    </source>
</evidence>
<evidence type="ECO:0000269" key="25">
    <source>
    </source>
</evidence>
<evidence type="ECO:0000269" key="26">
    <source>
    </source>
</evidence>
<evidence type="ECO:0000269" key="27">
    <source>
    </source>
</evidence>
<evidence type="ECO:0000269" key="28">
    <source>
    </source>
</evidence>
<evidence type="ECO:0000269" key="29">
    <source>
    </source>
</evidence>
<evidence type="ECO:0000269" key="30">
    <source>
    </source>
</evidence>
<evidence type="ECO:0000269" key="31">
    <source>
    </source>
</evidence>
<evidence type="ECO:0000269" key="32">
    <source>
    </source>
</evidence>
<evidence type="ECO:0000269" key="33">
    <source>
    </source>
</evidence>
<evidence type="ECO:0000269" key="34">
    <source>
    </source>
</evidence>
<evidence type="ECO:0000269" key="35">
    <source>
    </source>
</evidence>
<evidence type="ECO:0000269" key="36">
    <source>
    </source>
</evidence>
<evidence type="ECO:0000269" key="37">
    <source>
    </source>
</evidence>
<evidence type="ECO:0000269" key="38">
    <source>
    </source>
</evidence>
<evidence type="ECO:0000269" key="39">
    <source>
    </source>
</evidence>
<evidence type="ECO:0000269" key="40">
    <source>
    </source>
</evidence>
<evidence type="ECO:0000269" key="41">
    <source>
    </source>
</evidence>
<evidence type="ECO:0000269" key="42">
    <source>
    </source>
</evidence>
<evidence type="ECO:0000269" key="43">
    <source>
    </source>
</evidence>
<evidence type="ECO:0000269" key="44">
    <source>
    </source>
</evidence>
<evidence type="ECO:0000269" key="45">
    <source>
    </source>
</evidence>
<evidence type="ECO:0000269" key="46">
    <source>
    </source>
</evidence>
<evidence type="ECO:0000269" key="47">
    <source>
    </source>
</evidence>
<evidence type="ECO:0000269" key="48">
    <source>
    </source>
</evidence>
<evidence type="ECO:0000269" key="49">
    <source>
    </source>
</evidence>
<evidence type="ECO:0000269" key="50">
    <source>
    </source>
</evidence>
<evidence type="ECO:0000269" key="51">
    <source>
    </source>
</evidence>
<evidence type="ECO:0000269" key="52">
    <source>
    </source>
</evidence>
<evidence type="ECO:0000269" key="53">
    <source>
    </source>
</evidence>
<evidence type="ECO:0000269" key="54">
    <source>
    </source>
</evidence>
<evidence type="ECO:0000269" key="55">
    <source>
    </source>
</evidence>
<evidence type="ECO:0000269" key="56">
    <source>
    </source>
</evidence>
<evidence type="ECO:0000269" key="57">
    <source>
    </source>
</evidence>
<evidence type="ECO:0000269" key="58">
    <source>
    </source>
</evidence>
<evidence type="ECO:0000269" key="59">
    <source>
    </source>
</evidence>
<evidence type="ECO:0000269" key="60">
    <source>
    </source>
</evidence>
<evidence type="ECO:0000269" key="61">
    <source>
    </source>
</evidence>
<evidence type="ECO:0000269" key="62">
    <source>
    </source>
</evidence>
<evidence type="ECO:0000269" key="63">
    <source>
    </source>
</evidence>
<evidence type="ECO:0000269" key="64">
    <source>
    </source>
</evidence>
<evidence type="ECO:0000269" key="65">
    <source>
    </source>
</evidence>
<evidence type="ECO:0000269" key="66">
    <source>
    </source>
</evidence>
<evidence type="ECO:0000269" key="67">
    <source>
    </source>
</evidence>
<evidence type="ECO:0000269" key="68">
    <source>
    </source>
</evidence>
<evidence type="ECO:0000269" key="69">
    <source>
    </source>
</evidence>
<evidence type="ECO:0000269" key="70">
    <source>
    </source>
</evidence>
<evidence type="ECO:0000269" key="71">
    <source>
    </source>
</evidence>
<evidence type="ECO:0000269" key="72">
    <source>
    </source>
</evidence>
<evidence type="ECO:0000269" key="73">
    <source>
    </source>
</evidence>
<evidence type="ECO:0000269" key="74">
    <source>
    </source>
</evidence>
<evidence type="ECO:0000269" key="75">
    <source>
    </source>
</evidence>
<evidence type="ECO:0000269" key="76">
    <source>
    </source>
</evidence>
<evidence type="ECO:0000269" key="77">
    <source>
    </source>
</evidence>
<evidence type="ECO:0000269" key="78">
    <source>
    </source>
</evidence>
<evidence type="ECO:0000269" key="79">
    <source>
    </source>
</evidence>
<evidence type="ECO:0000269" key="80">
    <source>
    </source>
</evidence>
<evidence type="ECO:0000269" key="81">
    <source>
    </source>
</evidence>
<evidence type="ECO:0000269" key="82">
    <source>
    </source>
</evidence>
<evidence type="ECO:0000269" key="83">
    <source>
    </source>
</evidence>
<evidence type="ECO:0000269" key="84">
    <source>
    </source>
</evidence>
<evidence type="ECO:0000269" key="85">
    <source>
    </source>
</evidence>
<evidence type="ECO:0000303" key="86">
    <source>
    </source>
</evidence>
<evidence type="ECO:0000305" key="87"/>
<evidence type="ECO:0000305" key="88">
    <source>
    </source>
</evidence>
<evidence type="ECO:0000305" key="89">
    <source>
    </source>
</evidence>
<evidence type="ECO:0000305" key="90">
    <source>
    </source>
</evidence>
<evidence type="ECO:0000305" key="91">
    <source>
    </source>
</evidence>
<evidence type="ECO:0000312" key="92">
    <source>
        <dbReference type="HGNC" id="HGNC:10483"/>
    </source>
</evidence>
<evidence type="ECO:0007744" key="93">
    <source>
    </source>
</evidence>
<evidence type="ECO:0007829" key="94">
    <source>
        <dbReference type="PDB" id="6UHS"/>
    </source>
</evidence>